<sequence length="140" mass="14460">MDVFMKGLSKAKEGVVAAAEKTKQGVAEAAGKTKEGVLYVGSKTKEGVVHGVATVAEKTKEQVTNVGGAVVTGVTAVAQKTVEGAGSIAAATGFVKKDQLGKNEEGAPQEGILEDMPVDPDNEAYEMPSEEGYQDYEPEA</sequence>
<name>SYUA_HUMAN</name>
<feature type="chain" id="PRO_0000184022" description="Alpha-synuclein">
    <location>
        <begin position="1"/>
        <end position="140"/>
    </location>
</feature>
<feature type="repeat" description="1">
    <location>
        <begin position="20"/>
        <end position="30"/>
    </location>
</feature>
<feature type="repeat" description="2">
    <location>
        <begin position="31"/>
        <end position="41"/>
    </location>
</feature>
<feature type="repeat" description="3; approximate">
    <location>
        <begin position="42"/>
        <end position="56"/>
    </location>
</feature>
<feature type="repeat" description="4">
    <location>
        <begin position="57"/>
        <end position="67"/>
    </location>
</feature>
<feature type="region of interest" description="4 X 11 AA tandem repeats of [EGS]-K-T-K-[EQ]-[GQ]-V-X(4)">
    <location>
        <begin position="20"/>
        <end position="67"/>
    </location>
</feature>
<feature type="region of interest" description="Disordered" evidence="3">
    <location>
        <begin position="100"/>
        <end position="140"/>
    </location>
</feature>
<feature type="region of interest" description="Interaction with SERF1A" evidence="20">
    <location>
        <begin position="111"/>
        <end position="140"/>
    </location>
</feature>
<feature type="compositionally biased region" description="Acidic residues" evidence="3">
    <location>
        <begin position="112"/>
        <end position="140"/>
    </location>
</feature>
<feature type="binding site" evidence="37">
    <location>
        <position position="2"/>
    </location>
    <ligand>
        <name>Cu cation</name>
        <dbReference type="ChEBI" id="CHEBI:23378"/>
    </ligand>
</feature>
<feature type="binding site" evidence="37">
    <location>
        <position position="50"/>
    </location>
    <ligand>
        <name>Cu cation</name>
        <dbReference type="ChEBI" id="CHEBI:23378"/>
    </ligand>
</feature>
<feature type="modified residue" description="N-acetylmethionine" evidence="19">
    <location>
        <position position="1"/>
    </location>
</feature>
<feature type="modified residue" description="Phosphoserine" evidence="4">
    <location>
        <position position="87"/>
    </location>
</feature>
<feature type="modified residue" description="Phosphotyrosine; by FYN" evidence="6 9">
    <location>
        <position position="125"/>
    </location>
</feature>
<feature type="modified residue" description="Phosphoserine; by BARK1, PLK2, CK2, CK1 and GRK5" evidence="4 7 24">
    <location>
        <position position="129"/>
    </location>
</feature>
<feature type="splice variant" id="VSP_006363" description="In isoform 2-5." evidence="35">
    <location>
        <begin position="41"/>
        <end position="54"/>
    </location>
</feature>
<feature type="splice variant" id="VSP_006364" description="In isoform 2-4." evidence="35 36">
    <location>
        <begin position="103"/>
        <end position="130"/>
    </location>
</feature>
<feature type="sequence variant" id="VAR_007957" description="In PARK1; no effect on oligomerization; dbSNP:rs104893878." evidence="25 34">
    <original>A</original>
    <variation>P</variation>
    <location>
        <position position="30"/>
    </location>
</feature>
<feature type="sequence variant" id="VAR_022703" description="In PARK1 and DLB; significant increase in binding to negatively charged phospholipid liposomes; increases oligomerization; dbSNP:rs104893875." evidence="10 13 25">
    <original>E</original>
    <variation>K</variation>
    <location>
        <position position="46"/>
    </location>
</feature>
<feature type="sequence variant" id="VAR_070171" description="In PARK1; no effect on protein structure; no effect on phosphorylation of the protein; no effect on membrane- and lipid-binding; increases oligomerization; increases fibril formation; increases secretion of the protein; impairs copper-binding; dbSNP:rs201106962." evidence="21 22 24 25">
    <original>H</original>
    <variation>Q</variation>
    <location>
        <position position="50"/>
    </location>
</feature>
<feature type="sequence variant" id="VAR_007454" description="In PARK1; no effect on osmotic stress-induced phosphorylation; increases oligomerization; dbSNP:rs104893877." evidence="9 25 33">
    <original>A</original>
    <variation>T</variation>
    <location>
        <position position="53"/>
    </location>
</feature>
<feature type="mutagenesis site" description="Impairs copper-binding." evidence="17">
    <original>D</original>
    <variation>A</variation>
    <location>
        <position position="2"/>
    </location>
</feature>
<feature type="mutagenesis site" description="No effect on oligomerization." evidence="25">
    <original>E</original>
    <variation>K</variation>
    <location>
        <position position="35"/>
    </location>
</feature>
<feature type="mutagenesis site" description="No effect on osmotic stress-induced phosphorylation." evidence="9">
    <original>Y</original>
    <variation>F</variation>
    <location>
        <position position="39"/>
    </location>
</feature>
<feature type="mutagenesis site" description="Impairs copper-binding." evidence="17">
    <original>H</original>
    <variation>A</variation>
    <location>
        <position position="50"/>
    </location>
</feature>
<feature type="mutagenesis site" description="Increases oligomerization." evidence="25">
    <original>E</original>
    <variation>K</variation>
    <location>
        <position position="57"/>
    </location>
</feature>
<feature type="mutagenesis site" description="Reduces polymerization into amyloid fibrils." evidence="14">
    <location>
        <begin position="67"/>
        <end position="71"/>
    </location>
</feature>
<feature type="mutagenesis site" description="Impairs polymerization into amyloid fibrils." evidence="14">
    <location>
        <begin position="71"/>
        <end position="82"/>
    </location>
</feature>
<feature type="mutagenesis site" description="Impairs polymerization into amyloid fibrils." evidence="14">
    <location>
        <begin position="76"/>
        <end position="77"/>
    </location>
</feature>
<feature type="mutagenesis site" description="Does not affect polymerization into amyloid fibrils.">
    <location>
        <position position="76"/>
    </location>
</feature>
<feature type="mutagenesis site" description="Does not affect polymerization into amyloid fibrils." evidence="14">
    <location>
        <position position="77"/>
    </location>
</feature>
<feature type="mutagenesis site" description="Does not affect polymerization into amyloid fibrils." evidence="14">
    <location>
        <position position="78"/>
    </location>
</feature>
<feature type="mutagenesis site" description="Reduces polymerization into amyloid fibrils." evidence="14">
    <location>
        <begin position="85"/>
        <end position="94"/>
    </location>
</feature>
<feature type="mutagenesis site" description="Abolishes osmotic stress-induced phosphorylation." evidence="9">
    <original>Y</original>
    <variation>F</variation>
    <location>
        <position position="125"/>
    </location>
</feature>
<feature type="mutagenesis site" description="No effect on osmotic stress-induced phosphorylation." evidence="9">
    <original>Y</original>
    <variation>F</variation>
    <location>
        <position position="133"/>
    </location>
</feature>
<feature type="mutagenesis site" description="No effect on osmotic stress-induced phosphorylation." evidence="9">
    <original>Y</original>
    <variation>F</variation>
    <location>
        <position position="136"/>
    </location>
</feature>
<feature type="helix" evidence="40">
    <location>
        <begin position="3"/>
        <end position="11"/>
    </location>
</feature>
<feature type="strand" evidence="46">
    <location>
        <begin position="16"/>
        <end position="18"/>
    </location>
</feature>
<feature type="helix" evidence="41">
    <location>
        <begin position="21"/>
        <end position="32"/>
    </location>
</feature>
<feature type="strand" evidence="47">
    <location>
        <begin position="34"/>
        <end position="36"/>
    </location>
</feature>
<feature type="strand" evidence="44">
    <location>
        <begin position="38"/>
        <end position="40"/>
    </location>
</feature>
<feature type="helix" evidence="42">
    <location>
        <begin position="41"/>
        <end position="44"/>
    </location>
</feature>
<feature type="strand" evidence="50">
    <location>
        <begin position="45"/>
        <end position="49"/>
    </location>
</feature>
<feature type="strand" evidence="49">
    <location>
        <begin position="52"/>
        <end position="55"/>
    </location>
</feature>
<feature type="strand" evidence="51">
    <location>
        <begin position="60"/>
        <end position="63"/>
    </location>
</feature>
<feature type="helix" evidence="43">
    <location>
        <begin position="66"/>
        <end position="68"/>
    </location>
</feature>
<feature type="strand" evidence="45">
    <location>
        <begin position="71"/>
        <end position="79"/>
    </location>
</feature>
<feature type="strand" evidence="48">
    <location>
        <begin position="82"/>
        <end position="84"/>
    </location>
</feature>
<feature type="strand" evidence="51">
    <location>
        <begin position="88"/>
        <end position="96"/>
    </location>
</feature>
<feature type="strand" evidence="38">
    <location>
        <begin position="110"/>
        <end position="113"/>
    </location>
</feature>
<feature type="turn" evidence="38">
    <location>
        <begin position="120"/>
        <end position="122"/>
    </location>
</feature>
<feature type="turn" evidence="38">
    <location>
        <begin position="124"/>
        <end position="126"/>
    </location>
</feature>
<feature type="turn" evidence="39">
    <location>
        <begin position="133"/>
        <end position="136"/>
    </location>
</feature>
<organism>
    <name type="scientific">Homo sapiens</name>
    <name type="common">Human</name>
    <dbReference type="NCBI Taxonomy" id="9606"/>
    <lineage>
        <taxon>Eukaryota</taxon>
        <taxon>Metazoa</taxon>
        <taxon>Chordata</taxon>
        <taxon>Craniata</taxon>
        <taxon>Vertebrata</taxon>
        <taxon>Euteleostomi</taxon>
        <taxon>Mammalia</taxon>
        <taxon>Eutheria</taxon>
        <taxon>Euarchontoglires</taxon>
        <taxon>Primates</taxon>
        <taxon>Haplorrhini</taxon>
        <taxon>Catarrhini</taxon>
        <taxon>Hominidae</taxon>
        <taxon>Homo</taxon>
    </lineage>
</organism>
<accession>P37840</accession>
<accession>A8K2A4</accession>
<accession>Q13701</accession>
<accession>Q4JHI3</accession>
<accession>Q6IAU6</accession>
<protein>
    <recommendedName>
        <fullName>Alpha-synuclein</fullName>
    </recommendedName>
    <alternativeName>
        <fullName>Non-A beta component of AD amyloid</fullName>
    </alternativeName>
    <alternativeName>
        <fullName>Non-A4 component of amyloid precursor</fullName>
        <shortName>NACP</shortName>
    </alternativeName>
</protein>
<comment type="function">
    <text evidence="16 26 28 29">Neuronal protein that plays several roles in synaptic activity such as regulation of synaptic vesicle trafficking and subsequent neurotransmitter release (PubMed:20798282, PubMed:26442590, PubMed:28288128, PubMed:30404828). Participates as a monomer in synaptic vesicle exocytosis by enhancing vesicle priming, fusion and dilation of exocytotic fusion pores (PubMed:28288128, PubMed:30404828). Mechanistically, acts by increasing local Ca(2+) release from microdomains which is essential for the enhancement of ATP-induced exocytosis (PubMed:30404828). Also acts as a molecular chaperone in its multimeric membrane-bound state, assisting in the folding of synaptic fusion components called SNAREs (Soluble NSF Attachment Protein REceptors) at presynaptic plasma membrane in conjunction with cysteine string protein-alpha/DNAJC5 (PubMed:20798282). This chaperone activity is important to sustain normal SNARE-complex assembly during aging (PubMed:20798282). Also plays a role in the regulation of the dopamine neurotransmission by associating with the dopamine transporter (DAT1) and thereby modulating its activity (PubMed:26442590).</text>
</comment>
<comment type="subunit">
    <text evidence="1 2 11 15 16 18 20 23 27 30 31">Soluble monomer. Homotetramer (PubMed:21841800). A dynamic intracellular population of tetramers and monomers coexists normally and the tetramer plays an essential role in maintaining homeostasis (PubMed:21841800). Interacts with UCHL1 (By similarity). Interacts with phospholipase D and histones. Interacts (via N-terminus) with synphilin-1/SNCAIP; this interaction promotes formation of SNCA inclusions in the cytoplasm (PubMed:19762560). Interacts with CALM1 (PubMed:23607618). Interacts with STXBP1; this interaction controls SNCA self-replicating aggregation (PubMed:27597756). Interacts with SNARE components VAMP2 and SNAP25; these interactions allows SNARE complex assembly and integrity (PubMed:20798282). Interacts with RPH3A and RAB3A (PubMed:15207266). Interacts with SERF1A; this interaction promotes the aggregation of SNCA (PubMed:22854022, PubMed:31034892). Interacts with SEPTIN4 (By similarity). Interacts with DDX10; this interaction causes DDX10 mislocalization to the nucleoplasm and cytoplasmic inclusions (PubMed:33657088).</text>
</comment>
<comment type="interaction">
    <interactant intactId="EBI-985879">
        <id>P37840</id>
    </interactant>
    <interactant intactId="EBI-22011868">
        <id>Q6PCB6</id>
        <label>ABHD17C</label>
    </interactant>
    <organismsDiffer>false</organismsDiffer>
    <experiments>3</experiments>
</comment>
<comment type="interaction">
    <interactant intactId="EBI-985879">
        <id>P37840</id>
    </interactant>
    <interactant intactId="EBI-375543">
        <id>P00519</id>
        <label>ABL1</label>
    </interactant>
    <organismsDiffer>false</organismsDiffer>
    <experiments>3</experiments>
</comment>
<comment type="interaction">
    <interactant intactId="EBI-985879">
        <id>P37840</id>
    </interactant>
    <interactant intactId="EBI-5278159">
        <id>P00519-1</id>
        <label>ABL1</label>
    </interactant>
    <organismsDiffer>false</organismsDiffer>
    <experiments>6</experiments>
</comment>
<comment type="interaction">
    <interactant intactId="EBI-985879">
        <id>P37840</id>
    </interactant>
    <interactant intactId="EBI-9254597">
        <id>P00519-2</id>
        <label>ABL1</label>
    </interactant>
    <organismsDiffer>false</organismsDiffer>
    <experiments>5</experiments>
</comment>
<comment type="interaction">
    <interactant intactId="EBI-985879">
        <id>P37840</id>
    </interactant>
    <interactant intactId="EBI-25840993">
        <id>Q6ZTN6-2</id>
        <label>ANKRD13D</label>
    </interactant>
    <organismsDiffer>false</organismsDiffer>
    <experiments>3</experiments>
</comment>
<comment type="interaction">
    <interactant intactId="EBI-985879">
        <id>P37840</id>
    </interactant>
    <interactant intactId="EBI-11529439">
        <id>P63010-2</id>
        <label>AP2B1</label>
    </interactant>
    <organismsDiffer>false</organismsDiffer>
    <experiments>3</experiments>
</comment>
<comment type="interaction">
    <interactant intactId="EBI-985879">
        <id>P37840</id>
    </interactant>
    <interactant intactId="EBI-1044383">
        <id>O00203</id>
        <label>AP3B1</label>
    </interactant>
    <organismsDiffer>false</organismsDiffer>
    <experiments>3</experiments>
</comment>
<comment type="interaction">
    <interactant intactId="EBI-985879">
        <id>P37840</id>
    </interactant>
    <interactant intactId="EBI-701692">
        <id>P02647</id>
        <label>APOA1</label>
    </interactant>
    <organismsDiffer>false</organismsDiffer>
    <experiments>3</experiments>
</comment>
<comment type="interaction">
    <interactant intactId="EBI-985879">
        <id>P37840</id>
    </interactant>
    <interactant intactId="EBI-1222467">
        <id>P02649</id>
        <label>APOE</label>
    </interactant>
    <organismsDiffer>false</organismsDiffer>
    <experiments>11</experiments>
</comment>
<comment type="interaction">
    <interactant intactId="EBI-985879">
        <id>P37840</id>
    </interactant>
    <interactant intactId="EBI-77613">
        <id>P05067</id>
        <label>APP</label>
    </interactant>
    <organismsDiffer>false</organismsDiffer>
    <experiments>6</experiments>
</comment>
<comment type="interaction">
    <interactant intactId="EBI-985879">
        <id>P37840</id>
    </interactant>
    <interactant intactId="EBI-10694449">
        <id>Q8N6T3-3</id>
        <label>ARFGAP1</label>
    </interactant>
    <organismsDiffer>false</organismsDiffer>
    <experiments>3</experiments>
</comment>
<comment type="interaction">
    <interactant intactId="EBI-985879">
        <id>P37840</id>
    </interactant>
    <interactant intactId="EBI-2875816">
        <id>Q9NP61</id>
        <label>ARFGAP3</label>
    </interactant>
    <organismsDiffer>false</organismsDiffer>
    <experiments>3</experiments>
</comment>
<comment type="interaction">
    <interactant intactId="EBI-985879">
        <id>P37840</id>
    </interactant>
    <interactant intactId="EBI-10186132">
        <id>Q0P5N6</id>
        <label>ARL16</label>
    </interactant>
    <organismsDiffer>false</organismsDiffer>
    <experiments>3</experiments>
</comment>
<comment type="interaction">
    <interactant intactId="EBI-985879">
        <id>P37840</id>
    </interactant>
    <interactant intactId="EBI-707573">
        <id>Q8WXK3</id>
        <label>ASB13</label>
    </interactant>
    <organismsDiffer>false</organismsDiffer>
    <experiments>3</experiments>
</comment>
<comment type="interaction">
    <interactant intactId="EBI-985879">
        <id>P37840</id>
    </interactant>
    <interactant intactId="EBI-712767">
        <id>P18847</id>
        <label>ATF3</label>
    </interactant>
    <organismsDiffer>false</organismsDiffer>
    <experiments>3</experiments>
</comment>
<comment type="interaction">
    <interactant intactId="EBI-985879">
        <id>P37840</id>
    </interactant>
    <interactant intactId="EBI-1048913">
        <id>Q9H0Y0</id>
        <label>ATG10</label>
    </interactant>
    <organismsDiffer>false</organismsDiffer>
    <experiments>3</experiments>
</comment>
<comment type="interaction">
    <interactant intactId="EBI-985879">
        <id>P37840</id>
    </interactant>
    <interactant intactId="EBI-10988864">
        <id>P46379-2</id>
        <label>BAG6</label>
    </interactant>
    <organismsDiffer>false</organismsDiffer>
    <experiments>3</experiments>
</comment>
<comment type="interaction">
    <interactant intactId="EBI-985879">
        <id>P37840</id>
    </interactant>
    <interactant intactId="EBI-516580">
        <id>Q07812</id>
        <label>BAX</label>
    </interactant>
    <organismsDiffer>false</organismsDiffer>
    <experiments>4</experiments>
</comment>
<comment type="interaction">
    <interactant intactId="EBI-985879">
        <id>P37840</id>
    </interactant>
    <interactant intactId="EBI-78035">
        <id>Q07817</id>
        <label>BCL2L1</label>
    </interactant>
    <organismsDiffer>false</organismsDiffer>
    <experiments>3</experiments>
</comment>
<comment type="interaction">
    <interactant intactId="EBI-985879">
        <id>P37840</id>
    </interactant>
    <interactant intactId="EBI-518823">
        <id>O15392</id>
        <label>BIRC5</label>
    </interactant>
    <organismsDiffer>false</organismsDiffer>
    <experiments>3</experiments>
</comment>
<comment type="interaction">
    <interactant intactId="EBI-985879">
        <id>P37840</id>
    </interactant>
    <interactant intactId="EBI-2837444">
        <id>Q8WUW1</id>
        <label>BRK1</label>
    </interactant>
    <organismsDiffer>false</organismsDiffer>
    <experiments>3</experiments>
</comment>
<comment type="interaction">
    <interactant intactId="EBI-985879">
        <id>P37840</id>
    </interactant>
    <interactant intactId="EBI-10697767">
        <id>Q5SZD1</id>
        <label>C6orf141</label>
    </interactant>
    <organismsDiffer>false</organismsDiffer>
    <experiments>3</experiments>
</comment>
<comment type="interaction">
    <interactant intactId="EBI-985879">
        <id>P37840</id>
    </interactant>
    <interactant intactId="EBI-397435">
        <id>P62158</id>
        <label>CALM3</label>
    </interactant>
    <organismsDiffer>false</organismsDiffer>
    <experiments>3</experiments>
</comment>
<comment type="interaction">
    <interactant intactId="EBI-985879">
        <id>P37840</id>
    </interactant>
    <interactant intactId="EBI-25850646">
        <id>Q8N5S9-2</id>
        <label>CAMKK1</label>
    </interactant>
    <organismsDiffer>false</organismsDiffer>
    <experiments>3</experiments>
</comment>
<comment type="interaction">
    <interactant intactId="EBI-985879">
        <id>P37840</id>
    </interactant>
    <interactant intactId="EBI-718729">
        <id>P55212</id>
        <label>CASP6</label>
    </interactant>
    <organismsDiffer>false</organismsDiffer>
    <experiments>3</experiments>
</comment>
<comment type="interaction">
    <interactant intactId="EBI-985879">
        <id>P37840</id>
    </interactant>
    <interactant intactId="EBI-1210604">
        <id>Q7Z7K6</id>
        <label>CENPV</label>
    </interactant>
    <organismsDiffer>false</organismsDiffer>
    <experiments>4</experiments>
</comment>
<comment type="interaction">
    <interactant intactId="EBI-985879">
        <id>P37840</id>
    </interactant>
    <interactant intactId="EBI-1057156">
        <id>Q9HD42</id>
        <label>CHMP1A</label>
    </interactant>
    <organismsDiffer>false</organismsDiffer>
    <experiments>3</experiments>
</comment>
<comment type="interaction">
    <interactant intactId="EBI-985879">
        <id>P37840</id>
    </interactant>
    <interactant intactId="EBI-1056029">
        <id>Q16740</id>
        <label>CLPP</label>
    </interactant>
    <organismsDiffer>false</organismsDiffer>
    <experiments>3</experiments>
</comment>
<comment type="interaction">
    <interactant intactId="EBI-985879">
        <id>P37840</id>
    </interactant>
    <interactant intactId="EBI-1104674">
        <id>P10909</id>
        <label>CLU</label>
    </interactant>
    <organismsDiffer>false</organismsDiffer>
    <experiments>4</experiments>
</comment>
<comment type="interaction">
    <interactant intactId="EBI-985879">
        <id>P37840</id>
    </interactant>
    <interactant intactId="EBI-350590">
        <id>Q9UNS2</id>
        <label>COPS3</label>
    </interactant>
    <organismsDiffer>false</organismsDiffer>
    <experiments>3</experiments>
</comment>
<comment type="interaction">
    <interactant intactId="EBI-985879">
        <id>P37840</id>
    </interactant>
    <interactant intactId="EBI-2872414">
        <id>Q8IUI8</id>
        <label>CRLF3</label>
    </interactant>
    <organismsDiffer>false</organismsDiffer>
    <experiments>3</experiments>
</comment>
<comment type="interaction">
    <interactant intactId="EBI-985879">
        <id>P37840</id>
    </interactant>
    <interactant intactId="EBI-9087876">
        <id>P48730-2</id>
        <label>CSNK1D</label>
    </interactant>
    <organismsDiffer>false</organismsDiffer>
    <experiments>3</experiments>
</comment>
<comment type="interaction">
    <interactant intactId="EBI-985879">
        <id>P37840</id>
    </interactant>
    <interactant intactId="EBI-446479">
        <id>P99999</id>
        <label>CYCS</label>
    </interactant>
    <organismsDiffer>false</organismsDiffer>
    <experiments>3</experiments>
</comment>
<comment type="interaction">
    <interactant intactId="EBI-985879">
        <id>P37840</id>
    </interactant>
    <interactant intactId="EBI-718185">
        <id>O75398</id>
        <label>DEAF1</label>
    </interactant>
    <organismsDiffer>false</organismsDiffer>
    <experiments>3</experiments>
</comment>
<comment type="interaction">
    <interactant intactId="EBI-985879">
        <id>P37840</id>
    </interactant>
    <interactant intactId="EBI-25842538">
        <id>Q8NDP9</id>
        <label>DKFZp547K2416</label>
    </interactant>
    <organismsDiffer>false</organismsDiffer>
    <experiments>3</experiments>
</comment>
<comment type="interaction">
    <interactant intactId="EBI-985879">
        <id>P37840</id>
    </interactant>
    <interactant intactId="EBI-3908248">
        <id>O60479</id>
        <label>DLX3</label>
    </interactant>
    <organismsDiffer>false</organismsDiffer>
    <experiments>3</experiments>
</comment>
<comment type="interaction">
    <interactant intactId="EBI-985879">
        <id>P37840</id>
    </interactant>
    <interactant intactId="EBI-7779316">
        <id>A0AVK6</id>
        <label>E2F8</label>
    </interactant>
    <organismsDiffer>false</organismsDiffer>
    <experiments>3</experiments>
</comment>
<comment type="interaction">
    <interactant intactId="EBI-985879">
        <id>P37840</id>
    </interactant>
    <interactant intactId="EBI-11132357">
        <id>O75530-2</id>
        <label>EED</label>
    </interactant>
    <organismsDiffer>false</organismsDiffer>
    <experiments>3</experiments>
</comment>
<comment type="interaction">
    <interactant intactId="EBI-985879">
        <id>P37840</id>
    </interactant>
    <interactant intactId="EBI-395274">
        <id>O00472</id>
        <label>ELL2</label>
    </interactant>
    <organismsDiffer>false</organismsDiffer>
    <experiments>3</experiments>
</comment>
<comment type="interaction">
    <interactant intactId="EBI-985879">
        <id>P37840</id>
    </interactant>
    <interactant intactId="EBI-9246952">
        <id>Q8TC29</id>
        <label>ENKUR</label>
    </interactant>
    <organismsDiffer>false</organismsDiffer>
    <experiments>3</experiments>
</comment>
<comment type="interaction">
    <interactant intactId="EBI-985879">
        <id>P37840</id>
    </interactant>
    <interactant intactId="EBI-949824">
        <id>O00471</id>
        <label>EXOC5</label>
    </interactant>
    <organismsDiffer>false</organismsDiffer>
    <experiments>3</experiments>
</comment>
<comment type="interaction">
    <interactant intactId="EBI-985879">
        <id>P37840</id>
    </interactant>
    <interactant intactId="EBI-396453">
        <id>Q9UHY8</id>
        <label>FEZ2</label>
    </interactant>
    <organismsDiffer>false</organismsDiffer>
    <experiments>3</experiments>
</comment>
<comment type="interaction">
    <interactant intactId="EBI-985879">
        <id>P37840</id>
    </interactant>
    <interactant intactId="EBI-10226858">
        <id>Q0VDC6</id>
        <label>FKBP1A</label>
    </interactant>
    <organismsDiffer>false</organismsDiffer>
    <experiments>3</experiments>
</comment>
<comment type="interaction">
    <interactant intactId="EBI-985879">
        <id>P37840</id>
    </interactant>
    <interactant intactId="EBI-10253815">
        <id>Q6PIV2</id>
        <label>FOXR1</label>
    </interactant>
    <organismsDiffer>false</organismsDiffer>
    <experiments>3</experiments>
</comment>
<comment type="interaction">
    <interactant intactId="EBI-985879">
        <id>P37840</id>
    </interactant>
    <interactant intactId="EBI-713279">
        <id>P02792</id>
        <label>FTL</label>
    </interactant>
    <organismsDiffer>false</organismsDiffer>
    <experiments>3</experiments>
</comment>
<comment type="interaction">
    <interactant intactId="EBI-985879">
        <id>P37840</id>
    </interactant>
    <interactant intactId="EBI-515315">
        <id>P06241</id>
        <label>FYN</label>
    </interactant>
    <organismsDiffer>false</organismsDiffer>
    <experiments>3</experiments>
</comment>
<comment type="interaction">
    <interactant intactId="EBI-985879">
        <id>P37840</id>
    </interactant>
    <interactant intactId="EBI-10691738">
        <id>P06241-3</id>
        <label>FYN</label>
    </interactant>
    <organismsDiffer>false</organismsDiffer>
    <experiments>3</experiments>
</comment>
<comment type="interaction">
    <interactant intactId="EBI-985879">
        <id>P37840</id>
    </interactant>
    <interactant intactId="EBI-356942">
        <id>P62879</id>
        <label>GNB2</label>
    </interactant>
    <organismsDiffer>false</organismsDiffer>
    <experiments>3</experiments>
</comment>
<comment type="interaction">
    <interactant intactId="EBI-985879">
        <id>P37840</id>
    </interactant>
    <interactant intactId="EBI-373586">
        <id>P49841</id>
        <label>GSK3B</label>
    </interactant>
    <organismsDiffer>false</organismsDiffer>
    <experiments>2</experiments>
</comment>
<comment type="interaction">
    <interactant intactId="EBI-985879">
        <id>P37840</id>
    </interactant>
    <interactant intactId="EBI-79722">
        <id>P68431</id>
        <label>H3C12</label>
    </interactant>
    <organismsDiffer>false</organismsDiffer>
    <experiments>3</experiments>
</comment>
<comment type="interaction">
    <interactant intactId="EBI-985879">
        <id>P37840</id>
    </interactant>
    <interactant intactId="EBI-750650">
        <id>Q71DI3</id>
        <label>H3C15</label>
    </interactant>
    <organismsDiffer>false</organismsDiffer>
    <experiments>3</experiments>
</comment>
<comment type="interaction">
    <interactant intactId="EBI-985879">
        <id>P37840</id>
    </interactant>
    <interactant intactId="EBI-301762">
        <id>Q969S8</id>
        <label>HDAC10</label>
    </interactant>
    <organismsDiffer>false</organismsDiffer>
    <experiments>3</experiments>
</comment>
<comment type="interaction">
    <interactant intactId="EBI-985879">
        <id>P37840</id>
    </interactant>
    <interactant intactId="EBI-2680288">
        <id>Q9HCC6</id>
        <label>HES4</label>
    </interactant>
    <organismsDiffer>false</organismsDiffer>
    <experiments>3</experiments>
</comment>
<comment type="interaction">
    <interactant intactId="EBI-985879">
        <id>P37840</id>
    </interactant>
    <interactant intactId="EBI-25845242">
        <id>Q8WVV9-3</id>
        <label>HNRNPLL</label>
    </interactant>
    <organismsDiffer>false</organismsDiffer>
    <experiments>3</experiments>
</comment>
<comment type="interaction">
    <interactant intactId="EBI-985879">
        <id>P37840</id>
    </interactant>
    <interactant intactId="EBI-3923226">
        <id>P09017</id>
        <label>HOXC4</label>
    </interactant>
    <organismsDiffer>false</organismsDiffer>
    <experiments>3</experiments>
</comment>
<comment type="interaction">
    <interactant intactId="EBI-985879">
        <id>P37840</id>
    </interactant>
    <interactant intactId="EBI-629985">
        <id>P08107</id>
        <label>HSPA1B</label>
    </interactant>
    <organismsDiffer>false</organismsDiffer>
    <experiments>7</experiments>
</comment>
<comment type="interaction">
    <interactant intactId="EBI-985879">
        <id>P37840</id>
    </interactant>
    <interactant intactId="EBI-466029">
        <id>P42858</id>
        <label>HTT</label>
    </interactant>
    <organismsDiffer>false</organismsDiffer>
    <experiments>4</experiments>
</comment>
<comment type="interaction">
    <interactant intactId="EBI-985879">
        <id>P37840</id>
    </interactant>
    <interactant intactId="EBI-12823003">
        <id>P80217-2</id>
        <label>IFI35</label>
    </interactant>
    <organismsDiffer>false</organismsDiffer>
    <experiments>3</experiments>
</comment>
<comment type="interaction">
    <interactant intactId="EBI-985879">
        <id>P37840</id>
    </interactant>
    <interactant intactId="EBI-366258">
        <id>Q16352</id>
        <label>INA</label>
    </interactant>
    <organismsDiffer>false</organismsDiffer>
    <experiments>3</experiments>
</comment>
<comment type="interaction">
    <interactant intactId="EBI-985879">
        <id>P37840</id>
    </interactant>
    <interactant intactId="EBI-21911304">
        <id>Q6DN90-2</id>
        <label>IQSEC1</label>
    </interactant>
    <organismsDiffer>false</organismsDiffer>
    <experiments>3</experiments>
</comment>
<comment type="interaction">
    <interactant intactId="EBI-985879">
        <id>P37840</id>
    </interactant>
    <interactant intactId="EBI-2127319">
        <id>O14713</id>
        <label>ITGB1BP1</label>
    </interactant>
    <organismsDiffer>false</organismsDiffer>
    <experiments>3</experiments>
</comment>
<comment type="interaction">
    <interactant intactId="EBI-985879">
        <id>P37840</id>
    </interactant>
    <interactant intactId="EBI-2796400">
        <id>Q9UIH9</id>
        <label>KLF15</label>
    </interactant>
    <organismsDiffer>false</organismsDiffer>
    <experiments>3</experiments>
</comment>
<comment type="interaction">
    <interactant intactId="EBI-985879">
        <id>P37840</id>
    </interactant>
    <interactant intactId="EBI-714379">
        <id>Q9Y2M5</id>
        <label>KLHL20</label>
    </interactant>
    <organismsDiffer>false</organismsDiffer>
    <experiments>3</experiments>
</comment>
<comment type="interaction">
    <interactant intactId="EBI-985879">
        <id>P37840</id>
    </interactant>
    <interactant intactId="EBI-2432309">
        <id>Q92876</id>
        <label>KLK6</label>
    </interactant>
    <organismsDiffer>false</organismsDiffer>
    <experiments>3</experiments>
</comment>
<comment type="interaction">
    <interactant intactId="EBI-985879">
        <id>P37840</id>
    </interactant>
    <interactant intactId="EBI-1044640">
        <id>Q9BYQ4</id>
        <label>KRTAP9-2</label>
    </interactant>
    <organismsDiffer>false</organismsDiffer>
    <experiments>3</experiments>
</comment>
<comment type="interaction">
    <interactant intactId="EBI-985879">
        <id>P37840</id>
    </interactant>
    <interactant intactId="EBI-11985629">
        <id>Q96JM7-2</id>
        <label>L3MBTL3</label>
    </interactant>
    <organismsDiffer>false</organismsDiffer>
    <experiments>3</experiments>
</comment>
<comment type="interaction">
    <interactant intactId="EBI-985879">
        <id>P37840</id>
    </interactant>
    <interactant intactId="EBI-21591415">
        <id>P13473-2</id>
        <label>LAMP2</label>
    </interactant>
    <organismsDiffer>false</organismsDiffer>
    <experiments>3</experiments>
</comment>
<comment type="interaction">
    <interactant intactId="EBI-985879">
        <id>P37840</id>
    </interactant>
    <interactant intactId="EBI-1108377">
        <id>Q9BYZ2</id>
        <label>LDHAL6B</label>
    </interactant>
    <organismsDiffer>false</organismsDiffer>
    <experiments>3</experiments>
</comment>
<comment type="interaction">
    <interactant intactId="EBI-985879">
        <id>P37840</id>
    </interactant>
    <interactant intactId="EBI-25835523">
        <id>Q9H2C1</id>
        <label>LHX5</label>
    </interactant>
    <organismsDiffer>false</organismsDiffer>
    <experiments>3</experiments>
</comment>
<comment type="interaction">
    <interactant intactId="EBI-985879">
        <id>P37840</id>
    </interactant>
    <interactant intactId="EBI-10258746">
        <id>Q9UPM6</id>
        <label>LHX6</label>
    </interactant>
    <organismsDiffer>false</organismsDiffer>
    <experiments>3</experiments>
</comment>
<comment type="interaction">
    <interactant intactId="EBI-985879">
        <id>P37840</id>
    </interactant>
    <interactant intactId="EBI-739832">
        <id>Q8TBB1</id>
        <label>LNX1</label>
    </interactant>
    <organismsDiffer>false</organismsDiffer>
    <experiments>3</experiments>
</comment>
<comment type="interaction">
    <interactant intactId="EBI-985879">
        <id>P37840</id>
    </interactant>
    <interactant intactId="EBI-2340947">
        <id>Q8N448</id>
        <label>LNX2</label>
    </interactant>
    <organismsDiffer>false</organismsDiffer>
    <experiments>3</experiments>
</comment>
<comment type="interaction">
    <interactant intactId="EBI-985879">
        <id>P37840</id>
    </interactant>
    <interactant intactId="EBI-9088215">
        <id>A2RU56</id>
        <label>LOC401296</label>
    </interactant>
    <organismsDiffer>false</organismsDiffer>
    <experiments>3</experiments>
</comment>
<comment type="interaction">
    <interactant intactId="EBI-985879">
        <id>P37840</id>
    </interactant>
    <interactant intactId="EBI-5323863">
        <id>Q5S007</id>
        <label>LRRK2</label>
    </interactant>
    <organismsDiffer>false</organismsDiffer>
    <experiments>6</experiments>
</comment>
<comment type="interaction">
    <interactant intactId="EBI-985879">
        <id>P37840</id>
    </interactant>
    <interactant intactId="EBI-347779">
        <id>O95777</id>
        <label>LSM8</label>
    </interactant>
    <organismsDiffer>false</organismsDiffer>
    <experiments>3</experiments>
</comment>
<comment type="interaction">
    <interactant intactId="EBI-985879">
        <id>P37840</id>
    </interactant>
    <interactant intactId="EBI-79452">
        <id>P07948</id>
        <label>LYN</label>
    </interactant>
    <organismsDiffer>false</organismsDiffer>
    <experiments>3</experiments>
</comment>
<comment type="interaction">
    <interactant intactId="EBI-985879">
        <id>P37840</id>
    </interactant>
    <interactant intactId="EBI-10694180">
        <id>Q8TD91-2</id>
        <label>MAGEC3</label>
    </interactant>
    <organismsDiffer>false</organismsDiffer>
    <experiments>3</experiments>
</comment>
<comment type="interaction">
    <interactant intactId="EBI-985879">
        <id>P37840</id>
    </interactant>
    <interactant intactId="EBI-7796455">
        <id>P10636-6</id>
        <label>MAPT</label>
    </interactant>
    <organismsDiffer>false</organismsDiffer>
    <experiments>3</experiments>
</comment>
<comment type="interaction">
    <interactant intactId="EBI-985879">
        <id>P37840</id>
    </interactant>
    <interactant intactId="EBI-366233">
        <id>P10636-8</id>
        <label>MAPT</label>
    </interactant>
    <organismsDiffer>false</organismsDiffer>
    <experiments>12</experiments>
</comment>
<comment type="interaction">
    <interactant intactId="EBI-985879">
        <id>P37840</id>
    </interactant>
    <interactant intactId="EBI-8487781">
        <id>Q8N6F8</id>
        <label>METTL27</label>
    </interactant>
    <organismsDiffer>false</organismsDiffer>
    <experiments>3</experiments>
</comment>
<comment type="interaction">
    <interactant intactId="EBI-985879">
        <id>P37840</id>
    </interactant>
    <interactant intactId="EBI-4397720">
        <id>Q8TDB4</id>
        <label>MGARP</label>
    </interactant>
    <organismsDiffer>false</organismsDiffer>
    <experiments>3</experiments>
</comment>
<comment type="interaction">
    <interactant intactId="EBI-985879">
        <id>P37840</id>
    </interactant>
    <interactant intactId="EBI-21250407">
        <id>A4FUJ8</id>
        <label>MKL1</label>
    </interactant>
    <organismsDiffer>false</organismsDiffer>
    <experiments>3</experiments>
</comment>
<comment type="interaction">
    <interactant intactId="EBI-985879">
        <id>P37840</id>
    </interactant>
    <interactant intactId="EBI-2512452">
        <id>Q8N594</id>
        <label>MPND</label>
    </interactant>
    <organismsDiffer>false</organismsDiffer>
    <experiments>3</experiments>
</comment>
<comment type="interaction">
    <interactant intactId="EBI-985879">
        <id>P37840</id>
    </interactant>
    <interactant intactId="EBI-9092052">
        <id>Q9Y3D2</id>
        <label>MSRB2</label>
    </interactant>
    <organismsDiffer>false</organismsDiffer>
    <experiments>3</experiments>
</comment>
<comment type="interaction">
    <interactant intactId="EBI-985879">
        <id>P37840</id>
    </interactant>
    <interactant intactId="EBI-3932264">
        <id>P00414</id>
        <label>MT-CO3</label>
    </interactant>
    <organismsDiffer>false</organismsDiffer>
    <experiments>3</experiments>
</comment>
<comment type="interaction">
    <interactant intactId="EBI-985879">
        <id>P37840</id>
    </interactant>
    <interactant intactId="EBI-996616">
        <id>P02795</id>
        <label>MT2A</label>
    </interactant>
    <organismsDiffer>false</organismsDiffer>
    <experiments>3</experiments>
</comment>
<comment type="interaction">
    <interactant intactId="EBI-985879">
        <id>P37840</id>
    </interactant>
    <interactant intactId="EBI-10698053">
        <id>Q9Y483-4</id>
        <label>MTF2</label>
    </interactant>
    <organismsDiffer>false</organismsDiffer>
    <experiments>3</experiments>
</comment>
<comment type="interaction">
    <interactant intactId="EBI-985879">
        <id>P37840</id>
    </interactant>
    <interactant intactId="EBI-744871">
        <id>O00746</id>
        <label>NME4</label>
    </interactant>
    <organismsDiffer>false</organismsDiffer>
    <experiments>3</experiments>
</comment>
<comment type="interaction">
    <interactant intactId="EBI-985879">
        <id>P37840</id>
    </interactant>
    <interactant intactId="EBI-18577082">
        <id>O15381-5</id>
        <label>NVL</label>
    </interactant>
    <organismsDiffer>false</organismsDiffer>
    <experiments>3</experiments>
</comment>
<comment type="interaction">
    <interactant intactId="EBI-985879">
        <id>P37840</id>
    </interactant>
    <interactant intactId="EBI-25888682">
        <id>Q86WS3</id>
        <label>OOSP2</label>
    </interactant>
    <organismsDiffer>false</organismsDiffer>
    <experiments>3</experiments>
</comment>
<comment type="interaction">
    <interactant intactId="EBI-985879">
        <id>P37840</id>
    </interactant>
    <interactant intactId="EBI-1058491">
        <id>Q96FW1</id>
        <label>OTUB1</label>
    </interactant>
    <organismsDiffer>false</organismsDiffer>
    <experiments>3</experiments>
</comment>
<comment type="interaction">
    <interactant intactId="EBI-985879">
        <id>P37840</id>
    </interactant>
    <interactant intactId="EBI-25830200">
        <id>Q6GQQ9-2</id>
        <label>OTUD7B</label>
    </interactant>
    <organismsDiffer>false</organismsDiffer>
    <experiments>3</experiments>
</comment>
<comment type="interaction">
    <interactant intactId="EBI-985879">
        <id>P37840</id>
    </interactant>
    <interactant intactId="EBI-2555014">
        <id>Q6VY07</id>
        <label>PACS1</label>
    </interactant>
    <organismsDiffer>false</organismsDiffer>
    <experiments>3</experiments>
</comment>
<comment type="interaction">
    <interactant intactId="EBI-985879">
        <id>P37840</id>
    </interactant>
    <interactant intactId="EBI-21659863">
        <id>O96013-2</id>
        <label>PAK4</label>
    </interactant>
    <organismsDiffer>false</organismsDiffer>
    <experiments>3</experiments>
</comment>
<comment type="interaction">
    <interactant intactId="EBI-985879">
        <id>P37840</id>
    </interactant>
    <interactant intactId="EBI-17159452">
        <id>Q9NR21-5</id>
        <label>PARP11</label>
    </interactant>
    <organismsDiffer>false</organismsDiffer>
    <experiments>3</experiments>
</comment>
<comment type="interaction">
    <interactant intactId="EBI-985879">
        <id>P37840</id>
    </interactant>
    <interactant intactId="EBI-6309018">
        <id>Q9NV79</id>
        <label>PCMTD2</label>
    </interactant>
    <organismsDiffer>false</organismsDiffer>
    <experiments>3</experiments>
</comment>
<comment type="interaction">
    <interactant intactId="EBI-985879">
        <id>P37840</id>
    </interactant>
    <interactant intactId="EBI-716063">
        <id>Q13113</id>
        <label>PDZK1IP1</label>
    </interactant>
    <organismsDiffer>false</organismsDiffer>
    <experiments>3</experiments>
</comment>
<comment type="interaction">
    <interactant intactId="EBI-985879">
        <id>P37840</id>
    </interactant>
    <interactant intactId="EBI-629434">
        <id>O75925</id>
        <label>PIAS1</label>
    </interactant>
    <organismsDiffer>false</organismsDiffer>
    <experiments>3</experiments>
</comment>
<comment type="interaction">
    <interactant intactId="EBI-985879">
        <id>P37840</id>
    </interactant>
    <interactant intactId="EBI-12891828">
        <id>Q6ZR37</id>
        <label>PLEKHG7</label>
    </interactant>
    <organismsDiffer>false</organismsDiffer>
    <experiments>3</experiments>
</comment>
<comment type="interaction">
    <interactant intactId="EBI-985879">
        <id>P37840</id>
    </interactant>
    <interactant intactId="EBI-1383528">
        <id>P17252</id>
        <label>PRKCA</label>
    </interactant>
    <organismsDiffer>false</organismsDiffer>
    <experiments>3</experiments>
</comment>
<comment type="interaction">
    <interactant intactId="EBI-985879">
        <id>P37840</id>
    </interactant>
    <interactant intactId="EBI-706254">
        <id>Q02156</id>
        <label>PRKCE</label>
    </interactant>
    <organismsDiffer>false</organismsDiffer>
    <experiments>3</experiments>
</comment>
<comment type="interaction">
    <interactant intactId="EBI-985879">
        <id>P37840</id>
    </interactant>
    <interactant intactId="EBI-21251460">
        <id>O60260-5</id>
        <label>PRKN</label>
    </interactant>
    <organismsDiffer>false</organismsDiffer>
    <experiments>8</experiments>
</comment>
<comment type="interaction">
    <interactant intactId="EBI-985879">
        <id>P37840</id>
    </interactant>
    <interactant intactId="EBI-5280197">
        <id>O75400-2</id>
        <label>PRPF40A</label>
    </interactant>
    <organismsDiffer>false</organismsDiffer>
    <experiments>3</experiments>
</comment>
<comment type="interaction">
    <interactant intactId="EBI-985879">
        <id>P37840</id>
    </interactant>
    <interactant intactId="EBI-357598">
        <id>P62191</id>
        <label>PSMC1</label>
    </interactant>
    <organismsDiffer>false</organismsDiffer>
    <experiments>3</experiments>
</comment>
<comment type="interaction">
    <interactant intactId="EBI-985879">
        <id>P37840</id>
    </interactant>
    <interactant intactId="EBI-359720">
        <id>P17980</id>
        <label>PSMC3</label>
    </interactant>
    <organismsDiffer>false</organismsDiffer>
    <experiments>6</experiments>
</comment>
<comment type="interaction">
    <interactant intactId="EBI-985879">
        <id>P37840</id>
    </interactant>
    <interactant intactId="EBI-712367">
        <id>Q9UI14</id>
        <label>RABAC1</label>
    </interactant>
    <organismsDiffer>false</organismsDiffer>
    <experiments>4</experiments>
</comment>
<comment type="interaction">
    <interactant intactId="EBI-985879">
        <id>P37840</id>
    </interactant>
    <interactant intactId="EBI-14093916">
        <id>Q9UJ41-4</id>
        <label>RABGEF1</label>
    </interactant>
    <organismsDiffer>false</organismsDiffer>
    <experiments>3</experiments>
</comment>
<comment type="interaction">
    <interactant intactId="EBI-985879">
        <id>P37840</id>
    </interactant>
    <interactant intactId="EBI-286642">
        <id>P62826</id>
        <label>RAN</label>
    </interactant>
    <organismsDiffer>false</organismsDiffer>
    <experiments>3</experiments>
</comment>
<comment type="interaction">
    <interactant intactId="EBI-985879">
        <id>P37840</id>
    </interactant>
    <interactant intactId="EBI-22012855">
        <id>Q13702-2</id>
        <label>RAPSN</label>
    </interactant>
    <organismsDiffer>false</organismsDiffer>
    <experiments>3</experiments>
</comment>
<comment type="interaction">
    <interactant intactId="EBI-985879">
        <id>P37840</id>
    </interactant>
    <interactant intactId="EBI-741332">
        <id>P57052</id>
        <label>RBM11</label>
    </interactant>
    <organismsDiffer>false</organismsDiffer>
    <experiments>3</experiments>
</comment>
<comment type="interaction">
    <interactant intactId="EBI-985879">
        <id>P37840</id>
    </interactant>
    <interactant intactId="EBI-714023">
        <id>Q8N5U6</id>
        <label>RNF10</label>
    </interactant>
    <organismsDiffer>false</organismsDiffer>
    <experiments>3</experiments>
</comment>
<comment type="interaction">
    <interactant intactId="EBI-985879">
        <id>P37840</id>
    </interactant>
    <interactant intactId="EBI-21535400">
        <id>Q6ZNA4-2</id>
        <label>RNF111</label>
    </interactant>
    <organismsDiffer>false</organismsDiffer>
    <experiments>3</experiments>
</comment>
<comment type="interaction">
    <interactant intactId="EBI-985879">
        <id>P37840</id>
    </interactant>
    <interactant intactId="EBI-25829984">
        <id>Q9ULX5</id>
        <label>RNF112</label>
    </interactant>
    <organismsDiffer>false</organismsDiffer>
    <experiments>3</experiments>
</comment>
<comment type="interaction">
    <interactant intactId="EBI-985879">
        <id>P37840</id>
    </interactant>
    <interactant intactId="EBI-749039">
        <id>Q8WVD3</id>
        <label>RNF138</label>
    </interactant>
    <organismsDiffer>false</organismsDiffer>
    <experiments>3</experiments>
</comment>
<comment type="interaction">
    <interactant intactId="EBI-985879">
        <id>P37840</id>
    </interactant>
    <interactant intactId="EBI-914207">
        <id>Q8IYW5</id>
        <label>RNF168</label>
    </interactant>
    <organismsDiffer>false</organismsDiffer>
    <experiments>3</experiments>
</comment>
<comment type="interaction">
    <interactant intactId="EBI-985879">
        <id>P37840</id>
    </interactant>
    <interactant intactId="EBI-743938">
        <id>Q96D59</id>
        <label>RNF183</label>
    </interactant>
    <organismsDiffer>false</organismsDiffer>
    <experiments>3</experiments>
</comment>
<comment type="interaction">
    <interactant intactId="EBI-985879">
        <id>P37840</id>
    </interactant>
    <interactant intactId="EBI-752324">
        <id>Q8N488</id>
        <label>RYBP</label>
    </interactant>
    <organismsDiffer>false</organismsDiffer>
    <experiments>3</experiments>
</comment>
<comment type="interaction">
    <interactant intactId="EBI-985879">
        <id>P37840</id>
    </interactant>
    <interactant intactId="EBI-632609">
        <id>O75446</id>
        <label>SAP30</label>
    </interactant>
    <organismsDiffer>false</organismsDiffer>
    <experiments>3</experiments>
</comment>
<comment type="interaction">
    <interactant intactId="EBI-985879">
        <id>P37840</id>
    </interactant>
    <interactant intactId="EBI-727004">
        <id>O00560</id>
        <label>SDCBP</label>
    </interactant>
    <organismsDiffer>false</organismsDiffer>
    <experiments>3</experiments>
</comment>
<comment type="interaction">
    <interactant intactId="EBI-985879">
        <id>P37840</id>
    </interactant>
    <interactant intactId="EBI-1047513">
        <id>O43236</id>
        <label>SEPTIN4</label>
    </interactant>
    <organismsDiffer>false</organismsDiffer>
    <experiments>3</experiments>
</comment>
<comment type="interaction">
    <interactant intactId="EBI-985879">
        <id>P37840</id>
    </interactant>
    <interactant intactId="EBI-21283682">
        <id>O75920-2</id>
        <label>SERF1B</label>
    </interactant>
    <organismsDiffer>false</organismsDiffer>
    <experiments>4</experiments>
</comment>
<comment type="interaction">
    <interactant intactId="EBI-985879">
        <id>P37840</id>
    </interactant>
    <interactant intactId="EBI-10182463">
        <id>Q2NKQ1-4</id>
        <label>SGSM1</label>
    </interactant>
    <organismsDiffer>false</organismsDiffer>
    <experiments>3</experiments>
</comment>
<comment type="interaction">
    <interactant intactId="EBI-985879">
        <id>P37840</id>
    </interactant>
    <interactant intactId="EBI-358545">
        <id>Q9GZS3</id>
        <label>SKIC8</label>
    </interactant>
    <organismsDiffer>false</organismsDiffer>
    <experiments>3</experiments>
</comment>
<comment type="interaction">
    <interactant intactId="EBI-985879">
        <id>P37840</id>
    </interactant>
    <interactant intactId="EBI-6661445">
        <id>Q01959</id>
        <label>SLC6A3</label>
    </interactant>
    <organismsDiffer>false</organismsDiffer>
    <experiments>3</experiments>
</comment>
<comment type="interaction">
    <interactant intactId="EBI-985879">
        <id>P37840</id>
    </interactant>
    <interactant intactId="EBI-9845742">
        <id>Q9HCE7-2</id>
        <label>SMURF1</label>
    </interactant>
    <organismsDiffer>false</organismsDiffer>
    <experiments>3</experiments>
</comment>
<comment type="interaction">
    <interactant intactId="EBI-985879">
        <id>P37840</id>
    </interactant>
    <interactant intactId="EBI-985879">
        <id>P37840</id>
        <label>SNCA</label>
    </interactant>
    <organismsDiffer>false</organismsDiffer>
    <experiments>51</experiments>
</comment>
<comment type="interaction">
    <interactant intactId="EBI-985879">
        <id>P37840</id>
    </interactant>
    <interactant intactId="EBI-717182">
        <id>Q9Y6H5</id>
        <label>SNCAIP</label>
    </interactant>
    <organismsDiffer>false</organismsDiffer>
    <experiments>22</experiments>
</comment>
<comment type="interaction">
    <interactant intactId="EBI-985879">
        <id>P37840</id>
    </interactant>
    <interactant intactId="EBI-15577909">
        <id>Q9Y6H5-2</id>
        <label>SNCAIP</label>
    </interactant>
    <organismsDiffer>false</organismsDiffer>
    <experiments>2</experiments>
</comment>
<comment type="interaction">
    <interactant intactId="EBI-985879">
        <id>P37840</id>
    </interactant>
    <interactant intactId="EBI-727106">
        <id>Q16143</id>
        <label>SNCB</label>
    </interactant>
    <organismsDiffer>false</organismsDiffer>
    <experiments>3</experiments>
</comment>
<comment type="interaction">
    <interactant intactId="EBI-985879">
        <id>P37840</id>
    </interactant>
    <interactant intactId="EBI-990792">
        <id>P00441</id>
        <label>SOD1</label>
    </interactant>
    <organismsDiffer>false</organismsDiffer>
    <experiments>9</experiments>
</comment>
<comment type="interaction">
    <interactant intactId="EBI-985879">
        <id>P37840</id>
    </interactant>
    <interactant intactId="EBI-6589365">
        <id>P23497-2</id>
        <label>SP100</label>
    </interactant>
    <organismsDiffer>false</organismsDiffer>
    <experiments>3</experiments>
</comment>
<comment type="interaction">
    <interactant intactId="EBI-985879">
        <id>P37840</id>
    </interactant>
    <interactant intactId="EBI-11959123">
        <id>Q99932-2</id>
        <label>SPAG8</label>
    </interactant>
    <organismsDiffer>false</organismsDiffer>
    <experiments>3</experiments>
</comment>
<comment type="interaction">
    <interactant intactId="EBI-985879">
        <id>P37840</id>
    </interactant>
    <interactant intactId="EBI-7067260">
        <id>Q8NHS9</id>
        <label>SPATA22</label>
    </interactant>
    <organismsDiffer>false</organismsDiffer>
    <experiments>3</experiments>
</comment>
<comment type="interaction">
    <interactant intactId="EBI-985879">
        <id>P37840</id>
    </interactant>
    <interactant intactId="EBI-8345366">
        <id>Q8TCT7-2</id>
        <label>SPPL2B</label>
    </interactant>
    <organismsDiffer>false</organismsDiffer>
    <experiments>3</experiments>
</comment>
<comment type="interaction">
    <interactant intactId="EBI-985879">
        <id>P37840</id>
    </interactant>
    <interactant intactId="EBI-307104">
        <id>Q13501</id>
        <label>SQSTM1</label>
    </interactant>
    <organismsDiffer>false</organismsDiffer>
    <experiments>3</experiments>
</comment>
<comment type="interaction">
    <interactant intactId="EBI-985879">
        <id>P37840</id>
    </interactant>
    <interactant intactId="EBI-373258">
        <id>O75886</id>
        <label>STAM2</label>
    </interactant>
    <organismsDiffer>false</organismsDiffer>
    <experiments>3</experiments>
</comment>
<comment type="interaction">
    <interactant intactId="EBI-985879">
        <id>P37840</id>
    </interactant>
    <interactant intactId="EBI-712466">
        <id>Q16623</id>
        <label>STX1A</label>
    </interactant>
    <organismsDiffer>false</organismsDiffer>
    <experiments>2</experiments>
</comment>
<comment type="interaction">
    <interactant intactId="EBI-985879">
        <id>P37840</id>
    </interactant>
    <interactant intactId="EBI-25831443">
        <id>Q9BR01-2</id>
        <label>SULT4A1</label>
    </interactant>
    <organismsDiffer>false</organismsDiffer>
    <experiments>3</experiments>
</comment>
<comment type="interaction">
    <interactant intactId="EBI-985879">
        <id>P37840</id>
    </interactant>
    <interactant intactId="EBI-21560407">
        <id>Q92797-2</id>
        <label>SYMPK</label>
    </interactant>
    <organismsDiffer>false</organismsDiffer>
    <experiments>3</experiments>
</comment>
<comment type="interaction">
    <interactant intactId="EBI-985879">
        <id>P37840</id>
    </interactant>
    <interactant intactId="EBI-1047158">
        <id>Q16650</id>
        <label>TBR1</label>
    </interactant>
    <organismsDiffer>false</organismsDiffer>
    <experiments>3</experiments>
</comment>
<comment type="interaction">
    <interactant intactId="EBI-985879">
        <id>P37840</id>
    </interactant>
    <interactant intactId="EBI-348333">
        <id>Q13569</id>
        <label>TDG</label>
    </interactant>
    <organismsDiffer>false</organismsDiffer>
    <experiments>3</experiments>
</comment>
<comment type="interaction">
    <interactant intactId="EBI-985879">
        <id>P37840</id>
    </interactant>
    <interactant intactId="EBI-12151837">
        <id>P28347-2</id>
        <label>TEAD1</label>
    </interactant>
    <organismsDiffer>false</organismsDiffer>
    <experiments>3</experiments>
</comment>
<comment type="interaction">
    <interactant intactId="EBI-985879">
        <id>P37840</id>
    </interactant>
    <interactant intactId="EBI-25840535">
        <id>Q15554-4</id>
        <label>TERF2</label>
    </interactant>
    <organismsDiffer>false</organismsDiffer>
    <experiments>3</experiments>
</comment>
<comment type="interaction">
    <interactant intactId="EBI-985879">
        <id>P37840</id>
    </interactant>
    <interactant intactId="EBI-74615">
        <id>Q9H0E2</id>
        <label>TOLLIP</label>
    </interactant>
    <organismsDiffer>false</organismsDiffer>
    <experiments>3</experiments>
</comment>
<comment type="interaction">
    <interactant intactId="EBI-985879">
        <id>P37840</id>
    </interactant>
    <interactant intactId="EBI-3927802">
        <id>O94811</id>
        <label>TPPP</label>
    </interactant>
    <organismsDiffer>false</organismsDiffer>
    <experiments>8</experiments>
</comment>
<comment type="interaction">
    <interactant intactId="EBI-985879">
        <id>P37840</id>
    </interactant>
    <interactant intactId="EBI-81290">
        <id>P19474</id>
        <label>TRIM21</label>
    </interactant>
    <organismsDiffer>false</organismsDiffer>
    <experiments>3</experiments>
</comment>
<comment type="interaction">
    <interactant intactId="EBI-985879">
        <id>P37840</id>
    </interactant>
    <interactant intactId="EBI-487083">
        <id>P68363</id>
        <label>TUBA1B</label>
    </interactant>
    <organismsDiffer>false</organismsDiffer>
    <experiments>3</experiments>
</comment>
<comment type="interaction">
    <interactant intactId="EBI-985879">
        <id>P37840</id>
    </interactant>
    <interactant intactId="EBI-350864">
        <id>P07437</id>
        <label>TUBB</label>
    </interactant>
    <organismsDiffer>false</organismsDiffer>
    <experiments>3</experiments>
</comment>
<comment type="interaction">
    <interactant intactId="EBI-985879">
        <id>P37840</id>
    </interactant>
    <interactant intactId="EBI-1797313">
        <id>Q8WVJ9</id>
        <label>TWIST2</label>
    </interactant>
    <organismsDiffer>false</organismsDiffer>
    <experiments>3</experiments>
</comment>
<comment type="interaction">
    <interactant intactId="EBI-985879">
        <id>P37840</id>
    </interactant>
    <interactant intactId="EBI-357304">
        <id>P62987</id>
        <label>UBA52</label>
    </interactant>
    <organismsDiffer>false</organismsDiffer>
    <experiments>3</experiments>
</comment>
<comment type="interaction">
    <interactant intactId="EBI-985879">
        <id>P37840</id>
    </interactant>
    <interactant intactId="EBI-749370">
        <id>Q9BSL1</id>
        <label>UBAC1</label>
    </interactant>
    <organismsDiffer>false</organismsDiffer>
    <experiments>3</experiments>
</comment>
<comment type="interaction">
    <interactant intactId="EBI-985879">
        <id>P37840</id>
    </interactant>
    <interactant intactId="EBI-6657186">
        <id>O15205</id>
        <label>UBD</label>
    </interactant>
    <organismsDiffer>false</organismsDiffer>
    <experiments>3</experiments>
</comment>
<comment type="interaction">
    <interactant intactId="EBI-985879">
        <id>P37840</id>
    </interactant>
    <interactant intactId="EBI-11530712">
        <id>Q04323-2</id>
        <label>UBXN1</label>
    </interactant>
    <organismsDiffer>false</organismsDiffer>
    <experiments>3</experiments>
</comment>
<comment type="interaction">
    <interactant intactId="EBI-985879">
        <id>P37840</id>
    </interactant>
    <interactant intactId="EBI-17761788">
        <id>Q96RL1-2</id>
        <label>UIMC1</label>
    </interactant>
    <organismsDiffer>false</organismsDiffer>
    <experiments>3</experiments>
</comment>
<comment type="interaction">
    <interactant intactId="EBI-985879">
        <id>P37840</id>
    </interactant>
    <interactant intactId="EBI-10696113">
        <id>O75604-3</id>
        <label>USP2</label>
    </interactant>
    <organismsDiffer>false</organismsDiffer>
    <experiments>3</experiments>
</comment>
<comment type="interaction">
    <interactant intactId="EBI-985879">
        <id>P37840</id>
    </interactant>
    <interactant intactId="EBI-520113">
        <id>P63027</id>
        <label>VAMP2</label>
    </interactant>
    <organismsDiffer>false</organismsDiffer>
    <experiments>5</experiments>
</comment>
<comment type="interaction">
    <interactant intactId="EBI-985879">
        <id>P37840</id>
    </interactant>
    <interactant intactId="EBI-12157263">
        <id>P40337-2</id>
        <label>VHL</label>
    </interactant>
    <organismsDiffer>false</organismsDiffer>
    <experiments>3</experiments>
</comment>
<comment type="interaction">
    <interactant intactId="EBI-985879">
        <id>P37840</id>
    </interactant>
    <interactant intactId="EBI-11141397">
        <id>Q9UBQ0-2</id>
        <label>VPS29</label>
    </interactant>
    <organismsDiffer>false</organismsDiffer>
    <experiments>3</experiments>
</comment>
<comment type="interaction">
    <interactant intactId="EBI-985879">
        <id>P37840</id>
    </interactant>
    <interactant intactId="EBI-743923">
        <id>O00308</id>
        <label>WWP2</label>
    </interactant>
    <organismsDiffer>false</organismsDiffer>
    <experiments>3</experiments>
</comment>
<comment type="interaction">
    <interactant intactId="EBI-985879">
        <id>P37840</id>
    </interactant>
    <interactant intactId="EBI-306940">
        <id>Q04917</id>
        <label>YWHAH</label>
    </interactant>
    <organismsDiffer>false</organismsDiffer>
    <experiments>4</experiments>
</comment>
<comment type="interaction">
    <interactant intactId="EBI-985879">
        <id>P37840</id>
    </interactant>
    <interactant intactId="EBI-25842419">
        <id>O43167-2</id>
        <label>ZBTB24</label>
    </interactant>
    <organismsDiffer>false</organismsDiffer>
    <experiments>3</experiments>
</comment>
<comment type="interaction">
    <interactant intactId="EBI-985879">
        <id>P37840</id>
    </interactant>
    <interactant intactId="EBI-2682299">
        <id>Q96NC0</id>
        <label>ZMAT2</label>
    </interactant>
    <organismsDiffer>false</organismsDiffer>
    <experiments>3</experiments>
</comment>
<comment type="interaction">
    <interactant intactId="EBI-985879">
        <id>P37840</id>
    </interactant>
    <interactant intactId="EBI-8834821">
        <id>Q8WUU4</id>
        <label>ZNF296</label>
    </interactant>
    <organismsDiffer>false</organismsDiffer>
    <experiments>3</experiments>
</comment>
<comment type="interaction">
    <interactant intactId="EBI-985879">
        <id>P37840</id>
    </interactant>
    <interactant intactId="EBI-2813661">
        <id>Q8N895</id>
        <label>ZNF366</label>
    </interactant>
    <organismsDiffer>false</organismsDiffer>
    <experiments>3</experiments>
</comment>
<comment type="interaction">
    <interactant intactId="EBI-985879">
        <id>P37840</id>
    </interactant>
    <interactant intactId="EBI-10699005">
        <id>Q8N988-2</id>
        <label>ZNF557</label>
    </interactant>
    <organismsDiffer>false</organismsDiffer>
    <experiments>3</experiments>
</comment>
<comment type="interaction">
    <interactant intactId="EBI-985879">
        <id>P37840</id>
    </interactant>
    <interactant intactId="EBI-8490788">
        <id>Q68EA5</id>
        <label>ZNF57</label>
    </interactant>
    <organismsDiffer>false</organismsDiffer>
    <experiments>3</experiments>
</comment>
<comment type="interaction">
    <interactant intactId="EBI-985879">
        <id>P37840</id>
    </interactant>
    <interactant intactId="EBI-12021938">
        <id>Q8NBB4-2</id>
        <label>ZSCAN1</label>
    </interactant>
    <organismsDiffer>false</organismsDiffer>
    <experiments>3</experiments>
</comment>
<comment type="interaction">
    <interactant intactId="EBI-985879">
        <id>P37840</id>
    </interactant>
    <interactant intactId="EBI-25831303">
        <id>A8K878</id>
    </interactant>
    <organismsDiffer>false</organismsDiffer>
    <experiments>3</experiments>
</comment>
<comment type="interaction">
    <interactant intactId="EBI-985879">
        <id>P37840</id>
    </interactant>
    <interactant intactId="EBI-25475856">
        <id>P0DTC9</id>
        <label>N</label>
    </interactant>
    <organismsDiffer>true</organismsDiffer>
    <experiments>2</experiments>
</comment>
<comment type="interaction">
    <interactant intactId="EBI-985879">
        <id>P37840</id>
    </interactant>
    <interactant intactId="EBI-7839708">
        <id>Q61327</id>
        <label>Slc6a3</label>
    </interactant>
    <organismsDiffer>true</organismsDiffer>
    <experiments>5</experiments>
</comment>
<comment type="interaction">
    <interactant intactId="EBI-9684465">
        <id>P37840-1</id>
    </interactant>
    <interactant intactId="EBI-9684465">
        <id>P37840-1</id>
        <label>SNCA</label>
    </interactant>
    <organismsDiffer>false</organismsDiffer>
    <experiments>21</experiments>
</comment>
<comment type="interaction">
    <interactant intactId="EBI-9684465">
        <id>P37840-1</id>
    </interactant>
    <interactant intactId="EBI-306940">
        <id>Q04917</id>
        <label>YWHAH</label>
    </interactant>
    <organismsDiffer>false</organismsDiffer>
    <experiments>9</experiments>
</comment>
<comment type="subcellular location">
    <subcellularLocation>
        <location evidence="15 24 25 26 30 31">Cytoplasm</location>
    </subcellularLocation>
    <subcellularLocation>
        <location evidence="24">Membrane</location>
    </subcellularLocation>
    <subcellularLocation>
        <location evidence="8 24">Nucleus</location>
    </subcellularLocation>
    <subcellularLocation>
        <location evidence="12">Synapse</location>
    </subcellularLocation>
    <subcellularLocation>
        <location evidence="24">Secreted</location>
    </subcellularLocation>
    <subcellularLocation>
        <location evidence="1">Cell projection</location>
        <location evidence="1">Axon</location>
    </subcellularLocation>
    <text evidence="1 12">Membrane-bound in dopaminergic neurons (PubMed:15282274). Expressed and colocalized with SEPTIN4 in dopaminergic axon terminals, especially at the varicosities (By similarity).</text>
</comment>
<comment type="alternative products">
    <event type="alternative splicing"/>
    <isoform>
        <id>P37840-1</id>
        <name>1</name>
        <name>NACP140</name>
        <sequence type="displayed"/>
    </isoform>
    <isoform>
        <id>P37840-2</id>
        <name>2-4</name>
        <name>NACP112</name>
        <sequence type="described" ref="VSP_006364"/>
    </isoform>
    <isoform>
        <id>P37840-3</id>
        <name>2-5</name>
        <sequence type="described" ref="VSP_006363"/>
    </isoform>
    <text>Additional isoforms seem to exist.</text>
</comment>
<comment type="tissue specificity">
    <text evidence="32">Highly expressed in presynaptic terminals in the central nervous system. Expressed principally in brain.</text>
</comment>
<comment type="domain">
    <text evidence="14">The 'non A-beta component of Alzheimer disease amyloid plaque' domain (NAC domain) is involved in fibrils formation. The middle hydrophobic region forms the core of the filaments. The C-terminus may regulate aggregation and determine the diameter of the filaments.</text>
</comment>
<comment type="PTM">
    <text evidence="4 5 6 7 9 24">Phosphorylated, predominantly on serine residues. Phosphorylation by CK1 appears to occur on residues distinct from the residue phosphorylated by other kinases. Phosphorylation of Ser-129 is selective and extensive in synucleinopathy lesions. In vitro, phosphorylation at Ser-129 promoted insoluble fibril formation. Phosphorylated on Tyr-125 by a PTK2B-dependent pathway upon osmotic stress.</text>
</comment>
<comment type="PTM">
    <text>Hallmark lesions of neurodegenerative synucleinopathies contain alpha-synuclein that is modified by nitration of tyrosine residues and possibly by dityrosine cross-linking to generated stable oligomers.</text>
</comment>
<comment type="PTM">
    <text evidence="2">Ubiquitinated. The predominant conjugate is the diubiquitinated form.</text>
</comment>
<comment type="PTM">
    <text evidence="19">Acetylation at Met-1 seems to be important for proper folding and native oligomeric structure.</text>
</comment>
<comment type="disease">
    <text>Genetic alterations of SNCA resulting in aberrant polymerization into fibrils, are associated with several neurodegenerative diseases (synucleinopathies). SNCA fibrillar aggregates represent the major non A-beta component of Alzheimer disease amyloid plaque, and a major component of Lewy body inclusions. They are also found within Lewy body (LB)-like intraneuronal inclusions, glial inclusions and axonal spheroids in neurodegeneration with brain iron accumulation type 1.</text>
</comment>
<comment type="disease" evidence="10 21 22 24 25 33 34">
    <disease id="DI-01223">
        <name>Parkinson disease 1, autosomal dominant</name>
        <acronym>PARK1</acronym>
        <description>A complex neurodegenerative disorder characterized by bradykinesia, resting tremor, muscular rigidity and postural instability. Additional features are characteristic postural abnormalities, dysautonomia, dystonic cramps, and dementia. The pathology of Parkinson disease involves the loss of dopaminergic neurons in the substantia nigra and the presence of Lewy bodies (intraneuronal accumulations of aggregated proteins), in surviving neurons in various areas of the brain. The disease is progressive and usually manifests after the age of 50 years, although early-onset cases (before 50 years) are known. The majority of the cases are sporadic suggesting a multifactorial etiology based on environmental and genetic factors. However, some patients present with a positive family history for the disease. Familial forms of the disease usually begin at earlier ages and are associated with atypical clinical features.</description>
        <dbReference type="MIM" id="168601"/>
    </disease>
    <text>The disease is caused by variants affecting the gene represented in this entry.</text>
</comment>
<comment type="disease">
    <disease id="DI-02135">
        <name>Parkinson disease 4, autosomal dominant</name>
        <acronym>PARK4</acronym>
        <description>A complex neurodegenerative disorder with manifestations ranging from typical Parkinson disease to dementia with Lewy bodies. Clinical features include parkinsonian symptoms (resting tremor, rigidity, postural instability and bradykinesia), dementia, diffuse Lewy body pathology, autonomic dysfunction, hallucinations and paranoia.</description>
        <dbReference type="MIM" id="605543"/>
    </disease>
    <text>The disease is caused by variants affecting the gene represented in this entry.</text>
</comment>
<comment type="disease" evidence="10">
    <disease id="DI-01901">
        <name>Dementia, Lewy body</name>
        <acronym>DLB</acronym>
        <description>A neurodegenerative disorder characterized by mental impairment leading to dementia, parkinsonism, fluctuating cognitive function, visual hallucinations, falls, syncopal episodes, and sensitivity to neuroleptic medication. Brainstem or cortical intraneuronal accumulations of aggregated proteins (Lewy bodies) are the only essential pathologic features. Patients may also have hippocampal and neocortical senile plaques, sometimes in sufficient number to fulfill the diagnostic criteria for Alzheimer disease.</description>
        <dbReference type="MIM" id="127750"/>
    </disease>
    <text>The disease is caused by variants affecting the gene represented in this entry.</text>
</comment>
<comment type="similarity">
    <text evidence="37">Belongs to the synuclein family.</text>
</comment>
<evidence type="ECO:0000250" key="1">
    <source>
        <dbReference type="UniProtKB" id="O55042"/>
    </source>
</evidence>
<evidence type="ECO:0000250" key="2">
    <source>
        <dbReference type="UniProtKB" id="P37377"/>
    </source>
</evidence>
<evidence type="ECO:0000256" key="3">
    <source>
        <dbReference type="SAM" id="MobiDB-lite"/>
    </source>
</evidence>
<evidence type="ECO:0000269" key="4">
    <source>
    </source>
</evidence>
<evidence type="ECO:0000269" key="5">
    <source>
    </source>
</evidence>
<evidence type="ECO:0000269" key="6">
    <source>
    </source>
</evidence>
<evidence type="ECO:0000269" key="7">
    <source>
    </source>
</evidence>
<evidence type="ECO:0000269" key="8">
    <source>
    </source>
</evidence>
<evidence type="ECO:0000269" key="9">
    <source>
    </source>
</evidence>
<evidence type="ECO:0000269" key="10">
    <source>
    </source>
</evidence>
<evidence type="ECO:0000269" key="11">
    <source>
    </source>
</evidence>
<evidence type="ECO:0000269" key="12">
    <source>
    </source>
</evidence>
<evidence type="ECO:0000269" key="13">
    <source>
    </source>
</evidence>
<evidence type="ECO:0000269" key="14">
    <source>
    </source>
</evidence>
<evidence type="ECO:0000269" key="15">
    <source>
    </source>
</evidence>
<evidence type="ECO:0000269" key="16">
    <source>
    </source>
</evidence>
<evidence type="ECO:0000269" key="17">
    <source>
    </source>
</evidence>
<evidence type="ECO:0000269" key="18">
    <source>
    </source>
</evidence>
<evidence type="ECO:0000269" key="19">
    <source>
    </source>
</evidence>
<evidence type="ECO:0000269" key="20">
    <source>
    </source>
</evidence>
<evidence type="ECO:0000269" key="21">
    <source>
    </source>
</evidence>
<evidence type="ECO:0000269" key="22">
    <source>
    </source>
</evidence>
<evidence type="ECO:0000269" key="23">
    <source>
    </source>
</evidence>
<evidence type="ECO:0000269" key="24">
    <source>
    </source>
</evidence>
<evidence type="ECO:0000269" key="25">
    <source>
    </source>
</evidence>
<evidence type="ECO:0000269" key="26">
    <source>
    </source>
</evidence>
<evidence type="ECO:0000269" key="27">
    <source>
    </source>
</evidence>
<evidence type="ECO:0000269" key="28">
    <source>
    </source>
</evidence>
<evidence type="ECO:0000269" key="29">
    <source>
    </source>
</evidence>
<evidence type="ECO:0000269" key="30">
    <source>
    </source>
</evidence>
<evidence type="ECO:0000269" key="31">
    <source>
    </source>
</evidence>
<evidence type="ECO:0000269" key="32">
    <source>
    </source>
</evidence>
<evidence type="ECO:0000269" key="33">
    <source>
    </source>
</evidence>
<evidence type="ECO:0000269" key="34">
    <source>
    </source>
</evidence>
<evidence type="ECO:0000303" key="35">
    <source>
    </source>
</evidence>
<evidence type="ECO:0000303" key="36">
    <source>
    </source>
</evidence>
<evidence type="ECO:0000305" key="37"/>
<evidence type="ECO:0007829" key="38">
    <source>
        <dbReference type="PDB" id="1XQ8"/>
    </source>
</evidence>
<evidence type="ECO:0007829" key="39">
    <source>
        <dbReference type="PDB" id="2N0A"/>
    </source>
</evidence>
<evidence type="ECO:0007829" key="40">
    <source>
        <dbReference type="PDB" id="3Q25"/>
    </source>
</evidence>
<evidence type="ECO:0007829" key="41">
    <source>
        <dbReference type="PDB" id="3Q26"/>
    </source>
</evidence>
<evidence type="ECO:0007829" key="42">
    <source>
        <dbReference type="PDB" id="3Q27"/>
    </source>
</evidence>
<evidence type="ECO:0007829" key="43">
    <source>
        <dbReference type="PDB" id="3Q28"/>
    </source>
</evidence>
<evidence type="ECO:0007829" key="44">
    <source>
        <dbReference type="PDB" id="7V48"/>
    </source>
</evidence>
<evidence type="ECO:0007829" key="45">
    <source>
        <dbReference type="PDB" id="7XO3"/>
    </source>
</evidence>
<evidence type="ECO:0007829" key="46">
    <source>
        <dbReference type="PDB" id="7YK8"/>
    </source>
</evidence>
<evidence type="ECO:0007829" key="47">
    <source>
        <dbReference type="PDB" id="8A4L"/>
    </source>
</evidence>
<evidence type="ECO:0007829" key="48">
    <source>
        <dbReference type="PDB" id="8A9L"/>
    </source>
</evidence>
<evidence type="ECO:0007829" key="49">
    <source>
        <dbReference type="PDB" id="8JJV"/>
    </source>
</evidence>
<evidence type="ECO:0007829" key="50">
    <source>
        <dbReference type="PDB" id="8PJO"/>
    </source>
</evidence>
<evidence type="ECO:0007829" key="51">
    <source>
        <dbReference type="PDB" id="9FYP"/>
    </source>
</evidence>
<keyword id="KW-0002">3D-structure</keyword>
<keyword id="KW-0007">Acetylation</keyword>
<keyword id="KW-0025">Alternative splicing</keyword>
<keyword id="KW-0026">Alzheimer disease</keyword>
<keyword id="KW-0034">Amyloid</keyword>
<keyword id="KW-0966">Cell projection</keyword>
<keyword id="KW-0186">Copper</keyword>
<keyword id="KW-0963">Cytoplasm</keyword>
<keyword id="KW-0903">Direct protein sequencing</keyword>
<keyword id="KW-0225">Disease variant</keyword>
<keyword id="KW-0472">Membrane</keyword>
<keyword id="KW-0479">Metal-binding</keyword>
<keyword id="KW-0523">Neurodegeneration</keyword>
<keyword id="KW-0539">Nucleus</keyword>
<keyword id="KW-0907">Parkinson disease</keyword>
<keyword id="KW-0908">Parkinsonism</keyword>
<keyword id="KW-0597">Phosphoprotein</keyword>
<keyword id="KW-1267">Proteomics identification</keyword>
<keyword id="KW-1185">Reference proteome</keyword>
<keyword id="KW-0677">Repeat</keyword>
<keyword id="KW-0964">Secreted</keyword>
<keyword id="KW-0770">Synapse</keyword>
<keyword id="KW-0832">Ubl conjugation</keyword>
<reference key="1">
    <citation type="journal article" date="1993" name="Proc. Natl. Acad. Sci. U.S.A.">
        <title>Molecular cloning of cDNA encoding an unrecognized component of amyloid in Alzheimer disease.</title>
        <authorList>
            <person name="Ueda K."/>
            <person name="Fukushima H."/>
            <person name="Masliah E."/>
            <person name="Xia Y."/>
            <person name="Iwai A."/>
            <person name="Yoshimoto M."/>
            <person name="Otero D.A."/>
            <person name="Kondo J."/>
            <person name="Ihara Y."/>
            <person name="Saitoh T."/>
        </authorList>
    </citation>
    <scope>NUCLEOTIDE SEQUENCE [MRNA] (ISOFORM 1)</scope>
    <scope>PROTEIN SEQUENCE OF 61-95</scope>
    <source>
        <tissue>Brain</tissue>
    </source>
</reference>
<reference key="2">
    <citation type="journal article" date="1995" name="Genomics">
        <title>The NACP/synuclein gene: chromosomal assignment and screening for alterations in Alzheimer disease.</title>
        <authorList>
            <person name="Campion D."/>
            <person name="Martin C."/>
            <person name="Heilig R."/>
            <person name="Charbonnier F."/>
            <person name="Moreau V."/>
            <person name="Flaman J.-M."/>
            <person name="Petit J.-L."/>
            <person name="Hannequin D."/>
            <person name="Brice A."/>
            <person name="Frebourg T."/>
        </authorList>
    </citation>
    <scope>NUCLEOTIDE SEQUENCE [MRNA] (ISOFORMS 1; 2-4 AND 2-5)</scope>
</reference>
<reference key="3">
    <citation type="journal article" date="1994" name="Biochem. Biophys. Res. Commun.">
        <title>Tissue-dependent alternative splicing of mRNA for NACP, the precursor of non-A beta component of Alzheimer's disease amyloid.</title>
        <authorList>
            <person name="Ueda K."/>
            <person name="Saitoh T."/>
            <person name="Mori H."/>
        </authorList>
    </citation>
    <scope>NUCLEOTIDE SEQUENCE [MRNA] (ISOFORM 2-4)</scope>
    <source>
        <tissue>Brain</tissue>
    </source>
</reference>
<reference key="4">
    <citation type="submission" date="1996-01" db="EMBL/GenBank/DDBJ databases">
        <authorList>
            <person name="Xia Y."/>
            <person name="Silva R.D."/>
            <person name="Chen X.H."/>
            <person name="Saitoh T."/>
        </authorList>
    </citation>
    <scope>NUCLEOTIDE SEQUENCE [GENOMIC DNA]</scope>
</reference>
<reference key="5">
    <citation type="journal article" date="2001" name="Genome Res.">
        <title>Human and mouse alpha-synuclein genes: comparative genomic sequence analysis and identification of a novel gene regulatory element.</title>
        <authorList>
            <person name="Touchman J.W."/>
            <person name="Dehejia A."/>
            <person name="Chiba-Falek O."/>
            <person name="Cabin D.E."/>
            <person name="Schwartz J.R."/>
            <person name="Orrison B.M."/>
            <person name="Polymeropoulos M.H."/>
            <person name="Nussbaum R.L."/>
        </authorList>
    </citation>
    <scope>NUCLEOTIDE SEQUENCE [GENOMIC DNA] (ISOFORMS 1 AND 2-4)</scope>
</reference>
<reference key="6">
    <citation type="submission" date="2001-07" db="EMBL/GenBank/DDBJ databases">
        <authorList>
            <person name="Hu X."/>
            <person name="Xu Y."/>
            <person name="Peng X."/>
            <person name="Yuan J."/>
            <person name="Qiang B."/>
        </authorList>
    </citation>
    <scope>NUCLEOTIDE SEQUENCE [MRNA] (ISOFORM 1)</scope>
</reference>
<reference key="7">
    <citation type="journal article" date="2004" name="Nat. Genet.">
        <title>Complete sequencing and characterization of 21,243 full-length human cDNAs.</title>
        <authorList>
            <person name="Ota T."/>
            <person name="Suzuki Y."/>
            <person name="Nishikawa T."/>
            <person name="Otsuki T."/>
            <person name="Sugiyama T."/>
            <person name="Irie R."/>
            <person name="Wakamatsu A."/>
            <person name="Hayashi K."/>
            <person name="Sato H."/>
            <person name="Nagai K."/>
            <person name="Kimura K."/>
            <person name="Makita H."/>
            <person name="Sekine M."/>
            <person name="Obayashi M."/>
            <person name="Nishi T."/>
            <person name="Shibahara T."/>
            <person name="Tanaka T."/>
            <person name="Ishii S."/>
            <person name="Yamamoto J."/>
            <person name="Saito K."/>
            <person name="Kawai Y."/>
            <person name="Isono Y."/>
            <person name="Nakamura Y."/>
            <person name="Nagahari K."/>
            <person name="Murakami K."/>
            <person name="Yasuda T."/>
            <person name="Iwayanagi T."/>
            <person name="Wagatsuma M."/>
            <person name="Shiratori A."/>
            <person name="Sudo H."/>
            <person name="Hosoiri T."/>
            <person name="Kaku Y."/>
            <person name="Kodaira H."/>
            <person name="Kondo H."/>
            <person name="Sugawara M."/>
            <person name="Takahashi M."/>
            <person name="Kanda K."/>
            <person name="Yokoi T."/>
            <person name="Furuya T."/>
            <person name="Kikkawa E."/>
            <person name="Omura Y."/>
            <person name="Abe K."/>
            <person name="Kamihara K."/>
            <person name="Katsuta N."/>
            <person name="Sato K."/>
            <person name="Tanikawa M."/>
            <person name="Yamazaki M."/>
            <person name="Ninomiya K."/>
            <person name="Ishibashi T."/>
            <person name="Yamashita H."/>
            <person name="Murakawa K."/>
            <person name="Fujimori K."/>
            <person name="Tanai H."/>
            <person name="Kimata M."/>
            <person name="Watanabe M."/>
            <person name="Hiraoka S."/>
            <person name="Chiba Y."/>
            <person name="Ishida S."/>
            <person name="Ono Y."/>
            <person name="Takiguchi S."/>
            <person name="Watanabe S."/>
            <person name="Yosida M."/>
            <person name="Hotuta T."/>
            <person name="Kusano J."/>
            <person name="Kanehori K."/>
            <person name="Takahashi-Fujii A."/>
            <person name="Hara H."/>
            <person name="Tanase T.-O."/>
            <person name="Nomura Y."/>
            <person name="Togiya S."/>
            <person name="Komai F."/>
            <person name="Hara R."/>
            <person name="Takeuchi K."/>
            <person name="Arita M."/>
            <person name="Imose N."/>
            <person name="Musashino K."/>
            <person name="Yuuki H."/>
            <person name="Oshima A."/>
            <person name="Sasaki N."/>
            <person name="Aotsuka S."/>
            <person name="Yoshikawa Y."/>
            <person name="Matsunawa H."/>
            <person name="Ichihara T."/>
            <person name="Shiohata N."/>
            <person name="Sano S."/>
            <person name="Moriya S."/>
            <person name="Momiyama H."/>
            <person name="Satoh N."/>
            <person name="Takami S."/>
            <person name="Terashima Y."/>
            <person name="Suzuki O."/>
            <person name="Nakagawa S."/>
            <person name="Senoh A."/>
            <person name="Mizoguchi H."/>
            <person name="Goto Y."/>
            <person name="Shimizu F."/>
            <person name="Wakebe H."/>
            <person name="Hishigaki H."/>
            <person name="Watanabe T."/>
            <person name="Sugiyama A."/>
            <person name="Takemoto M."/>
            <person name="Kawakami B."/>
            <person name="Yamazaki M."/>
            <person name="Watanabe K."/>
            <person name="Kumagai A."/>
            <person name="Itakura S."/>
            <person name="Fukuzumi Y."/>
            <person name="Fujimori Y."/>
            <person name="Komiyama M."/>
            <person name="Tashiro H."/>
            <person name="Tanigami A."/>
            <person name="Fujiwara T."/>
            <person name="Ono T."/>
            <person name="Yamada K."/>
            <person name="Fujii Y."/>
            <person name="Ozaki K."/>
            <person name="Hirao M."/>
            <person name="Ohmori Y."/>
            <person name="Kawabata A."/>
            <person name="Hikiji T."/>
            <person name="Kobatake N."/>
            <person name="Inagaki H."/>
            <person name="Ikema Y."/>
            <person name="Okamoto S."/>
            <person name="Okitani R."/>
            <person name="Kawakami T."/>
            <person name="Noguchi S."/>
            <person name="Itoh T."/>
            <person name="Shigeta K."/>
            <person name="Senba T."/>
            <person name="Matsumura K."/>
            <person name="Nakajima Y."/>
            <person name="Mizuno T."/>
            <person name="Morinaga M."/>
            <person name="Sasaki M."/>
            <person name="Togashi T."/>
            <person name="Oyama M."/>
            <person name="Hata H."/>
            <person name="Watanabe M."/>
            <person name="Komatsu T."/>
            <person name="Mizushima-Sugano J."/>
            <person name="Satoh T."/>
            <person name="Shirai Y."/>
            <person name="Takahashi Y."/>
            <person name="Nakagawa K."/>
            <person name="Okumura K."/>
            <person name="Nagase T."/>
            <person name="Nomura N."/>
            <person name="Kikuchi H."/>
            <person name="Masuho Y."/>
            <person name="Yamashita R."/>
            <person name="Nakai K."/>
            <person name="Yada T."/>
            <person name="Nakamura Y."/>
            <person name="Ohara O."/>
            <person name="Isogai T."/>
            <person name="Sugano S."/>
        </authorList>
    </citation>
    <scope>NUCLEOTIDE SEQUENCE [LARGE SCALE MRNA] (ISOFORM 1)</scope>
    <source>
        <tissue>Thalamus</tissue>
    </source>
</reference>
<reference key="8">
    <citation type="submission" date="2004-06" db="EMBL/GenBank/DDBJ databases">
        <title>Cloning of human full open reading frames in Gateway(TM) system entry vector (pDONR201).</title>
        <authorList>
            <person name="Ebert L."/>
            <person name="Schick M."/>
            <person name="Neubert P."/>
            <person name="Schatten R."/>
            <person name="Henze S."/>
            <person name="Korn B."/>
        </authorList>
    </citation>
    <scope>NUCLEOTIDE SEQUENCE [LARGE SCALE MRNA] (ISOFORM 1)</scope>
</reference>
<reference key="9">
    <citation type="submission" date="2005-06" db="EMBL/GenBank/DDBJ databases">
        <authorList>
            <consortium name="NIEHS SNPs program"/>
        </authorList>
    </citation>
    <scope>NUCLEOTIDE SEQUENCE [GENOMIC DNA]</scope>
</reference>
<reference key="10">
    <citation type="submission" date="2005-07" db="EMBL/GenBank/DDBJ databases">
        <authorList>
            <person name="Mural R.J."/>
            <person name="Istrail S."/>
            <person name="Sutton G.G."/>
            <person name="Florea L."/>
            <person name="Halpern A.L."/>
            <person name="Mobarry C.M."/>
            <person name="Lippert R."/>
            <person name="Walenz B."/>
            <person name="Shatkay H."/>
            <person name="Dew I."/>
            <person name="Miller J.R."/>
            <person name="Flanigan M.J."/>
            <person name="Edwards N.J."/>
            <person name="Bolanos R."/>
            <person name="Fasulo D."/>
            <person name="Halldorsson B.V."/>
            <person name="Hannenhalli S."/>
            <person name="Turner R."/>
            <person name="Yooseph S."/>
            <person name="Lu F."/>
            <person name="Nusskern D.R."/>
            <person name="Shue B.C."/>
            <person name="Zheng X.H."/>
            <person name="Zhong F."/>
            <person name="Delcher A.L."/>
            <person name="Huson D.H."/>
            <person name="Kravitz S.A."/>
            <person name="Mouchard L."/>
            <person name="Reinert K."/>
            <person name="Remington K.A."/>
            <person name="Clark A.G."/>
            <person name="Waterman M.S."/>
            <person name="Eichler E.E."/>
            <person name="Adams M.D."/>
            <person name="Hunkapiller M.W."/>
            <person name="Myers E.W."/>
            <person name="Venter J.C."/>
        </authorList>
    </citation>
    <scope>NUCLEOTIDE SEQUENCE [LARGE SCALE GENOMIC DNA]</scope>
</reference>
<reference key="11">
    <citation type="journal article" date="2004" name="Genome Res.">
        <title>The status, quality, and expansion of the NIH full-length cDNA project: the Mammalian Gene Collection (MGC).</title>
        <authorList>
            <consortium name="The MGC Project Team"/>
        </authorList>
    </citation>
    <scope>NUCLEOTIDE SEQUENCE [LARGE SCALE MRNA] (ISOFORM 1)</scope>
    <source>
        <tissue>Uterus</tissue>
    </source>
</reference>
<reference key="12">
    <citation type="submission" date="2008-12" db="UniProtKB">
        <authorList>
            <person name="Lubec G."/>
            <person name="Chen W.-Q."/>
            <person name="Sun Y."/>
        </authorList>
    </citation>
    <scope>PROTEIN SEQUENCE OF 59-96</scope>
    <scope>IDENTIFICATION BY MASS SPECTROMETRY</scope>
    <source>
        <tissue>Fetal brain cortex</tissue>
    </source>
</reference>
<reference key="13">
    <citation type="journal article" date="1994" name="FEBS Lett.">
        <title>Identification of two distinct synucleins from human brain.</title>
        <authorList>
            <person name="Jakes R."/>
            <person name="Spillantini M.G."/>
            <person name="Goedert M."/>
        </authorList>
    </citation>
    <scope>TISSUE SPECIFICITY</scope>
</reference>
<reference key="14">
    <citation type="journal article" date="2000" name="J. Biol. Chem.">
        <title>Constitutive phosphorylation of the Parkinson's disease associated alpha-synuclein.</title>
        <authorList>
            <person name="Okochi M."/>
            <person name="Walter J."/>
            <person name="Koyama A."/>
            <person name="Nakajo S."/>
            <person name="Baba M."/>
            <person name="Iwatsubo T."/>
            <person name="Meijer L."/>
            <person name="Kahle P.J."/>
            <person name="Haass C."/>
        </authorList>
    </citation>
    <scope>PHOSPHORYLATION AT SER-87 AND SER-129 BY CK1 AND CK2</scope>
</reference>
<reference key="15">
    <citation type="journal article" date="2000" name="J. Biol. Chem.">
        <title>Synucleins are a novel class of substrates for G protein-coupled receptor kinases.</title>
        <authorList>
            <person name="Pronin A.N."/>
            <person name="Morris A.J."/>
            <person name="Surguchov A."/>
            <person name="Benovic J.L."/>
        </authorList>
    </citation>
    <scope>PHOSPHORYLATION BY G-PROTEIN COUPLED RECEPTOR KINASE</scope>
</reference>
<reference key="16">
    <citation type="journal article" date="2001" name="Biochem. Biophys. Res. Commun.">
        <title>Activated Fyn phosphorylates alpha-synuclein at tyrosine residue 125.</title>
        <authorList>
            <person name="Nakamura T."/>
            <person name="Yamashita H."/>
            <person name="Takahashi T."/>
            <person name="Nakamura S."/>
        </authorList>
    </citation>
    <scope>PHOSPHORYLATION AT TYR-125 BY FYN</scope>
</reference>
<reference key="17">
    <citation type="journal article" date="2002" name="J. Biol. Chem.">
        <title>Alpha-synuclein interacts with phospholipase D isozymes and inhibits pervanadate-induced phospholipase D activation in human embryonic kidney-293 cells.</title>
        <authorList>
            <person name="Ahn B.H."/>
            <person name="Rhim H."/>
            <person name="Kim S.Y."/>
            <person name="Sung Y.M."/>
            <person name="Lee M.Y."/>
            <person name="Choi J.Y."/>
            <person name="Wolozin B."/>
            <person name="Chang J.S."/>
            <person name="Lee Y.H."/>
            <person name="Kwon T.K."/>
            <person name="Chung K.C."/>
            <person name="Yoon S.H."/>
            <person name="Hahn S.J."/>
            <person name="Kim M.S."/>
            <person name="Jo Y.H."/>
            <person name="Min do S."/>
        </authorList>
    </citation>
    <scope>INTERACTION WITH PHOSPHOLIPASE D</scope>
</reference>
<reference key="18">
    <citation type="journal article" date="2002" name="Nat. Cell Biol.">
        <title>alpha-Synuclein is phosphorylated in synucleinopathy lesions.</title>
        <authorList>
            <person name="Fujiwara H."/>
            <person name="Hasegawa M."/>
            <person name="Dohmae N."/>
            <person name="Kawashima A."/>
            <person name="Masliah E."/>
            <person name="Goldberg M.S."/>
            <person name="Shen J."/>
            <person name="Takio K."/>
            <person name="Iwatsubo T."/>
        </authorList>
    </citation>
    <scope>PHOSPHORYLATION AT SER-129</scope>
</reference>
<reference key="19">
    <citation type="journal article" date="2003" name="Biochemistry">
        <title>Nuclear localization of alpha-synuclein and its interaction with histones.</title>
        <authorList>
            <person name="Goers J."/>
            <person name="Manning-Bog A.B."/>
            <person name="McCormack A.L."/>
            <person name="Millett I.S."/>
            <person name="Doniach S."/>
            <person name="Di Monte D.A."/>
            <person name="Uversky V.N."/>
            <person name="Fink A.L."/>
        </authorList>
    </citation>
    <scope>INTERACTION WITH HISTONES</scope>
    <scope>SUBCELLULAR LOCATION</scope>
</reference>
<reference key="20">
    <citation type="journal article" date="2003" name="Biochemistry">
        <title>Role of alpha-synuclein carboxy-terminus on fibril formation in vitro.</title>
        <authorList>
            <person name="Murray I.V."/>
            <person name="Giasson B.I."/>
            <person name="Quinn S.M."/>
            <person name="Koppaka V."/>
            <person name="Axelsen P.H."/>
            <person name="Ischiropoulos H."/>
            <person name="Trojanowski J.Q."/>
            <person name="Lee V.M."/>
        </authorList>
    </citation>
    <scope>ROLE OF THE C-TERMINUS IN FIBRILLOGENESIS</scope>
</reference>
<reference key="21">
    <citation type="journal article" date="2003" name="Curr. Mol. Med.">
        <title>Recent advances on alpha-synuclein cell biology: functions and dysfunctions.</title>
        <authorList>
            <person name="Alves da Costa C."/>
        </authorList>
    </citation>
    <scope>REVIEW</scope>
</reference>
<reference key="22">
    <citation type="journal article" date="2003" name="J. Biol. Chem.">
        <title>Identification and characterization of a novel Pyk2/related adhesion focal tyrosine kinase-associated protein that inhibits alpha-synuclein phosphorylation.</title>
        <authorList>
            <person name="Takahashi T."/>
            <person name="Yamashita H."/>
            <person name="Nagano Y."/>
            <person name="Nakamura T."/>
            <person name="Ohmori H."/>
            <person name="Avraham H."/>
            <person name="Avraham S."/>
            <person name="Yasuda M."/>
            <person name="Matsumoto M."/>
        </authorList>
    </citation>
    <scope>MUTAGENESIS OF TYR-39; TYR-125; TYR-133 AND TYR-136</scope>
    <scope>CHARACTERIZATION OF VARIANT THR-53</scope>
    <scope>PHOSPHORYLATION AT TYR-125</scope>
</reference>
<reference key="23">
    <citation type="journal article" date="2004" name="Neurobiol. Dis.">
        <title>Abnormal alpha-synuclein interactions with rab3a and rabphilin in diffuse Lewy body disease.</title>
        <authorList>
            <person name="Dalfo E."/>
            <person name="Barrachina M."/>
            <person name="Rosa J.L."/>
            <person name="Ambrosio S."/>
            <person name="Ferrer I."/>
        </authorList>
    </citation>
    <scope>INTERACTION WITH RPH3A AND RAB3A</scope>
</reference>
<reference key="24">
    <citation type="journal article" date="2004" name="J. Neurosci.">
        <title>Lipid rafts mediate the synaptic localization of alpha-synuclein.</title>
        <authorList>
            <person name="Fortin D.L."/>
            <person name="Troyer M.D."/>
            <person name="Nakamura K."/>
            <person name="Kubo S."/>
            <person name="Anthony M.D."/>
            <person name="Edwards R.H."/>
        </authorList>
    </citation>
    <scope>SUBCELLULAR LOCATION</scope>
</reference>
<reference key="25">
    <citation type="journal article" date="2009" name="Biochemistry">
        <title>Characterization of hydrophobic residue requirements for alpha-synuclein fibrillization.</title>
        <authorList>
            <person name="Waxman E.A."/>
            <person name="Mazzulli J.R."/>
            <person name="Giasson B.I."/>
        </authorList>
    </citation>
    <scope>FIBRILS FORMATION</scope>
    <scope>DOMAIN NAC</scope>
    <scope>MUTAGENESIS OF 67-GLY--VAL-71; 71-VAL--VAL-82; 76-ALA-VAL-77; VAL-77; ALA-78 AND 85-ALA--PHE-94</scope>
</reference>
<reference key="26">
    <citation type="journal article" date="2010" name="Science">
        <title>Alpha-synuclein promotes SNARE-complex assembly in vivo and in vitro.</title>
        <authorList>
            <person name="Burre J."/>
            <person name="Sharma M."/>
            <person name="Tsetsenis T."/>
            <person name="Buchman V."/>
            <person name="Etherton M.R."/>
            <person name="Suedhof T.C."/>
        </authorList>
    </citation>
    <scope>FUNCTION</scope>
    <scope>INTERACTION WITH VAMP2 AND SNAP25</scope>
</reference>
<reference key="27">
    <citation type="journal article" date="2011" name="BMC Syst. Biol.">
        <title>Initial characterization of the human central proteome.</title>
        <authorList>
            <person name="Burkard T.R."/>
            <person name="Planyavsky M."/>
            <person name="Kaupe I."/>
            <person name="Breitwieser F.P."/>
            <person name="Buerckstuemmer T."/>
            <person name="Bennett K.L."/>
            <person name="Superti-Furga G."/>
            <person name="Colinge J."/>
        </authorList>
    </citation>
    <scope>IDENTIFICATION BY MASS SPECTROMETRY [LARGE SCALE ANALYSIS]</scope>
</reference>
<reference key="28">
    <citation type="journal article" date="2011" name="Biochemistry">
        <title>Coordination features and affinity of the Cu(2)+ site in the alpha-synuclein protein of Parkinson's disease.</title>
        <authorList>
            <person name="Dudzik C.G."/>
            <person name="Walter E.D."/>
            <person name="Millhauser G.L."/>
        </authorList>
    </citation>
    <scope>COPPER-BINDING</scope>
    <scope>MUTAGENESIS OF ASP-2 AND HIS-50</scope>
</reference>
<reference key="29">
    <citation type="journal article" date="2011" name="Nature">
        <title>alpha-Synuclein occurs physiologically as a helically folded tetramer that resists aggregation.</title>
        <authorList>
            <person name="Bartels T."/>
            <person name="Choi J.G."/>
            <person name="Selkoe D.J."/>
        </authorList>
    </citation>
    <scope>SUBUNIT</scope>
</reference>
<reference key="30">
    <citation type="journal article" date="2012" name="Cell Rep.">
        <title>SERF protein is a direct modifier of amyloid fiber assembly.</title>
        <authorList>
            <person name="Falsone S.F."/>
            <person name="Meyer N.H."/>
            <person name="Schrank E."/>
            <person name="Leitinger G."/>
            <person name="Pham C.L."/>
            <person name="Fodero-Tavoletti M.T."/>
            <person name="Holmberg M."/>
            <person name="Dulle M."/>
            <person name="Scicluna B."/>
            <person name="Gesslbauer B."/>
            <person name="Rueckert H.M."/>
            <person name="Wagner G.E."/>
            <person name="Merle D.A."/>
            <person name="Nollen E.A."/>
            <person name="Kungl A.J."/>
            <person name="Hill A.F."/>
            <person name="Cappai R."/>
            <person name="Zangger K."/>
        </authorList>
    </citation>
    <scope>INTERACTION WITH SERF1A</scope>
</reference>
<reference key="31">
    <citation type="journal article" date="2012" name="Protein Sci.">
        <title>N-Terminal acetylation is critical for forming alpha-helical oligomer of alpha-synuclein.</title>
        <authorList>
            <person name="Trexler A.J."/>
            <person name="Rhoades E."/>
        </authorList>
    </citation>
    <scope>ACETYLATION AT MET-1</scope>
</reference>
<reference key="32">
    <citation type="journal article" date="2015" name="J. Biol. Chem.">
        <title>Dopamine Transporter Activity Is Modulated by alpha-Synuclein.</title>
        <authorList>
            <person name="Butler B."/>
            <person name="Saha K."/>
            <person name="Rana T."/>
            <person name="Becker J.P."/>
            <person name="Sambo D."/>
            <person name="Davari P."/>
            <person name="Goodwin J.S."/>
            <person name="Khoshbouei H."/>
        </authorList>
    </citation>
    <scope>FUNCTION</scope>
    <scope>SUBCELLULAR LOCATION</scope>
    <scope>INTERACTION WITH SLC6A3</scope>
</reference>
<reference key="33">
    <citation type="journal article" date="2016" name="J. Cell Biol.">
        <title>Munc18-1 is a molecular chaperone for alpha-synuclein, controlling its self-replicating aggregation.</title>
        <authorList>
            <person name="Chai Y.J."/>
            <person name="Sierecki E."/>
            <person name="Tomatis V.M."/>
            <person name="Gormal R.S."/>
            <person name="Giles N."/>
            <person name="Morrow I.C."/>
            <person name="Xia D."/>
            <person name="Goetz J."/>
            <person name="Parton R.G."/>
            <person name="Collins B.M."/>
            <person name="Gambin Y."/>
            <person name="Meunier F.A."/>
        </authorList>
    </citation>
    <scope>INTERACTION WITH STXBP1</scope>
    <scope>SUBCELLULAR LOCATION</scope>
</reference>
<reference key="34">
    <citation type="journal article" date="2017" name="Nat. Neurosci.">
        <title>alpha-Synuclein promotes dilation of the exocytotic fusion pore.</title>
        <authorList>
            <person name="Logan T."/>
            <person name="Bendor J."/>
            <person name="Toupin C."/>
            <person name="Thorn K."/>
            <person name="Edwards R.H."/>
        </authorList>
    </citation>
    <scope>FUNCTION</scope>
</reference>
<reference key="35">
    <citation type="journal article" date="2018" name="J. Cell Sci.">
        <title>Soluble alpha-synuclein facilitates priming and fusion by releasing Ca2+ from the thapsigargin-sensitive Ca2+ pool in PC12 cells.</title>
        <authorList>
            <person name="Huang C.C."/>
            <person name="Chiu T.Y."/>
            <person name="Lee T.Y."/>
            <person name="Hsieh H.J."/>
            <person name="Lin C.C."/>
            <person name="Kao L.S."/>
        </authorList>
    </citation>
    <scope>FUNCTION</scope>
</reference>
<reference key="36">
    <citation type="journal article" date="2021" name="PLoS Genet.">
        <title>DEAD-box RNA helicase Dbp4/DDX10 is an enhancer of alpha-synuclein toxicity and oligomerization.</title>
        <authorList>
            <person name="Popova B."/>
            <person name="Wang D."/>
            <person name="Paetz C."/>
            <person name="Akkermann D."/>
            <person name="Lazaro D.F."/>
            <person name="Galka D."/>
            <person name="Kolog Gulko M."/>
            <person name="Bohnsack M.T."/>
            <person name="Moebius W."/>
            <person name="Bohnsack K.E."/>
            <person name="Outeiro T.F."/>
            <person name="Braus G.H."/>
        </authorList>
    </citation>
    <scope>INTERACTION WITH DDX10</scope>
    <scope>SUBCELLULAR LOCATION</scope>
</reference>
<reference key="37">
    <citation type="journal article" date="2019" name="J. Mol. Biol.">
        <title>Increased Aggregation Tendency of Alpha-Synuclein in a Fully Disordered Protein Complex.</title>
        <authorList>
            <person name="Merle D.A."/>
            <person name="Witternigg A."/>
            <person name="Tam-Amersdorfer C."/>
            <person name="Hartlmueller C."/>
            <person name="Spreitzer E."/>
            <person name="Schrank E."/>
            <person name="Wagner-Lichtenegger S."/>
            <person name="Werzer O."/>
            <person name="Zangger K."/>
            <person name="Kungl A.J."/>
            <person name="Madl T."/>
            <person name="Meyer N.H."/>
            <person name="Falsone S.F."/>
        </authorList>
    </citation>
    <scope>INTERACTION WITH SERF1A</scope>
    <scope>SUBCELLULAR LOCATION</scope>
</reference>
<reference key="38">
    <citation type="journal article" date="2005" name="J. Biol. Chem.">
        <title>Structure and dynamics of micelle-bound human alpha-synuclein.</title>
        <authorList>
            <person name="Ulmer T.S."/>
            <person name="Bax A."/>
            <person name="Cole N.B."/>
            <person name="Nussbaum R.L."/>
        </authorList>
    </citation>
    <scope>STRUCTURE BY NMR IN COMPLEX WITH DETERGENT MICELLES</scope>
</reference>
<reference key="39">
    <citation type="journal article" date="2010" name="FASEB J.">
        <title>Interaction with synphilin-1 promotes inclusion formation of alpha-synuclein: mechanistic insights and pathological implication.</title>
        <authorList>
            <person name="Xie Y.Y."/>
            <person name="Zhou C.J."/>
            <person name="Zhou Z.R."/>
            <person name="Hong J."/>
            <person name="Che M.X."/>
            <person name="Fu Q.S."/>
            <person name="Song A.X."/>
            <person name="Lin D.H."/>
            <person name="Hu H.Y."/>
        </authorList>
    </citation>
    <scope>STRUCTURE BY NMR OF 1-12</scope>
    <scope>INTERACTION WITH SNCAIP</scope>
    <scope>SUBCELLULAR LOCATION</scope>
</reference>
<reference key="40">
    <citation type="journal article" date="2011" name="Protein Sci.">
        <title>Structures of segments of alpha-synuclein fused to maltose-binding protein suggest intermediate states during amyloid formation.</title>
        <authorList>
            <person name="Zhao M."/>
            <person name="Cascio D."/>
            <person name="Sawaya M.R."/>
            <person name="Eisenberg D."/>
        </authorList>
    </citation>
    <scope>X-RAY CRYSTALLOGRAPHY (1.30 ANGSTROMS) OF 1-57 AND 58-79</scope>
</reference>
<reference key="41">
    <citation type="journal article" date="2013" name="Biochemistry">
        <title>NMR structure of calmodulin complexed to an N-terminally acetylated alpha-synuclein peptide.</title>
        <authorList>
            <person name="Gruschus J.M."/>
            <person name="Yap T.L."/>
            <person name="Pistolesi S."/>
            <person name="Maltsev A.S."/>
            <person name="Lee J.C."/>
        </authorList>
    </citation>
    <scope>STRUCTURE BY NMR OF 1-19</scope>
    <scope>INTERACTION WITH CALM1</scope>
</reference>
<reference key="42">
    <citation type="journal article" date="2015" name="Nature">
        <title>Structure of the toxic core of alpha-synuclein from invisible crystals.</title>
        <authorList>
            <person name="Rodriguez J.A."/>
            <person name="Ivanova M.I."/>
            <person name="Sawaya M.R."/>
            <person name="Cascio D."/>
            <person name="Reyes F.E."/>
            <person name="Shi D."/>
            <person name="Sangwan S."/>
            <person name="Guenther E.L."/>
            <person name="Johnson L.M."/>
            <person name="Zhang M."/>
            <person name="Jiang L."/>
            <person name="Arbing M.A."/>
            <person name="Nannenga B.L."/>
            <person name="Hattne J."/>
            <person name="Whitelegge J."/>
            <person name="Brewster A.S."/>
            <person name="Messerschmidt M."/>
            <person name="Boutet S."/>
            <person name="Sauter N.K."/>
            <person name="Gonen T."/>
            <person name="Eisenberg D.S."/>
        </authorList>
    </citation>
    <scope>STRUCTURE BY ELECTRON MICROSCOPY (1.41 ANGSTROMS) OF 47-56 AND 68-78</scope>
</reference>
<reference key="43">
    <citation type="journal article" date="2016" name="Nat. Struct. Mol. Biol.">
        <title>Solid-state NMR structure of a pathogenic fibril of full-length human alpha-synuclein.</title>
        <authorList>
            <person name="Tuttle M.D."/>
            <person name="Comellas G."/>
            <person name="Nieuwkoop A.J."/>
            <person name="Covell D.J."/>
            <person name="Berthold D.A."/>
            <person name="Kloepper K.D."/>
            <person name="Courtney J.M."/>
            <person name="Kim J.K."/>
            <person name="Barclay A.M."/>
            <person name="Kendall A."/>
            <person name="Wan W."/>
            <person name="Stubbs G."/>
            <person name="Schwieters C.D."/>
            <person name="Lee V.M."/>
            <person name="George J.M."/>
            <person name="Rienstra C.M."/>
        </authorList>
    </citation>
    <scope>STRUCTURE BY NMR</scope>
</reference>
<reference key="44">
    <citation type="journal article" date="2018" name="Nat. Commun.">
        <title>Cryo-EM of full-length alpha-synuclein reveals fibril polymorphs with a common structural kernel.</title>
        <authorList>
            <person name="Li B."/>
            <person name="Ge P."/>
            <person name="Murray K.A."/>
            <person name="Sheth P."/>
            <person name="Zhang M."/>
            <person name="Nair G."/>
            <person name="Sawaya M.R."/>
            <person name="Shin W.S."/>
            <person name="Boyer D.R."/>
            <person name="Ye S."/>
            <person name="Eisenberg D.S."/>
            <person name="Zhou Z.H."/>
            <person name="Jiang L."/>
        </authorList>
    </citation>
    <scope>STRUCTURE BY ELECTRON MICROSCOPY (3.50 ANGSTROMS)</scope>
</reference>
<reference key="45">
    <citation type="journal article" date="1997" name="Science">
        <title>Mutation in the alpha-synuclein gene identified in families with Parkinson's disease.</title>
        <authorList>
            <person name="Polymeropoulos M.H."/>
            <person name="Lavedan C."/>
            <person name="Leroy E."/>
            <person name="Ide S.E."/>
            <person name="Dehejia A."/>
            <person name="Dutra A."/>
            <person name="Pike B."/>
            <person name="Root H."/>
            <person name="Rubenstein J."/>
            <person name="Boyer R."/>
            <person name="Stenroos E.S."/>
            <person name="Chandrasekharappa S."/>
            <person name="Athanassiadou A."/>
            <person name="Papapetropoulos T."/>
            <person name="Johnson W.G."/>
            <person name="Lazzarini A.M."/>
            <person name="Duvoisin R.C."/>
            <person name="di Iorio G."/>
            <person name="Golbe L.I."/>
            <person name="Nussbaum R.L."/>
        </authorList>
    </citation>
    <scope>VARIANT PARK1 THR-53</scope>
</reference>
<reference key="46">
    <citation type="journal article" date="1998" name="Nat. Genet.">
        <title>Ala30Pro mutation in the gene encoding alpha-synuclein in Parkinson's disease.</title>
        <authorList>
            <person name="Krueger R."/>
            <person name="Kuhn W."/>
            <person name="Mueller T."/>
            <person name="Woitalla D."/>
            <person name="Graeber M."/>
            <person name="Koesel S."/>
            <person name="Przuntek H."/>
            <person name="Epplen J.T."/>
            <person name="Schoels L."/>
            <person name="Riess O."/>
        </authorList>
    </citation>
    <scope>VARIANT PARK1 PRO-30</scope>
</reference>
<reference key="47">
    <citation type="journal article" date="2004" name="Ann. Neurol.">
        <title>The new mutation, E46K, of alpha-synuclein causes Parkinson and Lewy body dementia.</title>
        <authorList>
            <person name="Zarranz J.J."/>
            <person name="Alegre J."/>
            <person name="Gomez-Esteban J.C."/>
            <person name="Lezcano E."/>
            <person name="Ros R."/>
            <person name="Ampuero I."/>
            <person name="Vidal L."/>
            <person name="Hoenicka J."/>
            <person name="Rodriguez O."/>
            <person name="Atares B."/>
            <person name="Llorens V."/>
            <person name="Gomez Tortosa E."/>
            <person name="del Ser T."/>
            <person name="Munoz D.G."/>
            <person name="de Yebenes J.G."/>
        </authorList>
    </citation>
    <scope>VARIANT PARK1/DLB LYS-46</scope>
</reference>
<reference key="48">
    <citation type="journal article" date="2004" name="FEBS Lett.">
        <title>Mutation E46K increases phospholipid binding and assembly into filaments of human alpha-synuclein.</title>
        <authorList>
            <person name="Choi W."/>
            <person name="Zibaee S."/>
            <person name="Jakes R."/>
            <person name="Serpell L.C."/>
            <person name="Davletov B."/>
            <person name="Crowther R.A."/>
            <person name="Goedert M."/>
        </authorList>
    </citation>
    <scope>CHARACTERIZATION OF VARIANT LYS-46</scope>
</reference>
<reference key="49">
    <citation type="journal article" date="2013" name="Mov. Disord.">
        <title>Alpha-synuclein p.H50Q, a novel pathogenic mutation for Parkinson's disease.</title>
        <authorList>
            <person name="Appel-Cresswell S."/>
            <person name="Vilarino-Guell C."/>
            <person name="Encarnacion M."/>
            <person name="Sherman H."/>
            <person name="Yu I."/>
            <person name="Shah B."/>
            <person name="Weir D."/>
            <person name="Thompson C."/>
            <person name="Szu-Tu C."/>
            <person name="Trinh J."/>
            <person name="Aasly J.O."/>
            <person name="Rajput A."/>
            <person name="Rajput A.H."/>
            <person name="Jon Stoessl A."/>
            <person name="Farrer M.J."/>
        </authorList>
    </citation>
    <scope>VARIANT PARK1 GLN-50</scope>
</reference>
<reference key="50">
    <citation type="journal article" date="2013" name="Neurology">
        <title>A novel alpha-synuclein missense mutation in Parkinson disease.</title>
        <authorList>
            <person name="Proukakis C."/>
            <person name="Dudzik C.G."/>
            <person name="Brier T."/>
            <person name="MacKay D.S."/>
            <person name="Cooper J.M."/>
            <person name="Millhauser G.L."/>
            <person name="Houlden H."/>
            <person name="Schapira A.H."/>
        </authorList>
    </citation>
    <scope>VARIANT PARK1 GLN-50</scope>
    <scope>CHARACTERIZATION OF VARIANT PARK1 GLN-50</scope>
</reference>
<reference key="51">
    <citation type="journal article" date="2014" name="J. Biol. Chem.">
        <title>The H50Q mutation enhances alpha-synuclein aggregation, secretion, and toxicity.</title>
        <authorList>
            <person name="Khalaf O."/>
            <person name="Fauvet B."/>
            <person name="Oueslati A."/>
            <person name="Dikiy I."/>
            <person name="Mahul-Mellier A.L."/>
            <person name="Ruggeri F.S."/>
            <person name="Mbefo M.K."/>
            <person name="Vercruysse F."/>
            <person name="Dietler G."/>
            <person name="Lee S.J."/>
            <person name="Eliezer D."/>
            <person name="Lashuel H.A."/>
        </authorList>
    </citation>
    <scope>CHARACTERIZATION OF VARIANT PARK1 GLN-50</scope>
    <scope>SUBCELLULAR LOCATION</scope>
    <scope>SUBUNIT</scope>
    <scope>PHOSPHORYLATION AT SER-129</scope>
</reference>
<reference key="52">
    <citation type="journal article" date="2015" name="ACS Chem. Neurosci.">
        <title>Molecular determinants of alpha-synuclein mutants' oligomerization and membrane interactions.</title>
        <authorList>
            <person name="Tsigelny I.F."/>
            <person name="Sharikov Y."/>
            <person name="Kouznetsova V.L."/>
            <person name="Greenberg J.P."/>
            <person name="Wrasidlo W."/>
            <person name="Overk C."/>
            <person name="Gonzalez T."/>
            <person name="Trejo M."/>
            <person name="Spencer B."/>
            <person name="Kosberg K."/>
            <person name="Masliah E."/>
        </authorList>
    </citation>
    <scope>CHARACTERIZATION OF VARIANTS PARK1 PRO-30; LYS-46; GLN-50 AND THR-53</scope>
    <scope>MUTAGENESIS OF GLU-35 AND GLU-57</scope>
    <scope>SUBCELLULAR LOCATION</scope>
    <scope>SUBUNIT</scope>
</reference>
<gene>
    <name type="primary">SNCA</name>
    <name type="synonym">NACP</name>
    <name type="synonym">PARK1</name>
</gene>
<dbReference type="EMBL" id="L08850">
    <property type="protein sequence ID" value="AAA16117.1"/>
    <property type="molecule type" value="mRNA"/>
</dbReference>
<dbReference type="EMBL" id="L36674">
    <property type="protein sequence ID" value="AAA98493.1"/>
    <property type="molecule type" value="mRNA"/>
</dbReference>
<dbReference type="EMBL" id="L36675">
    <property type="protein sequence ID" value="AAA98487.1"/>
    <property type="molecule type" value="mRNA"/>
</dbReference>
<dbReference type="EMBL" id="D31839">
    <property type="protein sequence ID" value="BAA06625.1"/>
    <property type="molecule type" value="mRNA"/>
</dbReference>
<dbReference type="EMBL" id="U46901">
    <property type="protein sequence ID" value="AAC02114.1"/>
    <property type="molecule type" value="Genomic_DNA"/>
</dbReference>
<dbReference type="EMBL" id="U46897">
    <property type="protein sequence ID" value="AAC02114.1"/>
    <property type="status" value="JOINED"/>
    <property type="molecule type" value="Genomic_DNA"/>
</dbReference>
<dbReference type="EMBL" id="U46898">
    <property type="protein sequence ID" value="AAC02114.1"/>
    <property type="status" value="JOINED"/>
    <property type="molecule type" value="Genomic_DNA"/>
</dbReference>
<dbReference type="EMBL" id="U46899">
    <property type="protein sequence ID" value="AAC02114.1"/>
    <property type="status" value="JOINED"/>
    <property type="molecule type" value="Genomic_DNA"/>
</dbReference>
<dbReference type="EMBL" id="AF163864">
    <property type="protein sequence ID" value="AAG30302.1"/>
    <property type="molecule type" value="Genomic_DNA"/>
</dbReference>
<dbReference type="EMBL" id="AF163864">
    <property type="protein sequence ID" value="AAG30303.1"/>
    <property type="molecule type" value="Genomic_DNA"/>
</dbReference>
<dbReference type="EMBL" id="AY049786">
    <property type="protein sequence ID" value="AAL15443.1"/>
    <property type="molecule type" value="mRNA"/>
</dbReference>
<dbReference type="EMBL" id="AK290169">
    <property type="protein sequence ID" value="BAF82858.1"/>
    <property type="molecule type" value="mRNA"/>
</dbReference>
<dbReference type="EMBL" id="CR457058">
    <property type="protein sequence ID" value="CAG33339.1"/>
    <property type="molecule type" value="mRNA"/>
</dbReference>
<dbReference type="EMBL" id="DQ088379">
    <property type="protein sequence ID" value="AAY88735.1"/>
    <property type="molecule type" value="Genomic_DNA"/>
</dbReference>
<dbReference type="EMBL" id="CH471057">
    <property type="protein sequence ID" value="EAX06036.1"/>
    <property type="molecule type" value="Genomic_DNA"/>
</dbReference>
<dbReference type="EMBL" id="BC013293">
    <property type="protein sequence ID" value="AAH13293.1"/>
    <property type="molecule type" value="mRNA"/>
</dbReference>
<dbReference type="EMBL" id="BC108275">
    <property type="protein sequence ID" value="AAI08276.1"/>
    <property type="molecule type" value="mRNA"/>
</dbReference>
<dbReference type="CCDS" id="CCDS3634.1">
    <molecule id="P37840-1"/>
</dbReference>
<dbReference type="CCDS" id="CCDS43252.1">
    <molecule id="P37840-2"/>
</dbReference>
<dbReference type="PIR" id="A49669">
    <property type="entry name" value="A49669"/>
</dbReference>
<dbReference type="PIR" id="S56746">
    <property type="entry name" value="S56746"/>
</dbReference>
<dbReference type="RefSeq" id="NP_000336.1">
    <molecule id="P37840-1"/>
    <property type="nucleotide sequence ID" value="NM_000345.4"/>
</dbReference>
<dbReference type="RefSeq" id="NP_001139526.1">
    <molecule id="P37840-1"/>
    <property type="nucleotide sequence ID" value="NM_001146054.2"/>
</dbReference>
<dbReference type="RefSeq" id="NP_001139527.1">
    <molecule id="P37840-1"/>
    <property type="nucleotide sequence ID" value="NM_001146055.2"/>
</dbReference>
<dbReference type="RefSeq" id="NP_001362214.1">
    <molecule id="P37840-1"/>
    <property type="nucleotide sequence ID" value="NM_001375285.1"/>
</dbReference>
<dbReference type="RefSeq" id="NP_001362215.1">
    <molecule id="P37840-1"/>
    <property type="nucleotide sequence ID" value="NM_001375286.1"/>
</dbReference>
<dbReference type="RefSeq" id="NP_001362216.1">
    <molecule id="P37840-1"/>
    <property type="nucleotide sequence ID" value="NM_001375287.1"/>
</dbReference>
<dbReference type="RefSeq" id="NP_001362217.1">
    <molecule id="P37840-1"/>
    <property type="nucleotide sequence ID" value="NM_001375288.1"/>
</dbReference>
<dbReference type="RefSeq" id="NP_009292.1">
    <molecule id="P37840-2"/>
    <property type="nucleotide sequence ID" value="NM_007308.3"/>
</dbReference>
<dbReference type="RefSeq" id="XP_011530510.1">
    <property type="nucleotide sequence ID" value="XM_011532208.2"/>
</dbReference>
<dbReference type="RefSeq" id="XP_016864051.1">
    <property type="nucleotide sequence ID" value="XM_017008562.1"/>
</dbReference>
<dbReference type="RefSeq" id="XP_016864052.1">
    <property type="nucleotide sequence ID" value="XM_017008563.1"/>
</dbReference>
<dbReference type="PDB" id="1XQ8">
    <property type="method" value="NMR"/>
    <property type="chains" value="A=1-140"/>
</dbReference>
<dbReference type="PDB" id="2JN5">
    <property type="method" value="NMR"/>
    <property type="chains" value="A=1-12"/>
</dbReference>
<dbReference type="PDB" id="2KKW">
    <property type="method" value="NMR"/>
    <property type="chains" value="A=1-140"/>
</dbReference>
<dbReference type="PDB" id="2M55">
    <property type="method" value="NMR"/>
    <property type="chains" value="B=1-19"/>
</dbReference>
<dbReference type="PDB" id="2N0A">
    <property type="method" value="NMR"/>
    <property type="chains" value="A/B/C/D/E/F/G/H/I/J=1-140"/>
</dbReference>
<dbReference type="PDB" id="2X6M">
    <property type="method" value="X-ray"/>
    <property type="resolution" value="1.62 A"/>
    <property type="chains" value="B=132-140"/>
</dbReference>
<dbReference type="PDB" id="3Q25">
    <property type="method" value="X-ray"/>
    <property type="resolution" value="1.90 A"/>
    <property type="chains" value="A=1-19"/>
</dbReference>
<dbReference type="PDB" id="3Q26">
    <property type="method" value="X-ray"/>
    <property type="resolution" value="1.54 A"/>
    <property type="chains" value="A=10-42"/>
</dbReference>
<dbReference type="PDB" id="3Q27">
    <property type="method" value="X-ray"/>
    <property type="resolution" value="1.30 A"/>
    <property type="chains" value="A=32-57"/>
</dbReference>
<dbReference type="PDB" id="3Q28">
    <property type="method" value="X-ray"/>
    <property type="resolution" value="1.60 A"/>
    <property type="chains" value="A=58-79"/>
</dbReference>
<dbReference type="PDB" id="3Q29">
    <property type="method" value="X-ray"/>
    <property type="resolution" value="2.30 A"/>
    <property type="chains" value="A/C=1-19"/>
</dbReference>
<dbReference type="PDB" id="4BXL">
    <property type="method" value="NMR"/>
    <property type="chains" value="C=35-56"/>
</dbReference>
<dbReference type="PDB" id="4R0U">
    <property type="method" value="X-ray"/>
    <property type="resolution" value="1.38 A"/>
    <property type="chains" value="A=72-78"/>
</dbReference>
<dbReference type="PDB" id="4R0W">
    <property type="method" value="X-ray"/>
    <property type="resolution" value="1.50 A"/>
    <property type="chains" value="A=70-76"/>
</dbReference>
<dbReference type="PDB" id="4RIK">
    <property type="method" value="X-ray"/>
    <property type="resolution" value="1.85 A"/>
    <property type="chains" value="A=69-77"/>
</dbReference>
<dbReference type="PDB" id="4RIL">
    <property type="method" value="EM"/>
    <property type="resolution" value="1.43 A"/>
    <property type="chains" value="A=68-78"/>
</dbReference>
<dbReference type="PDB" id="4ZNN">
    <property type="method" value="EM"/>
    <property type="resolution" value="1.41 A"/>
    <property type="chains" value="A=47-56"/>
</dbReference>
<dbReference type="PDB" id="5CRW">
    <property type="method" value="X-ray"/>
    <property type="resolution" value="1.60 A"/>
    <property type="chains" value="B=31-41"/>
</dbReference>
<dbReference type="PDB" id="6A6B">
    <property type="method" value="EM"/>
    <property type="resolution" value="3.07 A"/>
    <property type="chains" value="A/B/C/D/E/F/G/H/I/J/K/L=37-99"/>
</dbReference>
<dbReference type="PDB" id="6CT7">
    <property type="method" value="X-ray"/>
    <property type="resolution" value="1.90 A"/>
    <property type="chains" value="S/T=1-10"/>
</dbReference>
<dbReference type="PDB" id="6CU7">
    <property type="method" value="EM"/>
    <property type="resolution" value="3.50 A"/>
    <property type="chains" value="A/B/C/D/E/F/G/H/I/J=1-140"/>
</dbReference>
<dbReference type="PDB" id="6CU8">
    <property type="method" value="EM"/>
    <property type="resolution" value="3.60 A"/>
    <property type="chains" value="A/B/C/D/E/F/G/H/I/J=1-140"/>
</dbReference>
<dbReference type="PDB" id="6H6B">
    <property type="method" value="EM"/>
    <property type="resolution" value="3.40 A"/>
    <property type="chains" value="A/B/C/D/E/F/G/H/I/J=1-121"/>
</dbReference>
<dbReference type="PDB" id="6I42">
    <property type="method" value="X-ray"/>
    <property type="resolution" value="1.38 A"/>
    <property type="chains" value="B=48-60"/>
</dbReference>
<dbReference type="PDB" id="6L1T">
    <property type="method" value="EM"/>
    <property type="resolution" value="3.22 A"/>
    <property type="chains" value="A/B/C/D/E/F/G/H/I/J=1-140"/>
</dbReference>
<dbReference type="PDB" id="6L1U">
    <property type="method" value="EM"/>
    <property type="resolution" value="3.37 A"/>
    <property type="chains" value="A/B/C/D/E/F/G/H/I/J/K/L/M/N/O=1-140"/>
</dbReference>
<dbReference type="PDB" id="6L4S">
    <property type="method" value="EM"/>
    <property type="resolution" value="3.37 A"/>
    <property type="chains" value="A/B/C/D/E/F=45-99"/>
</dbReference>
<dbReference type="PDB" id="6LRQ">
    <property type="method" value="EM"/>
    <property type="resolution" value="3.49 A"/>
    <property type="chains" value="A/B/C/D/E/F=1-140"/>
</dbReference>
<dbReference type="PDB" id="6OSJ">
    <property type="method" value="EM"/>
    <property type="resolution" value="2.80 A"/>
    <property type="chains" value="A/B/C/D/E/F/G/H/I/J=1-140"/>
</dbReference>
<dbReference type="PDB" id="6OSL">
    <property type="method" value="EM"/>
    <property type="resolution" value="3.00 A"/>
    <property type="chains" value="A/B/C/D/E/F/G/H/I/J=1-140"/>
</dbReference>
<dbReference type="PDB" id="6OSM">
    <property type="method" value="EM"/>
    <property type="resolution" value="3.40 A"/>
    <property type="chains" value="A/B/C/D/E/F/G/H/I/J=1-140"/>
</dbReference>
<dbReference type="PDB" id="6PEO">
    <property type="method" value="EM"/>
    <property type="resolution" value="3.30 A"/>
    <property type="chains" value="A/B/C/D/E=1-140"/>
</dbReference>
<dbReference type="PDB" id="6PES">
    <property type="method" value="EM"/>
    <property type="resolution" value="3.60 A"/>
    <property type="chains" value="A/B/C/D/E/V/W/X/Y/Z=1-140"/>
</dbReference>
<dbReference type="PDB" id="6RT0">
    <property type="method" value="EM"/>
    <property type="resolution" value="3.10 A"/>
    <property type="chains" value="A/B/C/D/E/F/G/H/I/J=1-140"/>
</dbReference>
<dbReference type="PDB" id="6RTB">
    <property type="method" value="EM"/>
    <property type="resolution" value="3.46 A"/>
    <property type="chains" value="A/B/C/D/E/F/G/H/I/J=1-140"/>
</dbReference>
<dbReference type="PDB" id="6SST">
    <property type="method" value="EM"/>
    <property type="resolution" value="3.40 A"/>
    <property type="chains" value="A/B/C/D/E/F/G/H/I/J=1-140"/>
</dbReference>
<dbReference type="PDB" id="6SSX">
    <property type="method" value="EM"/>
    <property type="resolution" value="2.98 A"/>
    <property type="chains" value="A/B/C/D/E/F/G/H/I/J=1-140"/>
</dbReference>
<dbReference type="PDB" id="6UFR">
    <property type="method" value="EM"/>
    <property type="resolution" value="2.50 A"/>
    <property type="chains" value="A/B/C/D/E/F/G/H/I/J=1-140"/>
</dbReference>
<dbReference type="PDB" id="6XYO">
    <property type="method" value="EM"/>
    <property type="resolution" value="2.60 A"/>
    <property type="chains" value="A/B/C/D/E/F/G/H/I/J=1-140"/>
</dbReference>
<dbReference type="PDB" id="6XYP">
    <property type="method" value="EM"/>
    <property type="resolution" value="3.29 A"/>
    <property type="chains" value="A/B/C/D/E/F/G/H/I/J=1-140"/>
</dbReference>
<dbReference type="PDB" id="6XYQ">
    <property type="method" value="EM"/>
    <property type="resolution" value="3.09 A"/>
    <property type="chains" value="A/B/C/D/E/F/G/H/I/J=1-140"/>
</dbReference>
<dbReference type="PDB" id="7C1D">
    <property type="method" value="EM"/>
    <property type="resolution" value="3.80 A"/>
    <property type="chains" value="A/B/C/D/E/F=1-140"/>
</dbReference>
<dbReference type="PDB" id="7E0F">
    <property type="method" value="EM"/>
    <property type="resolution" value="3.02 A"/>
    <property type="chains" value="A/B/C/D/E/F=1-140"/>
</dbReference>
<dbReference type="PDB" id="7L7H">
    <property type="method" value="EM"/>
    <property type="resolution" value="4.00 A"/>
    <property type="chains" value="A/B/C/D/E/F/G/H=1-140"/>
</dbReference>
<dbReference type="PDB" id="7LC9">
    <property type="method" value="EM"/>
    <property type="resolution" value="3.20 A"/>
    <property type="chains" value="A/B/C/D/E/F/G/H/I/J/K/L=41-140"/>
</dbReference>
<dbReference type="PDB" id="7NCA">
    <property type="method" value="EM"/>
    <property type="resolution" value="3.47 A"/>
    <property type="chains" value="A/B/C/D/E/F/G/H/I/J/K/L=1-140"/>
</dbReference>
<dbReference type="PDB" id="7NCG">
    <property type="method" value="EM"/>
    <property type="resolution" value="3.43 A"/>
    <property type="chains" value="A/B/C/D/E/F/G/H/I/J/K/L=1-140"/>
</dbReference>
<dbReference type="PDB" id="7NCH">
    <property type="method" value="EM"/>
    <property type="resolution" value="3.84 A"/>
    <property type="chains" value="A/B/C/D/E/F/G/H/I/J/K/L=1-140"/>
</dbReference>
<dbReference type="PDB" id="7NCI">
    <property type="method" value="EM"/>
    <property type="resolution" value="3.55 A"/>
    <property type="chains" value="A/B/C/D/E/F/G/H/I/J/K/L=1-140"/>
</dbReference>
<dbReference type="PDB" id="7NCJ">
    <property type="method" value="EM"/>
    <property type="resolution" value="4.23 A"/>
    <property type="chains" value="A/B/C/D/E/F/G/H/I/J/K/L=1-140"/>
</dbReference>
<dbReference type="PDB" id="7NCK">
    <property type="method" value="EM"/>
    <property type="resolution" value="3.18 A"/>
    <property type="chains" value="A/B/C/D/E/F=1-140"/>
</dbReference>
<dbReference type="PDB" id="7OZG">
    <property type="method" value="EM"/>
    <property type="resolution" value="3.30 A"/>
    <property type="chains" value="A/B/C/D/E/F/G/H/I/J=1-140"/>
</dbReference>
<dbReference type="PDB" id="7OZH">
    <property type="method" value="EM"/>
    <property type="resolution" value="3.02 A"/>
    <property type="chains" value="A/B/C/D/E/F/G/H/I/J=1-140"/>
</dbReference>
<dbReference type="PDB" id="7STX">
    <property type="method" value="EM"/>
    <property type="resolution" value="3.14 A"/>
    <property type="chains" value="C=1-5"/>
</dbReference>
<dbReference type="PDB" id="7UAK">
    <property type="method" value="EM"/>
    <property type="resolution" value="3.38 A"/>
    <property type="chains" value="A/B/C/D/E/F=1-140"/>
</dbReference>
<dbReference type="PDB" id="7V47">
    <property type="method" value="EM"/>
    <property type="resolution" value="2.80 A"/>
    <property type="chains" value="A/B/C/D/E/F=1-140"/>
</dbReference>
<dbReference type="PDB" id="7V48">
    <property type="method" value="EM"/>
    <property type="resolution" value="3.00 A"/>
    <property type="chains" value="A/B/C/D/E/F=1-140"/>
</dbReference>
<dbReference type="PDB" id="7V49">
    <property type="method" value="EM"/>
    <property type="resolution" value="3.40 A"/>
    <property type="chains" value="A/B/C=1-140"/>
</dbReference>
<dbReference type="PDB" id="7V4A">
    <property type="method" value="EM"/>
    <property type="resolution" value="3.20 A"/>
    <property type="chains" value="A/B/C=1-140"/>
</dbReference>
<dbReference type="PDB" id="7V4B">
    <property type="method" value="EM"/>
    <property type="resolution" value="3.10 A"/>
    <property type="chains" value="A/B/C/D/E/F=1-140"/>
</dbReference>
<dbReference type="PDB" id="7V4C">
    <property type="method" value="EM"/>
    <property type="resolution" value="3.30 A"/>
    <property type="chains" value="A/B/F=1-140"/>
</dbReference>
<dbReference type="PDB" id="7V4D">
    <property type="method" value="EM"/>
    <property type="resolution" value="3.50 A"/>
    <property type="chains" value="A/B/C/D/E/F=1-140"/>
</dbReference>
<dbReference type="PDB" id="7WMM">
    <property type="method" value="EM"/>
    <property type="resolution" value="2.60 A"/>
    <property type="chains" value="A/B/C/D/E/F=1-140"/>
</dbReference>
<dbReference type="PDB" id="7WNZ">
    <property type="method" value="EM"/>
    <property type="resolution" value="3.40 A"/>
    <property type="chains" value="A/B/C/D/E/F/G/H/I/J=36-100"/>
</dbReference>
<dbReference type="PDB" id="7WO0">
    <property type="method" value="EM"/>
    <property type="resolution" value="2.70 A"/>
    <property type="chains" value="A/B/C/D/E/F/G/O/P/Q/R/S/T/U=35-99"/>
</dbReference>
<dbReference type="PDB" id="7XJX">
    <property type="method" value="EM"/>
    <property type="resolution" value="2.70 A"/>
    <property type="chains" value="A/B/C/D/E/F=1-140"/>
</dbReference>
<dbReference type="PDB" id="7XO0">
    <property type="method" value="EM"/>
    <property type="resolution" value="3.00 A"/>
    <property type="chains" value="A/B/C/D/E/F=1-140"/>
</dbReference>
<dbReference type="PDB" id="7XO1">
    <property type="method" value="EM"/>
    <property type="resolution" value="3.00 A"/>
    <property type="chains" value="A/B/C/D/E/F=1-140"/>
</dbReference>
<dbReference type="PDB" id="7XO2">
    <property type="method" value="EM"/>
    <property type="resolution" value="3.00 A"/>
    <property type="chains" value="A/B/C/D/E/I=1-140"/>
</dbReference>
<dbReference type="PDB" id="7XO3">
    <property type="method" value="EM"/>
    <property type="resolution" value="2.60 A"/>
    <property type="chains" value="A/B/C/D/E/F=1-140"/>
</dbReference>
<dbReference type="PDB" id="7YK2">
    <property type="method" value="EM"/>
    <property type="resolution" value="2.80 A"/>
    <property type="chains" value="A/B/C/D/E/F=1-140"/>
</dbReference>
<dbReference type="PDB" id="7YK8">
    <property type="method" value="EM"/>
    <property type="resolution" value="2.80 A"/>
    <property type="chains" value="A/B/C/D/E/F/G/H/I/J/K/L=1-140"/>
</dbReference>
<dbReference type="PDB" id="7YNF">
    <property type="method" value="EM"/>
    <property type="resolution" value="2.50 A"/>
    <property type="chains" value="A/B/C/D/E/F=1-140"/>
</dbReference>
<dbReference type="PDB" id="7YNG">
    <property type="method" value="EM"/>
    <property type="resolution" value="3.10 A"/>
    <property type="chains" value="A/B/C/D/E/F=1-140"/>
</dbReference>
<dbReference type="PDB" id="7YNL">
    <property type="method" value="EM"/>
    <property type="resolution" value="2.60 A"/>
    <property type="chains" value="A/B/C/D/E/F/G/H=1-140"/>
</dbReference>
<dbReference type="PDB" id="7YNM">
    <property type="method" value="EM"/>
    <property type="resolution" value="2.90 A"/>
    <property type="chains" value="A/B/C/D/G/H/I/J=1-140"/>
</dbReference>
<dbReference type="PDB" id="7YNN">
    <property type="method" value="EM"/>
    <property type="resolution" value="2.90 A"/>
    <property type="chains" value="A/B/C/D/G/H/I/J=1-140"/>
</dbReference>
<dbReference type="PDB" id="7YNO">
    <property type="method" value="EM"/>
    <property type="resolution" value="2.80 A"/>
    <property type="chains" value="A/B/C/D/E/F=1-140"/>
</dbReference>
<dbReference type="PDB" id="7YNP">
    <property type="method" value="EM"/>
    <property type="resolution" value="2.80 A"/>
    <property type="chains" value="A/B/C/D/E/F=1-140"/>
</dbReference>
<dbReference type="PDB" id="7YNQ">
    <property type="method" value="EM"/>
    <property type="resolution" value="2.80 A"/>
    <property type="chains" value="A/B/C/D/E/F=1-140"/>
</dbReference>
<dbReference type="PDB" id="7YNR">
    <property type="method" value="EM"/>
    <property type="resolution" value="2.90 A"/>
    <property type="chains" value="A/B/C/D/E/F=1-140"/>
</dbReference>
<dbReference type="PDB" id="7YNS">
    <property type="method" value="EM"/>
    <property type="resolution" value="3.00 A"/>
    <property type="chains" value="A/B/C/D/E/F=1-140"/>
</dbReference>
<dbReference type="PDB" id="7YNT">
    <property type="method" value="EM"/>
    <property type="resolution" value="3.10 A"/>
    <property type="chains" value="A/B/C/D/E/F=1-140"/>
</dbReference>
<dbReference type="PDB" id="8A4L">
    <property type="method" value="EM"/>
    <property type="resolution" value="2.68 A"/>
    <property type="chains" value="A/B/C/D/E/F/G/H/I/J/K/L/M/O/P=1-140"/>
</dbReference>
<dbReference type="PDB" id="8A9L">
    <property type="method" value="EM"/>
    <property type="resolution" value="2.16 A"/>
    <property type="chains" value="A=1-140"/>
</dbReference>
<dbReference type="PDB" id="8ADS">
    <property type="method" value="EM"/>
    <property type="resolution" value="3.05 A"/>
    <property type="chains" value="A/B/C/D/E/F/G/H/I/J=1-140"/>
</dbReference>
<dbReference type="PDB" id="8ADU">
    <property type="method" value="EM"/>
    <property type="resolution" value="3.24 A"/>
    <property type="chains" value="A/B/C/D/E=1-140"/>
</dbReference>
<dbReference type="PDB" id="8ADV">
    <property type="method" value="EM"/>
    <property type="resolution" value="2.98 A"/>
    <property type="chains" value="A/B/C/D/E/F/G/H/I/J=1-140"/>
</dbReference>
<dbReference type="PDB" id="8ADW">
    <property type="method" value="EM"/>
    <property type="resolution" value="2.95 A"/>
    <property type="chains" value="A/B/C/D/E/F/G/H/I/J=1-140"/>
</dbReference>
<dbReference type="PDB" id="8AEX">
    <property type="method" value="EM"/>
    <property type="resolution" value="2.76 A"/>
    <property type="chains" value="A/B/C/D/E/F/G/H/I/J=1-140"/>
</dbReference>
<dbReference type="PDB" id="8B9V">
    <property type="method" value="X-ray"/>
    <property type="resolution" value="2.16 A"/>
    <property type="chains" value="A=110-119"/>
</dbReference>
<dbReference type="PDB" id="8BQV">
    <property type="method" value="EM"/>
    <property type="resolution" value="2.00 A"/>
    <property type="chains" value="A=1-140"/>
</dbReference>
<dbReference type="PDB" id="8BQW">
    <property type="method" value="EM"/>
    <property type="resolution" value="2.30 A"/>
    <property type="chains" value="A/C=1-140"/>
</dbReference>
<dbReference type="PDB" id="8CE7">
    <property type="method" value="EM"/>
    <property type="resolution" value="2.70 A"/>
    <property type="chains" value="A/C=1-140"/>
</dbReference>
<dbReference type="PDB" id="8CEB">
    <property type="method" value="EM"/>
    <property type="resolution" value="2.70 A"/>
    <property type="chains" value="A/C=1-140"/>
</dbReference>
<dbReference type="PDB" id="8CYR">
    <property type="method" value="EM"/>
    <property type="resolution" value="4.20 A"/>
    <property type="chains" value="A/B/C/D/E/F/I/J/K/L/M/N=1-140"/>
</dbReference>
<dbReference type="PDB" id="8CYS">
    <property type="method" value="EM"/>
    <property type="resolution" value="3.10 A"/>
    <property type="chains" value="A/B/C/D/E/F/G/I/J/K/L/M/N/O=1-140"/>
</dbReference>
<dbReference type="PDB" id="8CYT">
    <property type="method" value="EM"/>
    <property type="resolution" value="3.00 A"/>
    <property type="chains" value="A/B/C/D/E/F/G/I/J/K/L/M/N/O=1-140"/>
</dbReference>
<dbReference type="PDB" id="8CYV">
    <property type="method" value="EM"/>
    <property type="resolution" value="3.50 A"/>
    <property type="chains" value="A/B/C/D/E/F/I/J/K/L/M/N=1-140"/>
</dbReference>
<dbReference type="PDB" id="8CYW">
    <property type="method" value="EM"/>
    <property type="resolution" value="3.10 A"/>
    <property type="chains" value="A/B/C/D/E/F/I/J/K/L/M/N=1-140"/>
</dbReference>
<dbReference type="PDB" id="8CYX">
    <property type="method" value="EM"/>
    <property type="resolution" value="3.00 A"/>
    <property type="chains" value="A/B/C/D/E/I/J/K/L/M=1-140"/>
</dbReference>
<dbReference type="PDB" id="8CYY">
    <property type="method" value="EM"/>
    <property type="resolution" value="3.10 A"/>
    <property type="chains" value="A/B/C/D/E/F/I/J/K/L/M/N=1-140"/>
</dbReference>
<dbReference type="PDB" id="8CZ0">
    <property type="method" value="EM"/>
    <property type="resolution" value="2.90 A"/>
    <property type="chains" value="A/B/C/D/E/F/I/J/K/L/M/N=1-140"/>
</dbReference>
<dbReference type="PDB" id="8CZ1">
    <property type="method" value="EM"/>
    <property type="resolution" value="3.00 A"/>
    <property type="chains" value="A/B/C/D/E/F/I/J/K/L/M/N=1-140"/>
</dbReference>
<dbReference type="PDB" id="8CZ2">
    <property type="method" value="EM"/>
    <property type="resolution" value="3.00 A"/>
    <property type="chains" value="A/B/C/D/E/F/I/J/K/L/M/N=1-140"/>
</dbReference>
<dbReference type="PDB" id="8CZ3">
    <property type="method" value="EM"/>
    <property type="resolution" value="3.20 A"/>
    <property type="chains" value="A/B/C/D/E/F/I/J/K/L/M/N=1-140"/>
</dbReference>
<dbReference type="PDB" id="8CZ6">
    <property type="method" value="EM"/>
    <property type="resolution" value="3.20 A"/>
    <property type="chains" value="A/B/C/D/E/F/G/I/J/K/L/M/N/O=1-140"/>
</dbReference>
<dbReference type="PDB" id="8FPT">
    <property type="method" value="NMR"/>
    <property type="chains" value="A/B/C/D/E/F/G/H/I/J=1-140"/>
</dbReference>
<dbReference type="PDB" id="8G0L">
    <property type="method" value="EM"/>
    <property type="resolution" value="3.39 A"/>
    <property type="chains" value="C=1-5"/>
</dbReference>
<dbReference type="PDB" id="8GF7">
    <property type="method" value="EM"/>
    <property type="resolution" value="4.80 A"/>
    <property type="chains" value="A/B/C/D/E/F=7-96"/>
</dbReference>
<dbReference type="PDB" id="8H03">
    <property type="method" value="EM"/>
    <property type="resolution" value="2.80 A"/>
    <property type="chains" value="A/B/C/D/E/F=1-140"/>
</dbReference>
<dbReference type="PDB" id="8H04">
    <property type="method" value="EM"/>
    <property type="resolution" value="3.00 A"/>
    <property type="chains" value="A/B/C/D/E/F=1-140"/>
</dbReference>
<dbReference type="PDB" id="8H05">
    <property type="method" value="EM"/>
    <property type="resolution" value="3.40 A"/>
    <property type="chains" value="A/B/C=1-140"/>
</dbReference>
<dbReference type="PDB" id="8HZB">
    <property type="method" value="EM"/>
    <property type="resolution" value="3.20 A"/>
    <property type="chains" value="A/B/C/D/E/F=1-140"/>
</dbReference>
<dbReference type="PDB" id="8HZC">
    <property type="method" value="EM"/>
    <property type="resolution" value="3.20 A"/>
    <property type="chains" value="A/B/C/D/E/F=1-140"/>
</dbReference>
<dbReference type="PDB" id="8HZS">
    <property type="method" value="EM"/>
    <property type="resolution" value="3.30 A"/>
    <property type="chains" value="A/B/C/D/E/F=1-140"/>
</dbReference>
<dbReference type="PDB" id="8JEX">
    <property type="method" value="EM"/>
    <property type="resolution" value="3.10 A"/>
    <property type="chains" value="A/B/G/H/K/P=1-140"/>
</dbReference>
<dbReference type="PDB" id="8JEY">
    <property type="method" value="EM"/>
    <property type="resolution" value="2.60 A"/>
    <property type="chains" value="A/B/C/D/E/F=1-140"/>
</dbReference>
<dbReference type="PDB" id="8JJV">
    <property type="method" value="X-ray"/>
    <property type="resolution" value="1.23 A"/>
    <property type="chains" value="B=43-56"/>
</dbReference>
<dbReference type="PDB" id="8JLY">
    <property type="method" value="X-ray"/>
    <property type="resolution" value="1.29 A"/>
    <property type="chains" value="B=43-56"/>
</dbReference>
<dbReference type="PDB" id="8OG0">
    <property type="method" value="X-ray"/>
    <property type="resolution" value="1.71 A"/>
    <property type="chains" value="P=136-140"/>
</dbReference>
<dbReference type="PDB" id="8OJR">
    <property type="method" value="NMR"/>
    <property type="chains" value="A=1-25"/>
</dbReference>
<dbReference type="PDB" id="8OL8">
    <property type="method" value="NMR"/>
    <property type="chains" value="A=2-12"/>
</dbReference>
<dbReference type="PDB" id="8OQI">
    <property type="method" value="EM"/>
    <property type="resolution" value="3.10 A"/>
    <property type="chains" value="A/B/C/D/E/F/G/H/I/J=1-140"/>
</dbReference>
<dbReference type="PDB" id="8PIX">
    <property type="method" value="EM"/>
    <property type="resolution" value="3.41 A"/>
    <property type="chains" value="A/B/C/D/E/F/G/H/I/J=1-140"/>
</dbReference>
<dbReference type="PDB" id="8PJO">
    <property type="method" value="EM"/>
    <property type="resolution" value="2.31 A"/>
    <property type="chains" value="A/B/C/D/E/F/G/H/I/J=1-140"/>
</dbReference>
<dbReference type="PDB" id="8PK2">
    <property type="method" value="EM"/>
    <property type="resolution" value="3.26 A"/>
    <property type="chains" value="A/B/C/D/E=1-140"/>
</dbReference>
<dbReference type="PDB" id="8PK4">
    <property type="method" value="EM"/>
    <property type="resolution" value="3.30 A"/>
    <property type="chains" value="A/B/C/D/E/F/G/H/I/J=1-140"/>
</dbReference>
<dbReference type="PDB" id="8QPZ">
    <property type="method" value="EM"/>
    <property type="resolution" value="2.50 A"/>
    <property type="chains" value="A/B/C/D/E/F/G/H/I/J/K/L=8-140"/>
</dbReference>
<dbReference type="PDB" id="8RI9">
    <property type="method" value="EM"/>
    <property type="resolution" value="3.30 A"/>
    <property type="chains" value="A/B/C/D/E=1-140"/>
</dbReference>
<dbReference type="PDB" id="8RQM">
    <property type="method" value="EM"/>
    <property type="resolution" value="3.20 A"/>
    <property type="chains" value="A/B/C/D/E/F=1-140"/>
</dbReference>
<dbReference type="PDB" id="8RRR">
    <property type="method" value="EM"/>
    <property type="resolution" value="3.40 A"/>
    <property type="chains" value="A/B/C/D/E/F/G/H/I/J=1-140"/>
</dbReference>
<dbReference type="PDB" id="8UKA">
    <property type="method" value="EM"/>
    <property type="resolution" value="3.90 A"/>
    <property type="chains" value="A/B/C/D/E/a/b/c/d/e=1-140"/>
</dbReference>
<dbReference type="PDB" id="8X7B">
    <property type="method" value="EM"/>
    <property type="resolution" value="3.00 A"/>
    <property type="chains" value="A/B/C/D/E/F/G/H/I/J=1-140"/>
</dbReference>
<dbReference type="PDB" id="8X7L">
    <property type="method" value="EM"/>
    <property type="resolution" value="3.40 A"/>
    <property type="chains" value="A/B/C/D/E/F/G/H/I/J=1-140"/>
</dbReference>
<dbReference type="PDB" id="8X7M">
    <property type="method" value="EM"/>
    <property type="resolution" value="3.00 A"/>
    <property type="chains" value="A/B/C/D/E/F/G/H/I/J=1-140"/>
</dbReference>
<dbReference type="PDB" id="8X7O">
    <property type="method" value="EM"/>
    <property type="resolution" value="3.50 A"/>
    <property type="chains" value="A/B/C/D/E/F/G/H/I/J=1-140"/>
</dbReference>
<dbReference type="PDB" id="8X7P">
    <property type="method" value="EM"/>
    <property type="resolution" value="2.70 A"/>
    <property type="chains" value="A/B/C/D/E/F/G/H/I/J=1-140"/>
</dbReference>
<dbReference type="PDB" id="8X7Q">
    <property type="method" value="EM"/>
    <property type="resolution" value="2.70 A"/>
    <property type="chains" value="A/B/C/D/E/F/G/H/I/J=1-140"/>
</dbReference>
<dbReference type="PDB" id="8X7R">
    <property type="method" value="EM"/>
    <property type="resolution" value="3.00 A"/>
    <property type="chains" value="A/B/C/D/E/F/G/H/I/J=1-140"/>
</dbReference>
<dbReference type="PDB" id="8XWD">
    <property type="method" value="EM"/>
    <property type="resolution" value="3.10 A"/>
    <property type="chains" value="A/B/C/D/E/F=1-140"/>
</dbReference>
<dbReference type="PDB" id="8Y2P">
    <property type="method" value="EM"/>
    <property type="resolution" value="3.20 A"/>
    <property type="chains" value="A/B/C/D/E/F=1-140"/>
</dbReference>
<dbReference type="PDB" id="8Y2Q">
    <property type="method" value="EM"/>
    <property type="resolution" value="2.80 A"/>
    <property type="chains" value="A/B/C/D/E/F=1-140"/>
</dbReference>
<dbReference type="PDB" id="8ZLI">
    <property type="method" value="EM"/>
    <property type="resolution" value="3.40 A"/>
    <property type="chains" value="A/B/C/D/E/F/I/J/K/L=45-99"/>
</dbReference>
<dbReference type="PDB" id="8ZLO">
    <property type="method" value="EM"/>
    <property type="resolution" value="3.10 A"/>
    <property type="chains" value="A/B/C/D/E/F/G/H/I/J/O/T=45-99"/>
</dbReference>
<dbReference type="PDB" id="8ZLP">
    <property type="method" value="EM"/>
    <property type="resolution" value="3.50 A"/>
    <property type="chains" value="A/B/C/F/G/H=1-98"/>
</dbReference>
<dbReference type="PDB" id="8ZMY">
    <property type="method" value="EM"/>
    <property type="resolution" value="2.90 A"/>
    <property type="chains" value="A/B/C/D/E/F/G/H/I/J/K/L=1-98"/>
</dbReference>
<dbReference type="PDB" id="8ZWH">
    <property type="method" value="EM"/>
    <property type="resolution" value="2.50 A"/>
    <property type="chains" value="A/B/C/D/E/F=1-140"/>
</dbReference>
<dbReference type="PDB" id="8ZWI">
    <property type="method" value="EM"/>
    <property type="resolution" value="3.00 A"/>
    <property type="chains" value="A/B/C/D/E/F=1-140"/>
</dbReference>
<dbReference type="PDB" id="8ZWJ">
    <property type="method" value="EM"/>
    <property type="resolution" value="3.10 A"/>
    <property type="chains" value="A/B/C/D/E/G=1-140"/>
</dbReference>
<dbReference type="PDB" id="8ZWK">
    <property type="method" value="EM"/>
    <property type="resolution" value="3.40 A"/>
    <property type="chains" value="A/B/C/D/E/F=1-140"/>
</dbReference>
<dbReference type="PDB" id="9CD9">
    <property type="method" value="EM"/>
    <property type="resolution" value="3.20 A"/>
    <property type="chains" value="E/F/G/H/I/J/K/L/M/N/O/P/Q/R/S/T/U/V/W/X/Y/Z=1-140"/>
</dbReference>
<dbReference type="PDB" id="9CDA">
    <property type="method" value="EM"/>
    <property type="resolution" value="3.30 A"/>
    <property type="chains" value="K/L/M/N/O/P/Q/R/S/T/U/V/W/X/Y/Z/a/b=1-140"/>
</dbReference>
<dbReference type="PDB" id="9CK3">
    <property type="method" value="EM"/>
    <property type="resolution" value="2.04 A"/>
    <property type="chains" value="A/B/C/D/E/F/G/H/I/J/K/L=1-140"/>
</dbReference>
<dbReference type="PDB" id="9CX6">
    <property type="method" value="EM"/>
    <property type="resolution" value="3.20 A"/>
    <property type="chains" value="G/H=1-140"/>
</dbReference>
<dbReference type="PDB" id="9D5C">
    <property type="method" value="EM"/>
    <property type="resolution" value="4.80 A"/>
    <property type="chains" value="A/B/C/F/G/H=1-96"/>
</dbReference>
<dbReference type="PDB" id="9EUU">
    <property type="method" value="EM"/>
    <property type="resolution" value="1.93 A"/>
    <property type="chains" value="A/B/C/D/E/F/G/H/I/J/K/L/M/N/O/P/Q/R=1-140"/>
</dbReference>
<dbReference type="PDB" id="9FYP">
    <property type="method" value="EM"/>
    <property type="resolution" value="2.23 A"/>
    <property type="chains" value="I/J/K/L/M/N/O/P/Q/R=1-140"/>
</dbReference>
<dbReference type="PDB" id="9HGR">
    <property type="method" value="EM"/>
    <property type="resolution" value="2.70 A"/>
    <property type="chains" value="A/B=1-140"/>
</dbReference>
<dbReference type="PDB" id="9HGS">
    <property type="method" value="EM"/>
    <property type="resolution" value="3.00 A"/>
    <property type="chains" value="C=1-140"/>
</dbReference>
<dbReference type="PDB" id="9HXA">
    <property type="method" value="EM"/>
    <property type="resolution" value="3.70 A"/>
    <property type="chains" value="A/C=1-140"/>
</dbReference>
<dbReference type="PDB" id="9IJP">
    <property type="method" value="EM"/>
    <property type="resolution" value="3.10 A"/>
    <property type="chains" value="B/C/E/G/I/L=1-140"/>
</dbReference>
<dbReference type="PDBsum" id="1XQ8"/>
<dbReference type="PDBsum" id="2JN5"/>
<dbReference type="PDBsum" id="2KKW"/>
<dbReference type="PDBsum" id="2M55"/>
<dbReference type="PDBsum" id="2N0A"/>
<dbReference type="PDBsum" id="2X6M"/>
<dbReference type="PDBsum" id="3Q25"/>
<dbReference type="PDBsum" id="3Q26"/>
<dbReference type="PDBsum" id="3Q27"/>
<dbReference type="PDBsum" id="3Q28"/>
<dbReference type="PDBsum" id="3Q29"/>
<dbReference type="PDBsum" id="4BXL"/>
<dbReference type="PDBsum" id="4R0U"/>
<dbReference type="PDBsum" id="4R0W"/>
<dbReference type="PDBsum" id="4RIK"/>
<dbReference type="PDBsum" id="4RIL"/>
<dbReference type="PDBsum" id="4ZNN"/>
<dbReference type="PDBsum" id="5CRW"/>
<dbReference type="PDBsum" id="6A6B"/>
<dbReference type="PDBsum" id="6CT7"/>
<dbReference type="PDBsum" id="6CU7"/>
<dbReference type="PDBsum" id="6CU8"/>
<dbReference type="PDBsum" id="6H6B"/>
<dbReference type="PDBsum" id="6I42"/>
<dbReference type="PDBsum" id="6L1T"/>
<dbReference type="PDBsum" id="6L1U"/>
<dbReference type="PDBsum" id="6L4S"/>
<dbReference type="PDBsum" id="6LRQ"/>
<dbReference type="PDBsum" id="6OSJ"/>
<dbReference type="PDBsum" id="6OSL"/>
<dbReference type="PDBsum" id="6OSM"/>
<dbReference type="PDBsum" id="6PEO"/>
<dbReference type="PDBsum" id="6PES"/>
<dbReference type="PDBsum" id="6RT0"/>
<dbReference type="PDBsum" id="6RTB"/>
<dbReference type="PDBsum" id="6SST"/>
<dbReference type="PDBsum" id="6SSX"/>
<dbReference type="PDBsum" id="6UFR"/>
<dbReference type="PDBsum" id="6XYO"/>
<dbReference type="PDBsum" id="6XYP"/>
<dbReference type="PDBsum" id="6XYQ"/>
<dbReference type="PDBsum" id="7C1D"/>
<dbReference type="PDBsum" id="7E0F"/>
<dbReference type="PDBsum" id="7L7H"/>
<dbReference type="PDBsum" id="7LC9"/>
<dbReference type="PDBsum" id="7NCA"/>
<dbReference type="PDBsum" id="7NCG"/>
<dbReference type="PDBsum" id="7NCH"/>
<dbReference type="PDBsum" id="7NCI"/>
<dbReference type="PDBsum" id="7NCJ"/>
<dbReference type="PDBsum" id="7NCK"/>
<dbReference type="PDBsum" id="7OZG"/>
<dbReference type="PDBsum" id="7OZH"/>
<dbReference type="PDBsum" id="7STX"/>
<dbReference type="PDBsum" id="7UAK"/>
<dbReference type="PDBsum" id="7V47"/>
<dbReference type="PDBsum" id="7V48"/>
<dbReference type="PDBsum" id="7V49"/>
<dbReference type="PDBsum" id="7V4A"/>
<dbReference type="PDBsum" id="7V4B"/>
<dbReference type="PDBsum" id="7V4C"/>
<dbReference type="PDBsum" id="7V4D"/>
<dbReference type="PDBsum" id="7WMM"/>
<dbReference type="PDBsum" id="7WNZ"/>
<dbReference type="PDBsum" id="7WO0"/>
<dbReference type="PDBsum" id="7XJX"/>
<dbReference type="PDBsum" id="7XO0"/>
<dbReference type="PDBsum" id="7XO1"/>
<dbReference type="PDBsum" id="7XO2"/>
<dbReference type="PDBsum" id="7XO3"/>
<dbReference type="PDBsum" id="7YK2"/>
<dbReference type="PDBsum" id="7YK8"/>
<dbReference type="PDBsum" id="7YNF"/>
<dbReference type="PDBsum" id="7YNG"/>
<dbReference type="PDBsum" id="7YNL"/>
<dbReference type="PDBsum" id="7YNM"/>
<dbReference type="PDBsum" id="7YNN"/>
<dbReference type="PDBsum" id="7YNO"/>
<dbReference type="PDBsum" id="7YNP"/>
<dbReference type="PDBsum" id="7YNQ"/>
<dbReference type="PDBsum" id="7YNR"/>
<dbReference type="PDBsum" id="7YNS"/>
<dbReference type="PDBsum" id="7YNT"/>
<dbReference type="PDBsum" id="8A4L"/>
<dbReference type="PDBsum" id="8A9L"/>
<dbReference type="PDBsum" id="8ADS"/>
<dbReference type="PDBsum" id="8ADU"/>
<dbReference type="PDBsum" id="8ADV"/>
<dbReference type="PDBsum" id="8ADW"/>
<dbReference type="PDBsum" id="8AEX"/>
<dbReference type="PDBsum" id="8B9V"/>
<dbReference type="PDBsum" id="8BQV"/>
<dbReference type="PDBsum" id="8BQW"/>
<dbReference type="PDBsum" id="8CE7"/>
<dbReference type="PDBsum" id="8CEB"/>
<dbReference type="PDBsum" id="8CYR"/>
<dbReference type="PDBsum" id="8CYS"/>
<dbReference type="PDBsum" id="8CYT"/>
<dbReference type="PDBsum" id="8CYV"/>
<dbReference type="PDBsum" id="8CYW"/>
<dbReference type="PDBsum" id="8CYX"/>
<dbReference type="PDBsum" id="8CYY"/>
<dbReference type="PDBsum" id="8CZ0"/>
<dbReference type="PDBsum" id="8CZ1"/>
<dbReference type="PDBsum" id="8CZ2"/>
<dbReference type="PDBsum" id="8CZ3"/>
<dbReference type="PDBsum" id="8CZ6"/>
<dbReference type="PDBsum" id="8FPT"/>
<dbReference type="PDBsum" id="8G0L"/>
<dbReference type="PDBsum" id="8GF7"/>
<dbReference type="PDBsum" id="8H03"/>
<dbReference type="PDBsum" id="8H04"/>
<dbReference type="PDBsum" id="8H05"/>
<dbReference type="PDBsum" id="8HZB"/>
<dbReference type="PDBsum" id="8HZC"/>
<dbReference type="PDBsum" id="8HZS"/>
<dbReference type="PDBsum" id="8JEX"/>
<dbReference type="PDBsum" id="8JEY"/>
<dbReference type="PDBsum" id="8JJV"/>
<dbReference type="PDBsum" id="8JLY"/>
<dbReference type="PDBsum" id="8OG0"/>
<dbReference type="PDBsum" id="8OJR"/>
<dbReference type="PDBsum" id="8OL8"/>
<dbReference type="PDBsum" id="8OQI"/>
<dbReference type="PDBsum" id="8PIX"/>
<dbReference type="PDBsum" id="8PJO"/>
<dbReference type="PDBsum" id="8PK2"/>
<dbReference type="PDBsum" id="8PK4"/>
<dbReference type="PDBsum" id="8QPZ"/>
<dbReference type="PDBsum" id="8RI9"/>
<dbReference type="PDBsum" id="8RQM"/>
<dbReference type="PDBsum" id="8RRR"/>
<dbReference type="PDBsum" id="8UKA"/>
<dbReference type="PDBsum" id="8X7B"/>
<dbReference type="PDBsum" id="8X7L"/>
<dbReference type="PDBsum" id="8X7M"/>
<dbReference type="PDBsum" id="8X7O"/>
<dbReference type="PDBsum" id="8X7P"/>
<dbReference type="PDBsum" id="8X7Q"/>
<dbReference type="PDBsum" id="8X7R"/>
<dbReference type="PDBsum" id="8XWD"/>
<dbReference type="PDBsum" id="8Y2P"/>
<dbReference type="PDBsum" id="8Y2Q"/>
<dbReference type="PDBsum" id="8ZLI"/>
<dbReference type="PDBsum" id="8ZLO"/>
<dbReference type="PDBsum" id="8ZLP"/>
<dbReference type="PDBsum" id="8ZMY"/>
<dbReference type="PDBsum" id="8ZWH"/>
<dbReference type="PDBsum" id="8ZWI"/>
<dbReference type="PDBsum" id="8ZWJ"/>
<dbReference type="PDBsum" id="8ZWK"/>
<dbReference type="PDBsum" id="9CD9"/>
<dbReference type="PDBsum" id="9CDA"/>
<dbReference type="PDBsum" id="9CK3"/>
<dbReference type="PDBsum" id="9CX6"/>
<dbReference type="PDBsum" id="9D5C"/>
<dbReference type="PDBsum" id="9EUU"/>
<dbReference type="PDBsum" id="9FYP"/>
<dbReference type="PDBsum" id="9HGR"/>
<dbReference type="PDBsum" id="9HGS"/>
<dbReference type="PDBsum" id="9HXA"/>
<dbReference type="PDBsum" id="9IJP"/>
<dbReference type="BMRB" id="P37840"/>
<dbReference type="EMDB" id="EMD-0148"/>
<dbReference type="EMDB" id="EMD-0801"/>
<dbReference type="EMDB" id="EMD-0803"/>
<dbReference type="EMDB" id="EMD-0833"/>
<dbReference type="EMDB" id="EMD-0958"/>
<dbReference type="EMDB" id="EMD-10305"/>
<dbReference type="EMDB" id="EMD-10307"/>
<dbReference type="EMDB" id="EMD-10650"/>
<dbReference type="EMDB" id="EMD-10651"/>
<dbReference type="EMDB" id="EMD-10652"/>
<dbReference type="EMDB" id="EMD-12264"/>
<dbReference type="EMDB" id="EMD-12265"/>
<dbReference type="EMDB" id="EMD-12266"/>
<dbReference type="EMDB" id="EMD-12267"/>
<dbReference type="EMDB" id="EMD-12268"/>
<dbReference type="EMDB" id="EMD-12269"/>
<dbReference type="EMDB" id="EMD-13123"/>
<dbReference type="EMDB" id="EMD-13124"/>
<dbReference type="EMDB" id="EMD-15148"/>
<dbReference type="EMDB" id="EMD-15285"/>
<dbReference type="EMDB" id="EMD-15369"/>
<dbReference type="EMDB" id="EMD-15370"/>
<dbReference type="EMDB" id="EMD-15371"/>
<dbReference type="EMDB" id="EMD-15372"/>
<dbReference type="EMDB" id="EMD-15388"/>
<dbReference type="EMDB" id="EMD-16188"/>
<dbReference type="EMDB" id="EMD-16189"/>
<dbReference type="EMDB" id="EMD-16600"/>
<dbReference type="EMDB" id="EMD-16603"/>
<dbReference type="EMDB" id="EMD-17111"/>
<dbReference type="EMDB" id="EMD-17693"/>
<dbReference type="EMDB" id="EMD-17714"/>
<dbReference type="EMDB" id="EMD-17723"/>
<dbReference type="EMDB" id="EMD-17726"/>
<dbReference type="EMDB" id="EMD-18570"/>
<dbReference type="EMDB" id="EMD-19184"/>
<dbReference type="EMDB" id="EMD-19446"/>
<dbReference type="EMDB" id="EMD-19462"/>
<dbReference type="EMDB" id="EMD-19986"/>
<dbReference type="EMDB" id="EMD-20183"/>
<dbReference type="EMDB" id="EMD-20185"/>
<dbReference type="EMDB" id="EMD-20186"/>
<dbReference type="EMDB" id="EMD-20328"/>
<dbReference type="EMDB" id="EMD-20331"/>
<dbReference type="EMDB" id="EMD-20759"/>
<dbReference type="EMDB" id="EMD-23212"/>
<dbReference type="EMDB" id="EMD-23270"/>
<dbReference type="EMDB" id="EMD-25438"/>
<dbReference type="EMDB" id="EMD-26427"/>
<dbReference type="EMDB" id="EMD-27082"/>
<dbReference type="EMDB" id="EMD-27083"/>
<dbReference type="EMDB" id="EMD-27084"/>
<dbReference type="EMDB" id="EMD-27085"/>
<dbReference type="EMDB" id="EMD-27086"/>
<dbReference type="EMDB" id="EMD-27087"/>
<dbReference type="EMDB" id="EMD-27088"/>
<dbReference type="EMDB" id="EMD-27089"/>
<dbReference type="EMDB" id="EMD-27090"/>
<dbReference type="EMDB" id="EMD-27091"/>
<dbReference type="EMDB" id="EMD-27092"/>
<dbReference type="EMDB" id="EMD-27093"/>
<dbReference type="EMDB" id="EMD-29657"/>
<dbReference type="EMDB" id="EMD-29980"/>
<dbReference type="EMDB" id="EMD-30269"/>
<dbReference type="EMDB" id="EMD-30931"/>
<dbReference type="EMDB" id="EMD-3094"/>
<dbReference type="EMDB" id="EMD-3095"/>
<dbReference type="EMDB" id="EMD-31702"/>
<dbReference type="EMDB" id="EMD-31703"/>
<dbReference type="EMDB" id="EMD-31704"/>
<dbReference type="EMDB" id="EMD-31705"/>
<dbReference type="EMDB" id="EMD-31706"/>
<dbReference type="EMDB" id="EMD-31707"/>
<dbReference type="EMDB" id="EMD-31708"/>
<dbReference type="EMDB" id="EMD-32615"/>
<dbReference type="EMDB" id="EMD-32636"/>
<dbReference type="EMDB" id="EMD-32637"/>
<dbReference type="EMDB" id="EMD-33236"/>
<dbReference type="EMDB" id="EMD-33332"/>
<dbReference type="EMDB" id="EMD-33333"/>
<dbReference type="EMDB" id="EMD-33334"/>
<dbReference type="EMDB" id="EMD-33335"/>
<dbReference type="EMDB" id="EMD-33884"/>
<dbReference type="EMDB" id="EMD-33890"/>
<dbReference type="EMDB" id="EMD-33960"/>
<dbReference type="EMDB" id="EMD-33961"/>
<dbReference type="EMDB" id="EMD-33965"/>
<dbReference type="EMDB" id="EMD-33966"/>
<dbReference type="EMDB" id="EMD-33967"/>
<dbReference type="EMDB" id="EMD-33968"/>
<dbReference type="EMDB" id="EMD-33969"/>
<dbReference type="EMDB" id="EMD-33970"/>
<dbReference type="EMDB" id="EMD-33971"/>
<dbReference type="EMDB" id="EMD-35087"/>
<dbReference type="EMDB" id="EMD-35088"/>
<dbReference type="EMDB" id="EMD-35090"/>
<dbReference type="EMDB" id="EMD-36202"/>
<dbReference type="EMDB" id="EMD-36203"/>
<dbReference type="EMDB" id="EMD-38097"/>
<dbReference type="EMDB" id="EMD-38103"/>
<dbReference type="EMDB" id="EMD-38104"/>
<dbReference type="EMDB" id="EMD-38105"/>
<dbReference type="EMDB" id="EMD-38106"/>
<dbReference type="EMDB" id="EMD-38107"/>
<dbReference type="EMDB" id="EMD-38108"/>
<dbReference type="EMDB" id="EMD-38733"/>
<dbReference type="EMDB" id="EMD-38862"/>
<dbReference type="EMDB" id="EMD-38863"/>
<dbReference type="EMDB" id="EMD-42350"/>
<dbReference type="EMDB" id="EMD-45464"/>
<dbReference type="EMDB" id="EMD-45465"/>
<dbReference type="EMDB" id="EMD-45639"/>
<dbReference type="EMDB" id="EMD-45979"/>
<dbReference type="EMDB" id="EMD-4994"/>
<dbReference type="EMDB" id="EMD-4996"/>
<dbReference type="EMDB" id="EMD-50077"/>
<dbReference type="EMDB" id="EMD-50860"/>
<dbReference type="EMDB" id="EMD-50888"/>
<dbReference type="EMDB" id="EMD-52165"/>
<dbReference type="EMDB" id="EMD-52166"/>
<dbReference type="EMDB" id="EMD-52458"/>
<dbReference type="EMDB" id="EMD-60226"/>
<dbReference type="EMDB" id="EMD-60231"/>
<dbReference type="EMDB" id="EMD-60232"/>
<dbReference type="EMDB" id="EMD-60262"/>
<dbReference type="EMDB" id="EMD-60527"/>
<dbReference type="EMDB" id="EMD-60528"/>
<dbReference type="EMDB" id="EMD-60529"/>
<dbReference type="EMDB" id="EMD-60530"/>
<dbReference type="EMDB" id="EMD-60637"/>
<dbReference type="EMDB" id="EMD-6482"/>
<dbReference type="EMDB" id="EMD-6988"/>
<dbReference type="EMDB" id="EMD-7618"/>
<dbReference type="EMDB" id="EMD-7619"/>
<dbReference type="PCDDB" id="P37840"/>
<dbReference type="SMR" id="P37840"/>
<dbReference type="BioGRID" id="112506">
    <property type="interactions" value="1074"/>
</dbReference>
<dbReference type="CORUM" id="P37840"/>
<dbReference type="DIP" id="DIP-35354N"/>
<dbReference type="FunCoup" id="P37840">
    <property type="interactions" value="336"/>
</dbReference>
<dbReference type="IntAct" id="P37840">
    <property type="interactions" value="470"/>
</dbReference>
<dbReference type="MINT" id="P37840"/>
<dbReference type="STRING" id="9606.ENSP00000500990"/>
<dbReference type="BindingDB" id="P37840"/>
<dbReference type="ChEMBL" id="CHEMBL6152"/>
<dbReference type="DrugBank" id="DB09130">
    <property type="generic name" value="Copper"/>
</dbReference>
<dbReference type="DrugBank" id="DB04209">
    <property type="generic name" value="Dequalinium"/>
</dbReference>
<dbReference type="DrugBank" id="DB02709">
    <property type="generic name" value="Resveratrol"/>
</dbReference>
<dbReference type="DrugCentral" id="P37840"/>
<dbReference type="GuidetoPHARMACOLOGY" id="3285"/>
<dbReference type="TCDB" id="1.C.77.1.1">
    <property type="family name" value="the synuclein (synuclein) family"/>
</dbReference>
<dbReference type="GlyConnect" id="2893">
    <property type="glycosylation" value="1 O-GlcNAc glycan (1 site)"/>
</dbReference>
<dbReference type="GlyCosmos" id="P37840">
    <property type="glycosylation" value="5 sites, 1 glycan"/>
</dbReference>
<dbReference type="GlyGen" id="P37840">
    <property type="glycosylation" value="7 sites, 2 O-linked glycans (7 sites)"/>
</dbReference>
<dbReference type="iPTMnet" id="P37840"/>
<dbReference type="MetOSite" id="P37840"/>
<dbReference type="PhosphoSitePlus" id="P37840"/>
<dbReference type="SwissPalm" id="P37840"/>
<dbReference type="BioMuta" id="SNCA"/>
<dbReference type="DMDM" id="586067"/>
<dbReference type="jPOST" id="P37840"/>
<dbReference type="MassIVE" id="P37840"/>
<dbReference type="PaxDb" id="9606-ENSP00000338345"/>
<dbReference type="PeptideAtlas" id="P37840"/>
<dbReference type="ProteomicsDB" id="55279">
    <molecule id="P37840-1"/>
</dbReference>
<dbReference type="ProteomicsDB" id="55280">
    <molecule id="P37840-2"/>
</dbReference>
<dbReference type="ProteomicsDB" id="55281">
    <molecule id="P37840-3"/>
</dbReference>
<dbReference type="Pumba" id="P37840"/>
<dbReference type="TopDownProteomics" id="P37840-1">
    <molecule id="P37840-1"/>
</dbReference>
<dbReference type="ABCD" id="P37840">
    <property type="antibodies" value="22 sequenced antibodies"/>
</dbReference>
<dbReference type="Antibodypedia" id="14688">
    <property type="antibodies" value="3084 antibodies from 55 providers"/>
</dbReference>
<dbReference type="DNASU" id="6622"/>
<dbReference type="Ensembl" id="ENST00000336904.7">
    <molecule id="P37840-1"/>
    <property type="protein sequence ID" value="ENSP00000338345.3"/>
    <property type="gene ID" value="ENSG00000145335.17"/>
</dbReference>
<dbReference type="Ensembl" id="ENST00000345009.8">
    <molecule id="P37840-2"/>
    <property type="protein sequence ID" value="ENSP00000343683.4"/>
    <property type="gene ID" value="ENSG00000145335.17"/>
</dbReference>
<dbReference type="Ensembl" id="ENST00000394986.5">
    <molecule id="P37840-1"/>
    <property type="protein sequence ID" value="ENSP00000378437.1"/>
    <property type="gene ID" value="ENSG00000145335.17"/>
</dbReference>
<dbReference type="Ensembl" id="ENST00000394989.6">
    <molecule id="P37840-3"/>
    <property type="protein sequence ID" value="ENSP00000378440.2"/>
    <property type="gene ID" value="ENSG00000145335.17"/>
</dbReference>
<dbReference type="Ensembl" id="ENST00000394991.8">
    <molecule id="P37840-1"/>
    <property type="protein sequence ID" value="ENSP00000378442.4"/>
    <property type="gene ID" value="ENSG00000145335.17"/>
</dbReference>
<dbReference type="Ensembl" id="ENST00000420646.6">
    <molecule id="P37840-2"/>
    <property type="protein sequence ID" value="ENSP00000396241.2"/>
    <property type="gene ID" value="ENSG00000145335.17"/>
</dbReference>
<dbReference type="Ensembl" id="ENST00000505199.5">
    <molecule id="P37840-3"/>
    <property type="protein sequence ID" value="ENSP00000421485.1"/>
    <property type="gene ID" value="ENSG00000145335.17"/>
</dbReference>
<dbReference type="Ensembl" id="ENST00000506244.5">
    <molecule id="P37840-1"/>
    <property type="protein sequence ID" value="ENSP00000422238.1"/>
    <property type="gene ID" value="ENSG00000145335.17"/>
</dbReference>
<dbReference type="Ensembl" id="ENST00000508895.5">
    <molecule id="P37840-1"/>
    <property type="protein sequence ID" value="ENSP00000426955.1"/>
    <property type="gene ID" value="ENSG00000145335.17"/>
</dbReference>
<dbReference type="Ensembl" id="ENST00000618500.4">
    <molecule id="P37840-3"/>
    <property type="protein sequence ID" value="ENSP00000484044.1"/>
    <property type="gene ID" value="ENSG00000145335.17"/>
</dbReference>
<dbReference type="Ensembl" id="ENST00000673718.1">
    <molecule id="P37840-1"/>
    <property type="protein sequence ID" value="ENSP00000500990.1"/>
    <property type="gene ID" value="ENSG00000145335.17"/>
</dbReference>
<dbReference type="GeneID" id="6622"/>
<dbReference type="KEGG" id="hsa:6622"/>
<dbReference type="MANE-Select" id="ENST00000394991.8">
    <property type="protein sequence ID" value="ENSP00000378442.4"/>
    <property type="RefSeq nucleotide sequence ID" value="NM_000345.4"/>
    <property type="RefSeq protein sequence ID" value="NP_000336.1"/>
</dbReference>
<dbReference type="UCSC" id="uc003hso.3">
    <molecule id="P37840-1"/>
    <property type="organism name" value="human"/>
</dbReference>
<dbReference type="AGR" id="HGNC:11138"/>
<dbReference type="CTD" id="6622"/>
<dbReference type="DisGeNET" id="6622"/>
<dbReference type="GeneCards" id="SNCA"/>
<dbReference type="GeneReviews" id="SNCA"/>
<dbReference type="HGNC" id="HGNC:11138">
    <property type="gene designation" value="SNCA"/>
</dbReference>
<dbReference type="HPA" id="ENSG00000145335">
    <property type="expression patterns" value="Group enriched (bone marrow, brain)"/>
</dbReference>
<dbReference type="MalaCards" id="SNCA"/>
<dbReference type="MIM" id="127750">
    <property type="type" value="phenotype"/>
</dbReference>
<dbReference type="MIM" id="163890">
    <property type="type" value="gene"/>
</dbReference>
<dbReference type="MIM" id="168600">
    <property type="type" value="phenotype"/>
</dbReference>
<dbReference type="MIM" id="168601">
    <property type="type" value="phenotype"/>
</dbReference>
<dbReference type="MIM" id="605543">
    <property type="type" value="phenotype"/>
</dbReference>
<dbReference type="neXtProt" id="NX_P37840"/>
<dbReference type="OpenTargets" id="ENSG00000145335"/>
<dbReference type="Orphanet" id="411602">
    <property type="disease" value="Hereditary late-onset Parkinson disease"/>
</dbReference>
<dbReference type="Orphanet" id="171695">
    <property type="disease" value="Parkinsonian-pyramidal syndrome"/>
</dbReference>
<dbReference type="Orphanet" id="2828">
    <property type="disease" value="Young-onset Parkinson disease"/>
</dbReference>
<dbReference type="PharmGKB" id="PA35986"/>
<dbReference type="VEuPathDB" id="HostDB:ENSG00000145335"/>
<dbReference type="eggNOG" id="ENOG502S0Q7">
    <property type="taxonomic scope" value="Eukaryota"/>
</dbReference>
<dbReference type="GeneTree" id="ENSGT00950000183175"/>
<dbReference type="HOGENOM" id="CLU_129378_1_0_1"/>
<dbReference type="InParanoid" id="P37840"/>
<dbReference type="OMA" id="LPQEGMM"/>
<dbReference type="OrthoDB" id="9900372at2759"/>
<dbReference type="PAN-GO" id="P37840">
    <property type="GO annotations" value="8 GO annotations based on evolutionary models"/>
</dbReference>
<dbReference type="PhylomeDB" id="P37840"/>
<dbReference type="TreeFam" id="TF332776"/>
<dbReference type="PathwayCommons" id="P37840"/>
<dbReference type="Reactome" id="R-HSA-977225">
    <property type="pathway name" value="Amyloid fiber formation"/>
</dbReference>
<dbReference type="Reactome" id="R-HSA-9833482">
    <property type="pathway name" value="PKR-mediated signaling"/>
</dbReference>
<dbReference type="SignaLink" id="P37840"/>
<dbReference type="SIGNOR" id="P37840"/>
<dbReference type="BioGRID-ORCS" id="6622">
    <property type="hits" value="12 hits in 1150 CRISPR screens"/>
</dbReference>
<dbReference type="CD-CODE" id="232F8A39">
    <property type="entry name" value="P-body"/>
</dbReference>
<dbReference type="CD-CODE" id="FB4E32DD">
    <property type="entry name" value="Presynaptic clusters and postsynaptic densities"/>
</dbReference>
<dbReference type="ChiTaRS" id="SNCA">
    <property type="organism name" value="human"/>
</dbReference>
<dbReference type="EvolutionaryTrace" id="P37840"/>
<dbReference type="GeneWiki" id="Alpha-synuclein"/>
<dbReference type="GenomeRNAi" id="6622"/>
<dbReference type="Pharos" id="P37840">
    <property type="development level" value="Tchem"/>
</dbReference>
<dbReference type="PRO" id="PR:P37840"/>
<dbReference type="Proteomes" id="UP000005640">
    <property type="component" value="Chromosome 4"/>
</dbReference>
<dbReference type="RNAct" id="P37840">
    <property type="molecule type" value="protein"/>
</dbReference>
<dbReference type="Bgee" id="ENSG00000145335">
    <property type="expression patterns" value="Expressed in trabecular bone tissue and 205 other cell types or tissues"/>
</dbReference>
<dbReference type="ExpressionAtlas" id="P37840">
    <property type="expression patterns" value="baseline and differential"/>
</dbReference>
<dbReference type="GO" id="GO:0015629">
    <property type="term" value="C:actin cytoskeleton"/>
    <property type="evidence" value="ECO:0000314"/>
    <property type="project" value="UniProtKB"/>
</dbReference>
<dbReference type="GO" id="GO:0030424">
    <property type="term" value="C:axon"/>
    <property type="evidence" value="ECO:0000314"/>
    <property type="project" value="UniProtKB"/>
</dbReference>
<dbReference type="GO" id="GO:0043679">
    <property type="term" value="C:axon terminus"/>
    <property type="evidence" value="ECO:0000318"/>
    <property type="project" value="GO_Central"/>
</dbReference>
<dbReference type="GO" id="GO:0005938">
    <property type="term" value="C:cell cortex"/>
    <property type="evidence" value="ECO:0000314"/>
    <property type="project" value="UniProtKB"/>
</dbReference>
<dbReference type="GO" id="GO:0005737">
    <property type="term" value="C:cytoplasm"/>
    <property type="evidence" value="ECO:0000314"/>
    <property type="project" value="UniProtKB"/>
</dbReference>
<dbReference type="GO" id="GO:0005829">
    <property type="term" value="C:cytosol"/>
    <property type="evidence" value="ECO:0000314"/>
    <property type="project" value="UniProtKB"/>
</dbReference>
<dbReference type="GO" id="GO:0005576">
    <property type="term" value="C:extracellular region"/>
    <property type="evidence" value="ECO:0000314"/>
    <property type="project" value="ParkinsonsUK-UCL"/>
</dbReference>
<dbReference type="GO" id="GO:0005615">
    <property type="term" value="C:extracellular space"/>
    <property type="evidence" value="ECO:0000314"/>
    <property type="project" value="UniProtKB"/>
</dbReference>
<dbReference type="GO" id="GO:0030426">
    <property type="term" value="C:growth cone"/>
    <property type="evidence" value="ECO:0000314"/>
    <property type="project" value="UniProtKB"/>
</dbReference>
<dbReference type="GO" id="GO:0016234">
    <property type="term" value="C:inclusion body"/>
    <property type="evidence" value="ECO:0000314"/>
    <property type="project" value="UniProtKB"/>
</dbReference>
<dbReference type="GO" id="GO:0005764">
    <property type="term" value="C:lysosome"/>
    <property type="evidence" value="ECO:0000304"/>
    <property type="project" value="ParkinsonsUK-UCL"/>
</dbReference>
<dbReference type="GO" id="GO:0016020">
    <property type="term" value="C:membrane"/>
    <property type="evidence" value="ECO:0000314"/>
    <property type="project" value="UniProtKB"/>
</dbReference>
<dbReference type="GO" id="GO:0005743">
    <property type="term" value="C:mitochondrial inner membrane"/>
    <property type="evidence" value="ECO:0007669"/>
    <property type="project" value="Ensembl"/>
</dbReference>
<dbReference type="GO" id="GO:0005759">
    <property type="term" value="C:mitochondrial matrix"/>
    <property type="evidence" value="ECO:0007669"/>
    <property type="project" value="Ensembl"/>
</dbReference>
<dbReference type="GO" id="GO:0005741">
    <property type="term" value="C:mitochondrial outer membrane"/>
    <property type="evidence" value="ECO:0007669"/>
    <property type="project" value="Ensembl"/>
</dbReference>
<dbReference type="GO" id="GO:0005739">
    <property type="term" value="C:mitochondrion"/>
    <property type="evidence" value="ECO:0000304"/>
    <property type="project" value="ParkinsonsUK-UCL"/>
</dbReference>
<dbReference type="GO" id="GO:0043025">
    <property type="term" value="C:neuronal cell body"/>
    <property type="evidence" value="ECO:0000318"/>
    <property type="project" value="GO_Central"/>
</dbReference>
<dbReference type="GO" id="GO:0005640">
    <property type="term" value="C:nuclear outer membrane"/>
    <property type="evidence" value="ECO:0007669"/>
    <property type="project" value="Ensembl"/>
</dbReference>
<dbReference type="GO" id="GO:0005634">
    <property type="term" value="C:nucleus"/>
    <property type="evidence" value="ECO:0000314"/>
    <property type="project" value="UniProtKB"/>
</dbReference>
<dbReference type="GO" id="GO:0048471">
    <property type="term" value="C:perinuclear region of cytoplasm"/>
    <property type="evidence" value="ECO:0000314"/>
    <property type="project" value="UniProtKB"/>
</dbReference>
<dbReference type="GO" id="GO:0005886">
    <property type="term" value="C:plasma membrane"/>
    <property type="evidence" value="ECO:0000314"/>
    <property type="project" value="UniProtKB"/>
</dbReference>
<dbReference type="GO" id="GO:0098794">
    <property type="term" value="C:postsynapse"/>
    <property type="evidence" value="ECO:0007669"/>
    <property type="project" value="GOC"/>
</dbReference>
<dbReference type="GO" id="GO:0032991">
    <property type="term" value="C:protein-containing complex"/>
    <property type="evidence" value="ECO:0000315"/>
    <property type="project" value="UniProtKB"/>
</dbReference>
<dbReference type="GO" id="GO:0005840">
    <property type="term" value="C:ribosome"/>
    <property type="evidence" value="ECO:0007669"/>
    <property type="project" value="Ensembl"/>
</dbReference>
<dbReference type="GO" id="GO:0099512">
    <property type="term" value="C:supramolecular fiber"/>
    <property type="evidence" value="ECO:0000314"/>
    <property type="project" value="UniProtKB"/>
</dbReference>
<dbReference type="GO" id="GO:0030672">
    <property type="term" value="C:synaptic vesicle membrane"/>
    <property type="evidence" value="ECO:0007669"/>
    <property type="project" value="Ensembl"/>
</dbReference>
<dbReference type="GO" id="GO:0043195">
    <property type="term" value="C:terminal bouton"/>
    <property type="evidence" value="ECO:0007669"/>
    <property type="project" value="Ensembl"/>
</dbReference>
<dbReference type="GO" id="GO:0003779">
    <property type="term" value="F:actin binding"/>
    <property type="evidence" value="ECO:0000353"/>
    <property type="project" value="ARUK-UCL"/>
</dbReference>
<dbReference type="GO" id="GO:0043014">
    <property type="term" value="F:alpha-tubulin binding"/>
    <property type="evidence" value="ECO:0000353"/>
    <property type="project" value="UniProtKB"/>
</dbReference>
<dbReference type="GO" id="GO:0048487">
    <property type="term" value="F:beta-tubulin binding"/>
    <property type="evidence" value="ECO:0007669"/>
    <property type="project" value="Ensembl"/>
</dbReference>
<dbReference type="GO" id="GO:0005509">
    <property type="term" value="F:calcium ion binding"/>
    <property type="evidence" value="ECO:0000314"/>
    <property type="project" value="UniProtKB"/>
</dbReference>
<dbReference type="GO" id="GO:0005507">
    <property type="term" value="F:copper ion binding"/>
    <property type="evidence" value="ECO:0000314"/>
    <property type="project" value="UniProtKB"/>
</dbReference>
<dbReference type="GO" id="GO:1903136">
    <property type="term" value="F:cuprous ion binding"/>
    <property type="evidence" value="ECO:0000315"/>
    <property type="project" value="CAFA"/>
</dbReference>
<dbReference type="GO" id="GO:0004869">
    <property type="term" value="F:cysteine-type endopeptidase inhibitor activity"/>
    <property type="evidence" value="ECO:0000314"/>
    <property type="project" value="UniProtKB"/>
</dbReference>
<dbReference type="GO" id="GO:0070840">
    <property type="term" value="F:dynein complex binding"/>
    <property type="evidence" value="ECO:0000353"/>
    <property type="project" value="UniProtKB"/>
</dbReference>
<dbReference type="GO" id="GO:0004857">
    <property type="term" value="F:enzyme inhibitor activity"/>
    <property type="evidence" value="ECO:0000314"/>
    <property type="project" value="BHF-UCL"/>
</dbReference>
<dbReference type="GO" id="GO:0008198">
    <property type="term" value="F:ferrous iron binding"/>
    <property type="evidence" value="ECO:0000314"/>
    <property type="project" value="UniProtKB"/>
</dbReference>
<dbReference type="GO" id="GO:0042393">
    <property type="term" value="F:histone binding"/>
    <property type="evidence" value="ECO:0000314"/>
    <property type="project" value="UniProtKB"/>
</dbReference>
<dbReference type="GO" id="GO:0030544">
    <property type="term" value="F:Hsp70 protein binding"/>
    <property type="evidence" value="ECO:0000353"/>
    <property type="project" value="UniProtKB"/>
</dbReference>
<dbReference type="GO" id="GO:0042802">
    <property type="term" value="F:identical protein binding"/>
    <property type="evidence" value="ECO:0000314"/>
    <property type="project" value="UniProtKB"/>
</dbReference>
<dbReference type="GO" id="GO:0019894">
    <property type="term" value="F:kinesin binding"/>
    <property type="evidence" value="ECO:0000353"/>
    <property type="project" value="UniProtKB"/>
</dbReference>
<dbReference type="GO" id="GO:0008289">
    <property type="term" value="F:lipid binding"/>
    <property type="evidence" value="ECO:0000314"/>
    <property type="project" value="DisProt"/>
</dbReference>
<dbReference type="GO" id="GO:0000287">
    <property type="term" value="F:magnesium ion binding"/>
    <property type="evidence" value="ECO:0000314"/>
    <property type="project" value="UniProtKB"/>
</dbReference>
<dbReference type="GO" id="GO:0008017">
    <property type="term" value="F:microtubule binding"/>
    <property type="evidence" value="ECO:0007669"/>
    <property type="project" value="Ensembl"/>
</dbReference>
<dbReference type="GO" id="GO:0060090">
    <property type="term" value="F:molecular adaptor activity"/>
    <property type="evidence" value="ECO:0000269"/>
    <property type="project" value="DisProt"/>
</dbReference>
<dbReference type="GO" id="GO:0016491">
    <property type="term" value="F:oxidoreductase activity"/>
    <property type="evidence" value="ECO:0000314"/>
    <property type="project" value="UniProtKB"/>
</dbReference>
<dbReference type="GO" id="GO:0043274">
    <property type="term" value="F:phospholipase binding"/>
    <property type="evidence" value="ECO:0007669"/>
    <property type="project" value="Ensembl"/>
</dbReference>
<dbReference type="GO" id="GO:0005543">
    <property type="term" value="F:phospholipid binding"/>
    <property type="evidence" value="ECO:0000314"/>
    <property type="project" value="ParkinsonsUK-UCL"/>
</dbReference>
<dbReference type="GO" id="GO:0051219">
    <property type="term" value="F:phosphoprotein binding"/>
    <property type="evidence" value="ECO:0000314"/>
    <property type="project" value="BHF-UCL"/>
</dbReference>
<dbReference type="GO" id="GO:0019904">
    <property type="term" value="F:protein domain specific binding"/>
    <property type="evidence" value="ECO:0007669"/>
    <property type="project" value="Ensembl"/>
</dbReference>
<dbReference type="GO" id="GO:0004860">
    <property type="term" value="F:protein kinase inhibitor activity"/>
    <property type="evidence" value="ECO:0000304"/>
    <property type="project" value="ARUK-UCL"/>
</dbReference>
<dbReference type="GO" id="GO:0000149">
    <property type="term" value="F:SNARE binding"/>
    <property type="evidence" value="ECO:0000314"/>
    <property type="project" value="UniProtKB"/>
</dbReference>
<dbReference type="GO" id="GO:0048156">
    <property type="term" value="F:tau protein binding"/>
    <property type="evidence" value="ECO:0000314"/>
    <property type="project" value="UniProtKB"/>
</dbReference>
<dbReference type="GO" id="GO:0000976">
    <property type="term" value="F:transcription cis-regulatory region binding"/>
    <property type="evidence" value="ECO:0000304"/>
    <property type="project" value="ParkinsonsUK-UCL"/>
</dbReference>
<dbReference type="GO" id="GO:0141108">
    <property type="term" value="F:transporter regulator activity"/>
    <property type="evidence" value="ECO:0000316"/>
    <property type="project" value="ARUK-UCL"/>
</dbReference>
<dbReference type="GO" id="GO:0008270">
    <property type="term" value="F:zinc ion binding"/>
    <property type="evidence" value="ECO:0000314"/>
    <property type="project" value="UniProtKB"/>
</dbReference>
<dbReference type="GO" id="GO:0008344">
    <property type="term" value="P:adult locomotory behavior"/>
    <property type="evidence" value="ECO:0007669"/>
    <property type="project" value="Ensembl"/>
</dbReference>
<dbReference type="GO" id="GO:1990000">
    <property type="term" value="P:amyloid fibril formation"/>
    <property type="evidence" value="ECO:0000269"/>
    <property type="project" value="DisProt"/>
</dbReference>
<dbReference type="GO" id="GO:0048148">
    <property type="term" value="P:behavioral response to cocaine"/>
    <property type="evidence" value="ECO:0007669"/>
    <property type="project" value="Ensembl"/>
</dbReference>
<dbReference type="GO" id="GO:0071280">
    <property type="term" value="P:cellular response to copper ion"/>
    <property type="evidence" value="ECO:0000314"/>
    <property type="project" value="UniProtKB"/>
</dbReference>
<dbReference type="GO" id="GO:0071872">
    <property type="term" value="P:cellular response to epinephrine stimulus"/>
    <property type="evidence" value="ECO:0000304"/>
    <property type="project" value="UniProtKB"/>
</dbReference>
<dbReference type="GO" id="GO:0044344">
    <property type="term" value="P:cellular response to fibroblast growth factor stimulus"/>
    <property type="evidence" value="ECO:0007669"/>
    <property type="project" value="Ensembl"/>
</dbReference>
<dbReference type="GO" id="GO:0034599">
    <property type="term" value="P:cellular response to oxidative stress"/>
    <property type="evidence" value="ECO:0000305"/>
    <property type="project" value="ParkinsonsUK-UCL"/>
</dbReference>
<dbReference type="GO" id="GO:0007268">
    <property type="term" value="P:chemical synaptic transmission"/>
    <property type="evidence" value="ECO:0000318"/>
    <property type="project" value="GO_Central"/>
</dbReference>
<dbReference type="GO" id="GO:0042416">
    <property type="term" value="P:dopamine biosynthetic process"/>
    <property type="evidence" value="ECO:0000304"/>
    <property type="project" value="UniProtKB"/>
</dbReference>
<dbReference type="GO" id="GO:0051583">
    <property type="term" value="P:dopamine uptake involved in synaptic transmission"/>
    <property type="evidence" value="ECO:0000304"/>
    <property type="project" value="UniProtKB"/>
</dbReference>
<dbReference type="GO" id="GO:0060079">
    <property type="term" value="P:excitatory postsynaptic potential"/>
    <property type="evidence" value="ECO:0007669"/>
    <property type="project" value="Ensembl"/>
</dbReference>
<dbReference type="GO" id="GO:0006631">
    <property type="term" value="P:fatty acid metabolic process"/>
    <property type="evidence" value="ECO:0007669"/>
    <property type="project" value="Ensembl"/>
</dbReference>
<dbReference type="GO" id="GO:0060291">
    <property type="term" value="P:long-term synaptic potentiation"/>
    <property type="evidence" value="ECO:0007669"/>
    <property type="project" value="Ensembl"/>
</dbReference>
<dbReference type="GO" id="GO:0001774">
    <property type="term" value="P:microglial cell activation"/>
    <property type="evidence" value="ECO:0000304"/>
    <property type="project" value="ParkinsonsUK-UCL"/>
</dbReference>
<dbReference type="GO" id="GO:0042775">
    <property type="term" value="P:mitochondrial ATP synthesis coupled electron transport"/>
    <property type="evidence" value="ECO:0007669"/>
    <property type="project" value="Ensembl"/>
</dbReference>
<dbReference type="GO" id="GO:0007006">
    <property type="term" value="P:mitochondrial membrane organization"/>
    <property type="evidence" value="ECO:0007669"/>
    <property type="project" value="Ensembl"/>
</dbReference>
<dbReference type="GO" id="GO:0043066">
    <property type="term" value="P:negative regulation of apoptotic process"/>
    <property type="evidence" value="ECO:0000315"/>
    <property type="project" value="UniProtKB"/>
</dbReference>
<dbReference type="GO" id="GO:1904715">
    <property type="term" value="P:negative regulation of chaperone-mediated autophagy"/>
    <property type="evidence" value="ECO:0000315"/>
    <property type="project" value="ParkinsonsUK-UCL"/>
</dbReference>
<dbReference type="GO" id="GO:0045963">
    <property type="term" value="P:negative regulation of dopamine metabolic process"/>
    <property type="evidence" value="ECO:0007669"/>
    <property type="project" value="Ensembl"/>
</dbReference>
<dbReference type="GO" id="GO:0051585">
    <property type="term" value="P:negative regulation of dopamine uptake involved in synaptic transmission"/>
    <property type="evidence" value="ECO:0000314"/>
    <property type="project" value="UniProtKB"/>
</dbReference>
<dbReference type="GO" id="GO:0045920">
    <property type="term" value="P:negative regulation of exocytosis"/>
    <property type="evidence" value="ECO:0000315"/>
    <property type="project" value="UniProtKB"/>
</dbReference>
<dbReference type="GO" id="GO:0031115">
    <property type="term" value="P:negative regulation of microtubule polymerization"/>
    <property type="evidence" value="ECO:0000314"/>
    <property type="project" value="BHF-UCL"/>
</dbReference>
<dbReference type="GO" id="GO:1902957">
    <property type="term" value="P:negative regulation of mitochondrial electron transport, NADH to ubiquinone"/>
    <property type="evidence" value="ECO:0000304"/>
    <property type="project" value="ParkinsonsUK-UCL"/>
</dbReference>
<dbReference type="GO" id="GO:0043524">
    <property type="term" value="P:negative regulation of neuron apoptotic process"/>
    <property type="evidence" value="ECO:0007669"/>
    <property type="project" value="Ensembl"/>
</dbReference>
<dbReference type="GO" id="GO:0051622">
    <property type="term" value="P:negative regulation of norepinephrine uptake"/>
    <property type="evidence" value="ECO:0000314"/>
    <property type="project" value="UniProtKB"/>
</dbReference>
<dbReference type="GO" id="GO:0010642">
    <property type="term" value="P:negative regulation of platelet-derived growth factor receptor signaling pathway"/>
    <property type="evidence" value="ECO:0000314"/>
    <property type="project" value="UniProtKB"/>
</dbReference>
<dbReference type="GO" id="GO:0051612">
    <property type="term" value="P:negative regulation of serotonin uptake"/>
    <property type="evidence" value="ECO:0000314"/>
    <property type="project" value="UniProtKB"/>
</dbReference>
<dbReference type="GO" id="GO:0070495">
    <property type="term" value="P:negative regulation of thrombin-activated receptor signaling pathway"/>
    <property type="evidence" value="ECO:0000314"/>
    <property type="project" value="UniProtKB"/>
</dbReference>
<dbReference type="GO" id="GO:0000122">
    <property type="term" value="P:negative regulation of transcription by RNA polymerase II"/>
    <property type="evidence" value="ECO:0000304"/>
    <property type="project" value="ParkinsonsUK-UCL"/>
</dbReference>
<dbReference type="GO" id="GO:0051402">
    <property type="term" value="P:neuron apoptotic process"/>
    <property type="evidence" value="ECO:0007669"/>
    <property type="project" value="Ensembl"/>
</dbReference>
<dbReference type="GO" id="GO:0006638">
    <property type="term" value="P:neutral lipid metabolic process"/>
    <property type="evidence" value="ECO:0007669"/>
    <property type="project" value="Ensembl"/>
</dbReference>
<dbReference type="GO" id="GO:0006644">
    <property type="term" value="P:phospholipid metabolic process"/>
    <property type="evidence" value="ECO:0007669"/>
    <property type="project" value="Ensembl"/>
</dbReference>
<dbReference type="GO" id="GO:0043065">
    <property type="term" value="P:positive regulation of apoptotic process"/>
    <property type="evidence" value="ECO:0000304"/>
    <property type="project" value="ParkinsonsUK-UCL"/>
</dbReference>
<dbReference type="GO" id="GO:0045807">
    <property type="term" value="P:positive regulation of endocytosis"/>
    <property type="evidence" value="ECO:0000314"/>
    <property type="project" value="UniProtKB"/>
</dbReference>
<dbReference type="GO" id="GO:0045921">
    <property type="term" value="P:positive regulation of exocytosis"/>
    <property type="evidence" value="ECO:0000315"/>
    <property type="project" value="UniProtKB"/>
</dbReference>
<dbReference type="GO" id="GO:1903284">
    <property type="term" value="P:positive regulation of glutathione peroxidase activity"/>
    <property type="evidence" value="ECO:0000314"/>
    <property type="project" value="ParkinsonsUK-UCL"/>
</dbReference>
<dbReference type="GO" id="GO:1903285">
    <property type="term" value="P:positive regulation of hydrogen peroxide catabolic process"/>
    <property type="evidence" value="ECO:0000314"/>
    <property type="project" value="ParkinsonsUK-UCL"/>
</dbReference>
<dbReference type="GO" id="GO:0050729">
    <property type="term" value="P:positive regulation of inflammatory response"/>
    <property type="evidence" value="ECO:0000314"/>
    <property type="project" value="ParkinsonsUK-UCL"/>
</dbReference>
<dbReference type="GO" id="GO:0060732">
    <property type="term" value="P:positive regulation of inositol phosphate biosynthetic process"/>
    <property type="evidence" value="ECO:0000314"/>
    <property type="project" value="UniProtKB"/>
</dbReference>
<dbReference type="GO" id="GO:0001956">
    <property type="term" value="P:positive regulation of neurotransmitter secretion"/>
    <property type="evidence" value="ECO:0007669"/>
    <property type="project" value="Ensembl"/>
</dbReference>
<dbReference type="GO" id="GO:1904377">
    <property type="term" value="P:positive regulation of protein localization to cell periphery"/>
    <property type="evidence" value="ECO:0000316"/>
    <property type="project" value="ParkinsonsUK-UCL"/>
</dbReference>
<dbReference type="GO" id="GO:0001921">
    <property type="term" value="P:positive regulation of receptor recycling"/>
    <property type="evidence" value="ECO:0000314"/>
    <property type="project" value="UniProtKB"/>
</dbReference>
<dbReference type="GO" id="GO:0051281">
    <property type="term" value="P:positive regulation of release of sequestered calcium ion into cytosol"/>
    <property type="evidence" value="ECO:0000314"/>
    <property type="project" value="UniProtKB"/>
</dbReference>
<dbReference type="GO" id="GO:0035543">
    <property type="term" value="P:positive regulation of SNARE complex assembly"/>
    <property type="evidence" value="ECO:0000314"/>
    <property type="project" value="CACAO"/>
</dbReference>
<dbReference type="GO" id="GO:0031648">
    <property type="term" value="P:protein destabilization"/>
    <property type="evidence" value="ECO:0000314"/>
    <property type="project" value="UniProtKB"/>
</dbReference>
<dbReference type="GO" id="GO:0051262">
    <property type="term" value="P:protein tetramerization"/>
    <property type="evidence" value="ECO:0000314"/>
    <property type="project" value="UniProtKB"/>
</dbReference>
<dbReference type="GO" id="GO:0031623">
    <property type="term" value="P:receptor internalization"/>
    <property type="evidence" value="ECO:0000314"/>
    <property type="project" value="UniProtKB"/>
</dbReference>
<dbReference type="GO" id="GO:0050812">
    <property type="term" value="P:regulation of acyl-CoA biosynthetic process"/>
    <property type="evidence" value="ECO:0007669"/>
    <property type="project" value="Ensembl"/>
</dbReference>
<dbReference type="GO" id="GO:0014059">
    <property type="term" value="P:regulation of dopamine secretion"/>
    <property type="evidence" value="ECO:0000304"/>
    <property type="project" value="UniProtKB"/>
</dbReference>
<dbReference type="GO" id="GO:0014048">
    <property type="term" value="P:regulation of glutamate secretion"/>
    <property type="evidence" value="ECO:0007669"/>
    <property type="project" value="Ensembl"/>
</dbReference>
<dbReference type="GO" id="GO:0040012">
    <property type="term" value="P:regulation of locomotion"/>
    <property type="evidence" value="ECO:0007669"/>
    <property type="project" value="Ensembl"/>
</dbReference>
<dbReference type="GO" id="GO:0048169">
    <property type="term" value="P:regulation of long-term neuronal synaptic plasticity"/>
    <property type="evidence" value="ECO:0007669"/>
    <property type="project" value="Ensembl"/>
</dbReference>
<dbReference type="GO" id="GO:0043030">
    <property type="term" value="P:regulation of macrophage activation"/>
    <property type="evidence" value="ECO:0007669"/>
    <property type="project" value="Ensembl"/>
</dbReference>
<dbReference type="GO" id="GO:0070507">
    <property type="term" value="P:regulation of microtubule cytoskeleton organization"/>
    <property type="evidence" value="ECO:0000250"/>
    <property type="project" value="BHF-UCL"/>
</dbReference>
<dbReference type="GO" id="GO:0051621">
    <property type="term" value="P:regulation of norepinephrine uptake"/>
    <property type="evidence" value="ECO:0000316"/>
    <property type="project" value="ARUK-UCL"/>
</dbReference>
<dbReference type="GO" id="GO:1905606">
    <property type="term" value="P:regulation of presynapse assembly"/>
    <property type="evidence" value="ECO:0000316"/>
    <property type="project" value="ARUK-UCL"/>
</dbReference>
<dbReference type="GO" id="GO:1903426">
    <property type="term" value="P:regulation of reactive oxygen species biosynthetic process"/>
    <property type="evidence" value="ECO:0000304"/>
    <property type="project" value="ParkinsonsUK-UCL"/>
</dbReference>
<dbReference type="GO" id="GO:1903421">
    <property type="term" value="P:regulation of synaptic vesicle recycling"/>
    <property type="evidence" value="ECO:0000304"/>
    <property type="project" value="ParkinsonsUK-UCL"/>
</dbReference>
<dbReference type="GO" id="GO:1904307">
    <property type="term" value="P:response to desipramine"/>
    <property type="evidence" value="ECO:0007669"/>
    <property type="project" value="Ensembl"/>
</dbReference>
<dbReference type="GO" id="GO:0070555">
    <property type="term" value="P:response to interleukin-1"/>
    <property type="evidence" value="ECO:0000314"/>
    <property type="project" value="UniProtKB"/>
</dbReference>
<dbReference type="GO" id="GO:0010040">
    <property type="term" value="P:response to iron(II) ion"/>
    <property type="evidence" value="ECO:0000314"/>
    <property type="project" value="UniProtKB"/>
</dbReference>
<dbReference type="GO" id="GO:0032496">
    <property type="term" value="P:response to lipopolysaccharide"/>
    <property type="evidence" value="ECO:0000314"/>
    <property type="project" value="UniProtKB"/>
</dbReference>
<dbReference type="GO" id="GO:0032026">
    <property type="term" value="P:response to magnesium ion"/>
    <property type="evidence" value="ECO:0000314"/>
    <property type="project" value="UniProtKB"/>
</dbReference>
<dbReference type="GO" id="GO:0034341">
    <property type="term" value="P:response to type II interferon"/>
    <property type="evidence" value="ECO:0000314"/>
    <property type="project" value="UniProtKB"/>
</dbReference>
<dbReference type="GO" id="GO:0009410">
    <property type="term" value="P:response to xenobiotic stimulus"/>
    <property type="evidence" value="ECO:0007669"/>
    <property type="project" value="Ensembl"/>
</dbReference>
<dbReference type="GO" id="GO:0035493">
    <property type="term" value="P:SNARE complex assembly"/>
    <property type="evidence" value="ECO:0000314"/>
    <property type="project" value="UniProtKB"/>
</dbReference>
<dbReference type="GO" id="GO:0097435">
    <property type="term" value="P:supramolecular fiber organization"/>
    <property type="evidence" value="ECO:0000304"/>
    <property type="project" value="UniProtKB"/>
</dbReference>
<dbReference type="GO" id="GO:0050808">
    <property type="term" value="P:synapse organization"/>
    <property type="evidence" value="ECO:0000318"/>
    <property type="project" value="GO_Central"/>
</dbReference>
<dbReference type="GO" id="GO:0048488">
    <property type="term" value="P:synaptic vesicle endocytosis"/>
    <property type="evidence" value="ECO:0000250"/>
    <property type="project" value="UniProtKB"/>
</dbReference>
<dbReference type="GO" id="GO:0016079">
    <property type="term" value="P:synaptic vesicle exocytosis"/>
    <property type="evidence" value="ECO:0000314"/>
    <property type="project" value="UniProtKB"/>
</dbReference>
<dbReference type="GO" id="GO:0016082">
    <property type="term" value="P:synaptic vesicle priming"/>
    <property type="evidence" value="ECO:0000315"/>
    <property type="project" value="UniProtKB"/>
</dbReference>
<dbReference type="GO" id="GO:0048489">
    <property type="term" value="P:synaptic vesicle transport"/>
    <property type="evidence" value="ECO:0007669"/>
    <property type="project" value="Ensembl"/>
</dbReference>
<dbReference type="DisProt" id="DP00070"/>
<dbReference type="FunFam" id="1.10.287.700:FF:000001">
    <property type="entry name" value="Alpha-synuclein"/>
    <property type="match status" value="1"/>
</dbReference>
<dbReference type="Gene3D" id="1.10.287.700">
    <property type="entry name" value="Helix hairpin bin"/>
    <property type="match status" value="1"/>
</dbReference>
<dbReference type="IDEAL" id="IID00302"/>
<dbReference type="InterPro" id="IPR001058">
    <property type="entry name" value="Synuclein"/>
</dbReference>
<dbReference type="InterPro" id="IPR002460">
    <property type="entry name" value="Synuclein_alpha"/>
</dbReference>
<dbReference type="PANTHER" id="PTHR13820:SF5">
    <property type="entry name" value="ALPHA-SYNUCLEIN"/>
    <property type="match status" value="1"/>
</dbReference>
<dbReference type="PANTHER" id="PTHR13820">
    <property type="entry name" value="SYNUCLEIN"/>
    <property type="match status" value="1"/>
</dbReference>
<dbReference type="Pfam" id="PF01387">
    <property type="entry name" value="Synuclein"/>
    <property type="match status" value="1"/>
</dbReference>
<dbReference type="PRINTS" id="PR01212">
    <property type="entry name" value="ASYNUCLEIN"/>
</dbReference>
<dbReference type="PRINTS" id="PR01211">
    <property type="entry name" value="SYNUCLEIN"/>
</dbReference>
<dbReference type="SUPFAM" id="SSF118375">
    <property type="entry name" value="Synuclein"/>
    <property type="match status" value="1"/>
</dbReference>
<proteinExistence type="evidence at protein level"/>